<feature type="initiator methionine" description="Removed" evidence="77 78 79">
    <location>
        <position position="1"/>
    </location>
</feature>
<feature type="chain" id="PRO_0000056399" description="TNF receptor-associated factor 2">
    <location>
        <begin position="2"/>
        <end position="501"/>
    </location>
</feature>
<feature type="domain" description="MATH" evidence="3">
    <location>
        <begin position="351"/>
        <end position="496"/>
    </location>
</feature>
<feature type="zinc finger region" description="RING-type" evidence="4">
    <location>
        <begin position="34"/>
        <end position="73"/>
    </location>
</feature>
<feature type="zinc finger region" description="TRAF-type 1" evidence="5">
    <location>
        <begin position="124"/>
        <end position="180"/>
    </location>
</feature>
<feature type="zinc finger region" description="TRAF-type 2" evidence="5">
    <location>
        <begin position="177"/>
        <end position="233"/>
    </location>
</feature>
<feature type="region of interest" description="Important for interaction with BIRC2 and BIRC3" evidence="1">
    <location>
        <begin position="283"/>
        <end position="293"/>
    </location>
</feature>
<feature type="coiled-coil region" evidence="40">
    <location>
        <begin position="299"/>
        <end position="348"/>
    </location>
</feature>
<feature type="modified residue" description="N-acetylalanine" evidence="77 78 79">
    <location>
        <position position="2"/>
    </location>
</feature>
<feature type="modified residue" description="Phosphoserine" evidence="80">
    <location>
        <position position="5"/>
    </location>
</feature>
<feature type="modified residue" description="Phosphothreonine" evidence="79 80">
    <location>
        <position position="7"/>
    </location>
</feature>
<feature type="modified residue" description="Phosphoserine" evidence="31 79 80">
    <location>
        <position position="11"/>
    </location>
</feature>
<feature type="modified residue" description="Phosphothreonine" evidence="79">
    <location>
        <position position="22"/>
    </location>
</feature>
<feature type="modified residue" description="Phosphothreonine; by PKC" evidence="32">
    <location>
        <position position="117"/>
    </location>
</feature>
<feature type="cross-link" description="Glycyl lysine isopeptide (Lys-Gly) (interchain with G-Cter in ubiquitin)" evidence="32">
    <location>
        <position position="31"/>
    </location>
</feature>
<feature type="cross-link" description="Glycyl lysine isopeptide (Lys-Gly) (interchain with G-Cter in ubiquitin)" evidence="2">
    <location>
        <position position="320"/>
    </location>
</feature>
<feature type="splice variant" id="VSP_039687" description="In isoform 3." evidence="70">
    <location>
        <begin position="53"/>
        <end position="63"/>
    </location>
</feature>
<feature type="splice variant" id="VSP_007401" description="In isoform 2." evidence="70">
    <original>E</original>
    <variation>EVKMPACGMVTEAPAVGSRPRSPSSYDLVLHVPLTGAEACLMSVEEETELLLR</variation>
    <location>
        <position position="122"/>
    </location>
</feature>
<feature type="splice variant" id="VSP_039688" description="In isoform 4." evidence="71">
    <location>
        <begin position="176"/>
        <end position="200"/>
    </location>
</feature>
<feature type="mutagenesis site" description="Reduces global phosphorylation. Partial reduction of TNF-dependent activation of NF-kappa-B and activation of JNK." evidence="31">
    <original>S</original>
    <variation>A</variation>
    <location>
        <position position="11"/>
    </location>
</feature>
<feature type="mutagenesis site" description="Slight increase of TNF-dependent activation of NF-kappa-B and activation of JNK." evidence="31">
    <original>S</original>
    <variation>D</variation>
    <location>
        <position position="11"/>
    </location>
</feature>
<feature type="mutagenesis site" description="Abolishes 'Lys-63'-linked polyubiquitination.">
    <original>K</original>
    <variation>R</variation>
    <location>
        <position position="31"/>
    </location>
</feature>
<feature type="mutagenesis site" description="Loss of phosphorylation site. Abolishes activation of NF-kappa-B." evidence="32">
    <original>T</original>
    <variation>A</variation>
    <location>
        <position position="117"/>
    </location>
</feature>
<feature type="mutagenesis site" description="Strongly reduced interaction with BIRC3." evidence="40">
    <original>I</original>
    <variation>A</variation>
    <location>
        <position position="285"/>
    </location>
</feature>
<feature type="mutagenesis site" description="Strongly reduced interaction with BIRC3." evidence="40">
    <original>V</original>
    <variation>A</variation>
    <location>
        <position position="288"/>
    </location>
</feature>
<feature type="mutagenesis site" description="Strongly reduced interaction with BIRC3." evidence="40">
    <original>E</original>
    <variation>A</variation>
    <location>
        <position position="292"/>
    </location>
</feature>
<feature type="sequence conflict" description="In Ref. 2; BAB70792." evidence="73" ref="2">
    <location>
        <begin position="205"/>
        <end position="310"/>
    </location>
</feature>
<feature type="sequence conflict" description="In Ref. 1; AAA87706." evidence="73" ref="1">
    <original>LEMEASTYDGVFIWKISDFARKR</original>
    <variation>RPFQAQCGHRYCSFCLASILRKL</variation>
    <location>
        <begin position="343"/>
        <end position="365"/>
    </location>
</feature>
<feature type="helix" evidence="83">
    <location>
        <begin position="21"/>
        <end position="23"/>
    </location>
</feature>
<feature type="helix" evidence="83">
    <location>
        <begin position="25"/>
        <end position="27"/>
    </location>
</feature>
<feature type="helix" evidence="83">
    <location>
        <begin position="30"/>
        <end position="32"/>
    </location>
</feature>
<feature type="turn" evidence="83">
    <location>
        <begin position="35"/>
        <end position="37"/>
    </location>
</feature>
<feature type="strand" evidence="83">
    <location>
        <begin position="42"/>
        <end position="46"/>
    </location>
</feature>
<feature type="strand" evidence="83">
    <location>
        <begin position="52"/>
        <end position="54"/>
    </location>
</feature>
<feature type="helix" evidence="83">
    <location>
        <begin position="55"/>
        <end position="61"/>
    </location>
</feature>
<feature type="helix" evidence="83">
    <location>
        <begin position="62"/>
        <end position="64"/>
    </location>
</feature>
<feature type="helix" evidence="83">
    <location>
        <begin position="70"/>
        <end position="74"/>
    </location>
</feature>
<feature type="turn" evidence="83">
    <location>
        <begin position="80"/>
        <end position="83"/>
    </location>
</feature>
<feature type="helix" evidence="83">
    <location>
        <begin position="87"/>
        <end position="89"/>
    </location>
</feature>
<feature type="helix" evidence="83">
    <location>
        <begin position="94"/>
        <end position="101"/>
    </location>
</feature>
<feature type="strand" evidence="83">
    <location>
        <begin position="103"/>
        <end position="106"/>
    </location>
</feature>
<feature type="strand" evidence="83">
    <location>
        <begin position="115"/>
        <end position="117"/>
    </location>
</feature>
<feature type="helix" evidence="83">
    <location>
        <begin position="118"/>
        <end position="124"/>
    </location>
</feature>
<feature type="turn" evidence="83">
    <location>
        <begin position="125"/>
        <end position="127"/>
    </location>
</feature>
<feature type="helix" evidence="83">
    <location>
        <begin position="130"/>
        <end position="133"/>
    </location>
</feature>
<feature type="helix" evidence="81">
    <location>
        <begin position="315"/>
        <end position="318"/>
    </location>
</feature>
<feature type="helix" evidence="84">
    <location>
        <begin position="335"/>
        <end position="347"/>
    </location>
</feature>
<feature type="strand" evidence="84">
    <location>
        <begin position="350"/>
        <end position="360"/>
    </location>
</feature>
<feature type="helix" evidence="84">
    <location>
        <begin position="361"/>
        <end position="369"/>
    </location>
</feature>
<feature type="strand" evidence="82">
    <location>
        <begin position="375"/>
        <end position="377"/>
    </location>
</feature>
<feature type="strand" evidence="84">
    <location>
        <begin position="381"/>
        <end position="384"/>
    </location>
</feature>
<feature type="strand" evidence="84">
    <location>
        <begin position="389"/>
        <end position="395"/>
    </location>
</feature>
<feature type="helix" evidence="84">
    <location>
        <begin position="400"/>
        <end position="402"/>
    </location>
</feature>
<feature type="turn" evidence="84">
    <location>
        <begin position="403"/>
        <end position="405"/>
    </location>
</feature>
<feature type="strand" evidence="84">
    <location>
        <begin position="406"/>
        <end position="414"/>
    </location>
</feature>
<feature type="helix" evidence="84">
    <location>
        <begin position="419"/>
        <end position="421"/>
    </location>
</feature>
<feature type="strand" evidence="84">
    <location>
        <begin position="430"/>
        <end position="434"/>
    </location>
</feature>
<feature type="strand" evidence="84">
    <location>
        <begin position="443"/>
        <end position="447"/>
    </location>
</feature>
<feature type="helix" evidence="84">
    <location>
        <begin position="454"/>
        <end position="456"/>
    </location>
</feature>
<feature type="strand" evidence="84">
    <location>
        <begin position="460"/>
        <end position="463"/>
    </location>
</feature>
<feature type="strand" evidence="84">
    <location>
        <begin position="467"/>
        <end position="474"/>
    </location>
</feature>
<feature type="helix" evidence="84">
    <location>
        <begin position="475"/>
        <end position="479"/>
    </location>
</feature>
<feature type="strand" evidence="84">
    <location>
        <begin position="483"/>
        <end position="486"/>
    </location>
</feature>
<feature type="strand" evidence="84">
    <location>
        <begin position="489"/>
        <end position="496"/>
    </location>
</feature>
<reference key="1">
    <citation type="journal article" date="1995" name="Biochem. J.">
        <title>Association of a RING finger protein with the cytoplasmic domain of the human type-2 tumour necrosis factor receptor.</title>
        <authorList>
            <person name="Song H.Y."/>
            <person name="Donner D.B."/>
        </authorList>
    </citation>
    <scope>NUCLEOTIDE SEQUENCE [MRNA] (ISOFORM 1)</scope>
    <scope>INTERACTION WITH TNFRSF1B/TNFR2</scope>
</reference>
<reference key="2">
    <citation type="journal article" date="2004" name="Nat. Genet.">
        <title>Complete sequencing and characterization of 21,243 full-length human cDNAs.</title>
        <authorList>
            <person name="Ota T."/>
            <person name="Suzuki Y."/>
            <person name="Nishikawa T."/>
            <person name="Otsuki T."/>
            <person name="Sugiyama T."/>
            <person name="Irie R."/>
            <person name="Wakamatsu A."/>
            <person name="Hayashi K."/>
            <person name="Sato H."/>
            <person name="Nagai K."/>
            <person name="Kimura K."/>
            <person name="Makita H."/>
            <person name="Sekine M."/>
            <person name="Obayashi M."/>
            <person name="Nishi T."/>
            <person name="Shibahara T."/>
            <person name="Tanaka T."/>
            <person name="Ishii S."/>
            <person name="Yamamoto J."/>
            <person name="Saito K."/>
            <person name="Kawai Y."/>
            <person name="Isono Y."/>
            <person name="Nakamura Y."/>
            <person name="Nagahari K."/>
            <person name="Murakami K."/>
            <person name="Yasuda T."/>
            <person name="Iwayanagi T."/>
            <person name="Wagatsuma M."/>
            <person name="Shiratori A."/>
            <person name="Sudo H."/>
            <person name="Hosoiri T."/>
            <person name="Kaku Y."/>
            <person name="Kodaira H."/>
            <person name="Kondo H."/>
            <person name="Sugawara M."/>
            <person name="Takahashi M."/>
            <person name="Kanda K."/>
            <person name="Yokoi T."/>
            <person name="Furuya T."/>
            <person name="Kikkawa E."/>
            <person name="Omura Y."/>
            <person name="Abe K."/>
            <person name="Kamihara K."/>
            <person name="Katsuta N."/>
            <person name="Sato K."/>
            <person name="Tanikawa M."/>
            <person name="Yamazaki M."/>
            <person name="Ninomiya K."/>
            <person name="Ishibashi T."/>
            <person name="Yamashita H."/>
            <person name="Murakawa K."/>
            <person name="Fujimori K."/>
            <person name="Tanai H."/>
            <person name="Kimata M."/>
            <person name="Watanabe M."/>
            <person name="Hiraoka S."/>
            <person name="Chiba Y."/>
            <person name="Ishida S."/>
            <person name="Ono Y."/>
            <person name="Takiguchi S."/>
            <person name="Watanabe S."/>
            <person name="Yosida M."/>
            <person name="Hotuta T."/>
            <person name="Kusano J."/>
            <person name="Kanehori K."/>
            <person name="Takahashi-Fujii A."/>
            <person name="Hara H."/>
            <person name="Tanase T.-O."/>
            <person name="Nomura Y."/>
            <person name="Togiya S."/>
            <person name="Komai F."/>
            <person name="Hara R."/>
            <person name="Takeuchi K."/>
            <person name="Arita M."/>
            <person name="Imose N."/>
            <person name="Musashino K."/>
            <person name="Yuuki H."/>
            <person name="Oshima A."/>
            <person name="Sasaki N."/>
            <person name="Aotsuka S."/>
            <person name="Yoshikawa Y."/>
            <person name="Matsunawa H."/>
            <person name="Ichihara T."/>
            <person name="Shiohata N."/>
            <person name="Sano S."/>
            <person name="Moriya S."/>
            <person name="Momiyama H."/>
            <person name="Satoh N."/>
            <person name="Takami S."/>
            <person name="Terashima Y."/>
            <person name="Suzuki O."/>
            <person name="Nakagawa S."/>
            <person name="Senoh A."/>
            <person name="Mizoguchi H."/>
            <person name="Goto Y."/>
            <person name="Shimizu F."/>
            <person name="Wakebe H."/>
            <person name="Hishigaki H."/>
            <person name="Watanabe T."/>
            <person name="Sugiyama A."/>
            <person name="Takemoto M."/>
            <person name="Kawakami B."/>
            <person name="Yamazaki M."/>
            <person name="Watanabe K."/>
            <person name="Kumagai A."/>
            <person name="Itakura S."/>
            <person name="Fukuzumi Y."/>
            <person name="Fujimori Y."/>
            <person name="Komiyama M."/>
            <person name="Tashiro H."/>
            <person name="Tanigami A."/>
            <person name="Fujiwara T."/>
            <person name="Ono T."/>
            <person name="Yamada K."/>
            <person name="Fujii Y."/>
            <person name="Ozaki K."/>
            <person name="Hirao M."/>
            <person name="Ohmori Y."/>
            <person name="Kawabata A."/>
            <person name="Hikiji T."/>
            <person name="Kobatake N."/>
            <person name="Inagaki H."/>
            <person name="Ikema Y."/>
            <person name="Okamoto S."/>
            <person name="Okitani R."/>
            <person name="Kawakami T."/>
            <person name="Noguchi S."/>
            <person name="Itoh T."/>
            <person name="Shigeta K."/>
            <person name="Senba T."/>
            <person name="Matsumura K."/>
            <person name="Nakajima Y."/>
            <person name="Mizuno T."/>
            <person name="Morinaga M."/>
            <person name="Sasaki M."/>
            <person name="Togashi T."/>
            <person name="Oyama M."/>
            <person name="Hata H."/>
            <person name="Watanabe M."/>
            <person name="Komatsu T."/>
            <person name="Mizushima-Sugano J."/>
            <person name="Satoh T."/>
            <person name="Shirai Y."/>
            <person name="Takahashi Y."/>
            <person name="Nakagawa K."/>
            <person name="Okumura K."/>
            <person name="Nagase T."/>
            <person name="Nomura N."/>
            <person name="Kikuchi H."/>
            <person name="Masuho Y."/>
            <person name="Yamashita R."/>
            <person name="Nakai K."/>
            <person name="Yada T."/>
            <person name="Nakamura Y."/>
            <person name="Ohara O."/>
            <person name="Isogai T."/>
            <person name="Sugano S."/>
        </authorList>
    </citation>
    <scope>NUCLEOTIDE SEQUENCE [LARGE SCALE MRNA] (ISOFORMS 1; 2 AND 3)</scope>
    <source>
        <tissue>Brain</tissue>
        <tissue>Cerebellum</tissue>
        <tissue>Kidney</tissue>
    </source>
</reference>
<reference key="3">
    <citation type="journal article" date="2007" name="BMC Genomics">
        <title>The full-ORF clone resource of the German cDNA consortium.</title>
        <authorList>
            <person name="Bechtel S."/>
            <person name="Rosenfelder H."/>
            <person name="Duda A."/>
            <person name="Schmidt C.P."/>
            <person name="Ernst U."/>
            <person name="Wellenreuther R."/>
            <person name="Mehrle A."/>
            <person name="Schuster C."/>
            <person name="Bahr A."/>
            <person name="Bloecker H."/>
            <person name="Heubner D."/>
            <person name="Hoerlein A."/>
            <person name="Michel G."/>
            <person name="Wedler H."/>
            <person name="Koehrer K."/>
            <person name="Ottenwaelder B."/>
            <person name="Poustka A."/>
            <person name="Wiemann S."/>
            <person name="Schupp I."/>
        </authorList>
    </citation>
    <scope>NUCLEOTIDE SEQUENCE [LARGE SCALE MRNA] (ISOFORM 4)</scope>
    <source>
        <tissue>Endometrium</tissue>
    </source>
</reference>
<reference key="4">
    <citation type="submission" date="2004-05" db="EMBL/GenBank/DDBJ databases">
        <authorList>
            <consortium name="SeattleSNPs variation discovery resource"/>
        </authorList>
    </citation>
    <scope>NUCLEOTIDE SEQUENCE [GENOMIC DNA]</scope>
</reference>
<reference key="5">
    <citation type="journal article" date="2004" name="Nature">
        <title>DNA sequence and analysis of human chromosome 9.</title>
        <authorList>
            <person name="Humphray S.J."/>
            <person name="Oliver K."/>
            <person name="Hunt A.R."/>
            <person name="Plumb R.W."/>
            <person name="Loveland J.E."/>
            <person name="Howe K.L."/>
            <person name="Andrews T.D."/>
            <person name="Searle S."/>
            <person name="Hunt S.E."/>
            <person name="Scott C.E."/>
            <person name="Jones M.C."/>
            <person name="Ainscough R."/>
            <person name="Almeida J.P."/>
            <person name="Ambrose K.D."/>
            <person name="Ashwell R.I.S."/>
            <person name="Babbage A.K."/>
            <person name="Babbage S."/>
            <person name="Bagguley C.L."/>
            <person name="Bailey J."/>
            <person name="Banerjee R."/>
            <person name="Barker D.J."/>
            <person name="Barlow K.F."/>
            <person name="Bates K."/>
            <person name="Beasley H."/>
            <person name="Beasley O."/>
            <person name="Bird C.P."/>
            <person name="Bray-Allen S."/>
            <person name="Brown A.J."/>
            <person name="Brown J.Y."/>
            <person name="Burford D."/>
            <person name="Burrill W."/>
            <person name="Burton J."/>
            <person name="Carder C."/>
            <person name="Carter N.P."/>
            <person name="Chapman J.C."/>
            <person name="Chen Y."/>
            <person name="Clarke G."/>
            <person name="Clark S.Y."/>
            <person name="Clee C.M."/>
            <person name="Clegg S."/>
            <person name="Collier R.E."/>
            <person name="Corby N."/>
            <person name="Crosier M."/>
            <person name="Cummings A.T."/>
            <person name="Davies J."/>
            <person name="Dhami P."/>
            <person name="Dunn M."/>
            <person name="Dutta I."/>
            <person name="Dyer L.W."/>
            <person name="Earthrowl M.E."/>
            <person name="Faulkner L."/>
            <person name="Fleming C.J."/>
            <person name="Frankish A."/>
            <person name="Frankland J.A."/>
            <person name="French L."/>
            <person name="Fricker D.G."/>
            <person name="Garner P."/>
            <person name="Garnett J."/>
            <person name="Ghori J."/>
            <person name="Gilbert J.G.R."/>
            <person name="Glison C."/>
            <person name="Grafham D.V."/>
            <person name="Gribble S."/>
            <person name="Griffiths C."/>
            <person name="Griffiths-Jones S."/>
            <person name="Grocock R."/>
            <person name="Guy J."/>
            <person name="Hall R.E."/>
            <person name="Hammond S."/>
            <person name="Harley J.L."/>
            <person name="Harrison E.S.I."/>
            <person name="Hart E.A."/>
            <person name="Heath P.D."/>
            <person name="Henderson C.D."/>
            <person name="Hopkins B.L."/>
            <person name="Howard P.J."/>
            <person name="Howden P.J."/>
            <person name="Huckle E."/>
            <person name="Johnson C."/>
            <person name="Johnson D."/>
            <person name="Joy A.A."/>
            <person name="Kay M."/>
            <person name="Keenan S."/>
            <person name="Kershaw J.K."/>
            <person name="Kimberley A.M."/>
            <person name="King A."/>
            <person name="Knights A."/>
            <person name="Laird G.K."/>
            <person name="Langford C."/>
            <person name="Lawlor S."/>
            <person name="Leongamornlert D.A."/>
            <person name="Leversha M."/>
            <person name="Lloyd C."/>
            <person name="Lloyd D.M."/>
            <person name="Lovell J."/>
            <person name="Martin S."/>
            <person name="Mashreghi-Mohammadi M."/>
            <person name="Matthews L."/>
            <person name="McLaren S."/>
            <person name="McLay K.E."/>
            <person name="McMurray A."/>
            <person name="Milne S."/>
            <person name="Nickerson T."/>
            <person name="Nisbett J."/>
            <person name="Nordsiek G."/>
            <person name="Pearce A.V."/>
            <person name="Peck A.I."/>
            <person name="Porter K.M."/>
            <person name="Pandian R."/>
            <person name="Pelan S."/>
            <person name="Phillimore B."/>
            <person name="Povey S."/>
            <person name="Ramsey Y."/>
            <person name="Rand V."/>
            <person name="Scharfe M."/>
            <person name="Sehra H.K."/>
            <person name="Shownkeen R."/>
            <person name="Sims S.K."/>
            <person name="Skuce C.D."/>
            <person name="Smith M."/>
            <person name="Steward C.A."/>
            <person name="Swarbreck D."/>
            <person name="Sycamore N."/>
            <person name="Tester J."/>
            <person name="Thorpe A."/>
            <person name="Tracey A."/>
            <person name="Tromans A."/>
            <person name="Thomas D.W."/>
            <person name="Wall M."/>
            <person name="Wallis J.M."/>
            <person name="West A.P."/>
            <person name="Whitehead S.L."/>
            <person name="Willey D.L."/>
            <person name="Williams S.A."/>
            <person name="Wilming L."/>
            <person name="Wray P.W."/>
            <person name="Young L."/>
            <person name="Ashurst J.L."/>
            <person name="Coulson A."/>
            <person name="Blocker H."/>
            <person name="Durbin R.M."/>
            <person name="Sulston J.E."/>
            <person name="Hubbard T."/>
            <person name="Jackson M.J."/>
            <person name="Bentley D.R."/>
            <person name="Beck S."/>
            <person name="Rogers J."/>
            <person name="Dunham I."/>
        </authorList>
    </citation>
    <scope>NUCLEOTIDE SEQUENCE [LARGE SCALE GENOMIC DNA]</scope>
</reference>
<reference key="6">
    <citation type="submission" date="2005-07" db="EMBL/GenBank/DDBJ databases">
        <authorList>
            <person name="Mural R.J."/>
            <person name="Istrail S."/>
            <person name="Sutton G.G."/>
            <person name="Florea L."/>
            <person name="Halpern A.L."/>
            <person name="Mobarry C.M."/>
            <person name="Lippert R."/>
            <person name="Walenz B."/>
            <person name="Shatkay H."/>
            <person name="Dew I."/>
            <person name="Miller J.R."/>
            <person name="Flanigan M.J."/>
            <person name="Edwards N.J."/>
            <person name="Bolanos R."/>
            <person name="Fasulo D."/>
            <person name="Halldorsson B.V."/>
            <person name="Hannenhalli S."/>
            <person name="Turner R."/>
            <person name="Yooseph S."/>
            <person name="Lu F."/>
            <person name="Nusskern D.R."/>
            <person name="Shue B.C."/>
            <person name="Zheng X.H."/>
            <person name="Zhong F."/>
            <person name="Delcher A.L."/>
            <person name="Huson D.H."/>
            <person name="Kravitz S.A."/>
            <person name="Mouchard L."/>
            <person name="Reinert K."/>
            <person name="Remington K.A."/>
            <person name="Clark A.G."/>
            <person name="Waterman M.S."/>
            <person name="Eichler E.E."/>
            <person name="Adams M.D."/>
            <person name="Hunkapiller M.W."/>
            <person name="Myers E.W."/>
            <person name="Venter J.C."/>
        </authorList>
    </citation>
    <scope>NUCLEOTIDE SEQUENCE [LARGE SCALE GENOMIC DNA]</scope>
</reference>
<reference key="7">
    <citation type="journal article" date="2004" name="Genome Res.">
        <title>The status, quality, and expansion of the NIH full-length cDNA project: the Mammalian Gene Collection (MGC).</title>
        <authorList>
            <consortium name="The MGC Project Team"/>
        </authorList>
    </citation>
    <scope>NUCLEOTIDE SEQUENCE [LARGE SCALE MRNA] (ISOFORM 1)</scope>
    <source>
        <tissue>Colon</tissue>
        <tissue>Fetal brain</tissue>
        <tissue>Kidney</tissue>
        <tissue>Leukocyte</tissue>
        <tissue>Stomach</tissue>
        <tissue>Uterus</tissue>
    </source>
</reference>
<reference key="8">
    <citation type="journal article" date="1994" name="Cell">
        <title>A novel family of putative signal transducers associated with the cytoplasmic domain of the 75 kDa tumor necrosis factor receptor.</title>
        <authorList>
            <person name="Rothe M."/>
            <person name="Wong S.C."/>
            <person name="Henzel W.J."/>
            <person name="Goeddel D.V."/>
        </authorList>
    </citation>
    <scope>NUCLEOTIDE SEQUENCE [MRNA] OF 201-501</scope>
    <scope>INTERACTION WITH TRAF1 AND TNFRSF1B</scope>
</reference>
<reference key="9">
    <citation type="journal article" date="1996" name="J. Exp. Med.">
        <title>T cell receptor-dependent cell death of T cell hybridomas mediated by the CD30 cytoplasmic domain in association with tumor necrosis factor receptor-associated factors.</title>
        <authorList>
            <person name="Lee S.Y."/>
            <person name="Park C.G."/>
            <person name="Choi Y."/>
        </authorList>
    </citation>
    <scope>INTERACTION WITH TNFRSF8</scope>
</reference>
<reference key="10">
    <citation type="journal article" date="1996" name="Proc. Natl. Acad. Sci. U.S.A.">
        <title>I-TRAF is a novel TRAF-interacting protein that regulates TRAF-mediated signal transduction.</title>
        <authorList>
            <person name="Rothe M."/>
            <person name="Xiong J."/>
            <person name="Shu H.-B."/>
            <person name="Williamson K."/>
            <person name="Goddard A."/>
            <person name="Goeddel D.V."/>
        </authorList>
    </citation>
    <scope>INTERACTION WITH TANK</scope>
</reference>
<reference key="11">
    <citation type="journal article" date="1997" name="J. Biol. Chem.">
        <title>ATAR, a novel tumor necrosis factor receptor family member, signals through TRAF2 and TRAF5.</title>
        <authorList>
            <person name="Hsu H."/>
            <person name="Solovyev I."/>
            <person name="Colombero A."/>
            <person name="Elliott R."/>
            <person name="Kelley M."/>
            <person name="Boyle W.J."/>
        </authorList>
    </citation>
    <scope>INTERACTION WITH TNFRSF14</scope>
</reference>
<reference key="12">
    <citation type="journal article" date="1997" name="J. Exp. Med.">
        <title>TRAF-interacting protein (TRIP): a novel component of the tumor necrosis factor receptor (TNFR)- and CD30-TRAF signaling complexes that inhibits TRAF2-mediated NF-kappaB activation.</title>
        <authorList>
            <person name="Lee S.Y."/>
            <person name="Lee S.Y."/>
            <person name="Choi Y."/>
        </authorList>
    </citation>
    <scope>IDENTIFICATION IN A COMPLEX WITH TNFRSF8; TNFRSF1B</scope>
    <scope>TRAF1 AND TRAIP</scope>
    <scope>INTERACTION WITH TRAIP</scope>
</reference>
<reference key="13">
    <citation type="journal article" date="1997" name="Nature">
        <title>MAP3K-related kinase involved in NF-kappaB induction by TNF, CD95 and IL-1.</title>
        <authorList>
            <person name="Malinin N.L."/>
            <person name="Boldin M.P."/>
            <person name="Kovalenko A.V."/>
            <person name="Wallach D."/>
        </authorList>
    </citation>
    <scope>INTERACTION WITH MAP3K14</scope>
</reference>
<reference key="14">
    <citation type="journal article" date="1998" name="Biochemistry">
        <title>CD40-tumor necrosis factor receptor-associated factor (TRAF) interactions: regulation of CD40 signaling through multiple TRAF binding sites and TRAF hetero-oligomerization.</title>
        <authorList>
            <person name="Pullen S.S."/>
            <person name="Miller H.G."/>
            <person name="Everdeen D.S."/>
            <person name="Dang T.T."/>
            <person name="Crute J.J."/>
            <person name="Kehry M.R."/>
        </authorList>
    </citation>
    <scope>INTERACTION WITH TNFRSF5</scope>
</reference>
<reference key="15">
    <citation type="journal article" date="1998" name="Curr. Biol.">
        <title>Identification of CARDIAK, a RIP-like kinase that associates with caspase-1.</title>
        <authorList>
            <person name="Thome M."/>
            <person name="Hofmann K."/>
            <person name="Burns K."/>
            <person name="Martinon F."/>
            <person name="Bodmer J.-L."/>
            <person name="Mattmann C."/>
            <person name="Tschopp J."/>
        </authorList>
    </citation>
    <scope>INTERACTION WITH RIPK2</scope>
</reference>
<reference key="16">
    <citation type="journal article" date="1998" name="Eur. J. Immunol.">
        <title>The TNF receptor family member CD27 signals to Jun N-terminal kinase via Traf-2.</title>
        <authorList>
            <person name="Gravestein L.A."/>
            <person name="Amsen D."/>
            <person name="Boes M."/>
            <person name="Calvo C.R."/>
            <person name="Kruisbeek A.M."/>
            <person name="Borst J."/>
        </authorList>
    </citation>
    <scope>INTERACTION WITH CD27</scope>
</reference>
<reference key="17">
    <citation type="journal article" date="1998" name="J. Biol. Chem.">
        <title>Activation of OX40 signal transduction pathways leads to tumor necrosis factor receptor-associated factor (TRAF) 2- and TRAF5-mediated NF-kappaB activation.</title>
        <authorList>
            <person name="Kawamata S."/>
            <person name="Hori T."/>
            <person name="Imura A."/>
            <person name="Takaori-Kondo A."/>
            <person name="Uchiyama T."/>
        </authorList>
    </citation>
    <scope>INTERACTION WITH TNFRSF4</scope>
</reference>
<reference key="18">
    <citation type="journal article" date="1998" name="J. Biol. Chem.">
        <title>The TRAF family of signal transducers mediates NF-kappaB activation by the TRANCE receptor.</title>
        <authorList>
            <person name="Wong B.R."/>
            <person name="Josien R."/>
            <person name="Lee S.Y."/>
            <person name="Vologodskaia M."/>
            <person name="Steinman R.M."/>
            <person name="Choi Y."/>
        </authorList>
    </citation>
    <scope>INTERACTION WITH TNFRSF11A</scope>
</reference>
<reference key="19">
    <citation type="journal article" date="1998" name="J. Cell. Biochem.">
        <title>Binding of CDK9 to TRAF2.</title>
        <authorList>
            <person name="MacLachlan T.K."/>
            <person name="Sang N."/>
            <person name="De Luca A."/>
            <person name="Puri P.L."/>
            <person name="Levrero M."/>
            <person name="Giordano A."/>
        </authorList>
    </citation>
    <scope>INTERACTION WITH CDK9</scope>
</reference>
<reference key="20">
    <citation type="journal article" date="1998" name="J. Exp. Med.">
        <title>CD28-independent, TRAF2-dependent costimulation of resting T cells by 4-1BB ligand.</title>
        <authorList>
            <person name="Saoulli K."/>
            <person name="Lee S.Y."/>
            <person name="Cannons J.L."/>
            <person name="Yeh W.C."/>
            <person name="Santana A."/>
            <person name="Goldstein M.D."/>
            <person name="Bangia N."/>
            <person name="DeBenedette M.A."/>
            <person name="Mak T.W."/>
            <person name="Choi Y."/>
            <person name="Watts T.H."/>
        </authorList>
    </citation>
    <scope>INTERACTION WITH TNFRSF9</scope>
</reference>
<reference key="21">
    <citation type="journal article" date="1998" name="Mol. Cell">
        <title>ASK1 is essential for JNK/SAPK activation by TRAF2.</title>
        <authorList>
            <person name="Nishitoh H."/>
            <person name="Saitoh M."/>
            <person name="Mochida Y."/>
            <person name="Takeda K."/>
            <person name="Nakano H."/>
            <person name="Rothe M."/>
            <person name="Miyazono K."/>
            <person name="Ichijo H."/>
        </authorList>
    </citation>
    <scope>INTERACTION WITH MAP3K5</scope>
</reference>
<reference key="22">
    <citation type="journal article" date="1998" name="Mol. Cell. Biol.">
        <title>4-1BB and Ox40 are members of a tumor necrosis factor (TNF)-nerve growth factor receptor subfamily that bind TNF receptor-associated factors and activate nuclear factor kappaB.</title>
        <authorList>
            <person name="Arch R.H."/>
            <person name="Thompson C.B."/>
        </authorList>
    </citation>
    <scope>INTERACTION WITH TNFRSF4 AND TNFRSF9</scope>
</reference>
<reference key="23">
    <citation type="journal article" date="1999" name="EMBO J.">
        <title>NF-kB activation by a signaling complex containing TRAF2, TANK, and TBK1, a novel IKK-related kinase.</title>
        <authorList>
            <person name="Pomerantz J.L."/>
            <person name="Baltimore D."/>
        </authorList>
    </citation>
    <scope>IDENTIFICATION IN A COMPLEX WITH TBK1 AND TANK</scope>
    <source>
        <tissue>Spleen</tissue>
    </source>
</reference>
<reference key="24">
    <citation type="journal article" date="1999" name="FASEB J.">
        <title>Death deflected: IL-15 inhibits TNF-alpha-mediated apoptosis in fibroblasts by TRAF2 recruitment to the IL-15Ralpha chain.</title>
        <authorList>
            <person name="Bulfone-Paus S."/>
            <person name="Bulanova E."/>
            <person name="Pohl T."/>
            <person name="Budagian V."/>
            <person name="Duerkop H."/>
            <person name="Rueckert R."/>
            <person name="Kunzendorf U."/>
            <person name="Paus R."/>
            <person name="Krause H."/>
        </authorList>
    </citation>
    <scope>RETRACTED PAPER</scope>
</reference>
<reference key="25">
    <citation type="journal article" date="2011" name="FASEB J.">
        <authorList>
            <person name="Bulfone-Paus S."/>
            <person name="Bulanova E."/>
            <person name="Pohl T."/>
            <person name="Budagian V."/>
            <person name="Duerkop H."/>
            <person name="Rueckert R."/>
            <person name="Kunzendorf U."/>
            <person name="Paus R."/>
            <person name="Krause H."/>
        </authorList>
    </citation>
    <scope>RETRACTION NOTICE OF PUBMED:10463949</scope>
</reference>
<reference key="26">
    <citation type="journal article" date="1999" name="Genes Dev.">
        <title>Signaling by proinflammatory cytokines: oligomerization of TRAF2 and TRAF6 is sufficient for JNK and IKK activation and target gene induction via an amino-terminal effector domain.</title>
        <authorList>
            <person name="Baud V."/>
            <person name="Liu Z.-G."/>
            <person name="Bennett B."/>
            <person name="Suzuki N."/>
            <person name="Xia Y."/>
            <person name="Karin M."/>
        </authorList>
    </citation>
    <scope>INTERACTION WITH MAP3K1</scope>
    <scope>FUNCTION</scope>
</reference>
<reference key="27">
    <citation type="journal article" date="1999" name="J. Biol. Chem.">
        <title>Identification of a novel activation-inducible protein of the tumor necrosis factor receptor superfamily and its ligand.</title>
        <authorList>
            <person name="Kwon B."/>
            <person name="Yu K.-Y."/>
            <person name="Ni J."/>
            <person name="Yu G.-L."/>
            <person name="Jang I.-K."/>
            <person name="Kim Y.-J."/>
            <person name="Xing L."/>
            <person name="Liu D."/>
            <person name="Wang S.-X."/>
            <person name="Kwon B.S."/>
        </authorList>
    </citation>
    <scope>INTERACTION WITH TNFRSF18</scope>
    <source>
        <tissue>T-cell</tissue>
    </source>
</reference>
<reference key="28">
    <citation type="journal article" date="1999" name="J. Biol. Chem.">
        <title>TRAF family proteins interact with the common neurotrophin receptor and modulate apoptosis induction.</title>
        <authorList>
            <person name="Ye X."/>
            <person name="Mehlen P."/>
            <person name="Rabizadeh S."/>
            <person name="VanArsdale T."/>
            <person name="Zhang H."/>
            <person name="Shin H."/>
            <person name="Wang J.J.L."/>
            <person name="Leo E."/>
            <person name="Zapata J.M."/>
            <person name="Hauser C.A."/>
            <person name="Reed J.C."/>
            <person name="Bredesen D.E."/>
        </authorList>
    </citation>
    <scope>INTERACTION WITH TNFRSF16</scope>
</reference>
<reference key="29">
    <citation type="journal article" date="1999" name="J. Biol. Chem.">
        <title>TNIK, a novel member of the germinal center kinase family that activates the c-Jun N-terminal kinase pathway and regulates the cytoskeleton.</title>
        <authorList>
            <person name="Fu C.A."/>
            <person name="Shen M."/>
            <person name="Huang B.C."/>
            <person name="Lasaga J."/>
            <person name="Payan D.G."/>
            <person name="Luo Y."/>
        </authorList>
    </citation>
    <scope>INTERACTION WITH TNIK</scope>
</reference>
<reference key="30">
    <citation type="journal article" date="2000" name="J. Biol. Chem.">
        <title>TAJ, a novel member of the tumor necrosis factor receptor family, activates the c-Jun N-terminal kinase pathway and mediates caspase-independent cell death.</title>
        <authorList>
            <person name="Eby M.T."/>
            <person name="Jasmin A."/>
            <person name="Kumar A."/>
            <person name="Sharma K."/>
            <person name="Chaudhary P.M."/>
        </authorList>
    </citation>
    <scope>INTERACTION WITH TNFRSF19</scope>
</reference>
<reference key="31">
    <citation type="journal article" date="2000" name="J. Biol. Chem.">
        <title>TTRAP, a novel protein that associates with CD40, tumor necrosis factor (TNF) receptor-75 and TNF receptor-associated factors (TRAFs), and that inhibits nuclear factor-kappa B activation.</title>
        <authorList>
            <person name="Pype S."/>
            <person name="Declercq W."/>
            <person name="Ibrahimi A."/>
            <person name="Michiels C."/>
            <person name="Van Rietschoten J.G.I."/>
            <person name="Dewulf N."/>
            <person name="de Boer M."/>
            <person name="Vandenabeele P."/>
            <person name="Huylebroeck D."/>
            <person name="Remacle J.E."/>
        </authorList>
    </citation>
    <scope>INTERACTION WITH TDP2</scope>
</reference>
<reference key="32">
    <citation type="journal article" date="2000" name="J. Exp. Med.">
        <title>TACI is a TRAF-interacting receptor for TALL-1, a tumor necrosis factor family member involved in B cell regulation.</title>
        <authorList>
            <person name="Xia X.-Z."/>
            <person name="Treanor J."/>
            <person name="Senaldi G."/>
            <person name="Khare S.D."/>
            <person name="Boone T."/>
            <person name="Kelley M."/>
            <person name="Theill L.E."/>
            <person name="Colombero A."/>
            <person name="Solovyev I."/>
            <person name="Lee F."/>
            <person name="McCabe S."/>
            <person name="Elliott R."/>
            <person name="Miner K."/>
            <person name="Hawkins N."/>
            <person name="Guo J."/>
            <person name="Stolina M."/>
            <person name="Yu G."/>
            <person name="Wang J."/>
            <person name="Delaney J."/>
            <person name="Meng S.-Y."/>
            <person name="Boyle W.J."/>
            <person name="Hsu H."/>
        </authorList>
    </citation>
    <scope>INTERACTION WITH TNFRSF13B</scope>
</reference>
<reference key="33">
    <citation type="journal article" date="2001" name="J. Biol. Chem.">
        <title>The ectodermal dysplasia receptor activates the nuclear factor-kappaB, JNK, and cell death pathways and binds to ectodysplasin A.</title>
        <authorList>
            <person name="Kumar A."/>
            <person name="Eby M.T."/>
            <person name="Sinha S."/>
            <person name="Jasmin A."/>
            <person name="Chaudhary P.M."/>
        </authorList>
    </citation>
    <scope>INTERACTION WITH EDAR</scope>
</reference>
<reference key="34">
    <citation type="journal article" date="2001" name="J. Biol. Chem.">
        <title>Activation of caspase-12, an endoplastic reticulum (ER) resident caspase, through tumor necrosis factor receptor-associated factor 2-dependent mechanism in response to the ER stress.</title>
        <authorList>
            <person name="Yoneda T."/>
            <person name="Imaizumi K."/>
            <person name="Oono K."/>
            <person name="Yui D."/>
            <person name="Gomi F."/>
            <person name="Katayama T."/>
            <person name="Tohyama M."/>
        </authorList>
    </citation>
    <scope>INTERACTION WITH ERN1 AND TAOK3</scope>
</reference>
<reference key="35">
    <citation type="journal article" date="2002" name="EMBO J.">
        <title>Stress-induced decrease in TRAF2 stability is mediated by Siah2.</title>
        <authorList>
            <person name="Habelhah H."/>
            <person name="Frew I.J."/>
            <person name="Laine A."/>
            <person name="Janes P.W."/>
            <person name="Relaix F."/>
            <person name="Sassoon D."/>
            <person name="Bowtell D.D.L."/>
            <person name="Ronai Z."/>
        </authorList>
    </citation>
    <scope>INTERACTION WITH SIAH2</scope>
    <scope>DEGRADATION</scope>
</reference>
<reference key="36">
    <citation type="journal article" date="2002" name="Mol. Cell. Biol.">
        <title>Direct activation of mitogen-activated protein kinase kinase kinase MEKK1 by the Ste20p homologue GCK and the adapter protein TRAF2.</title>
        <authorList>
            <person name="Chadee D.N."/>
            <person name="Yuasa T."/>
            <person name="Kyriakis J.M."/>
        </authorList>
    </citation>
    <scope>FUNCTION</scope>
</reference>
<reference key="37">
    <citation type="journal article" date="2002" name="Nature">
        <title>TNF-RII and c-IAP1 mediate ubiquitination and degradation of TRAF2.</title>
        <authorList>
            <person name="Li X."/>
            <person name="Yang Y."/>
            <person name="Ashwell J.D."/>
        </authorList>
    </citation>
    <scope>FUNCTION</scope>
    <scope>INTERACTION WITH BIRC2 AND BIRC3</scope>
    <scope>UBIQUITINATION BY BIRC2</scope>
    <scope>DEGRADATION</scope>
</reference>
<reference key="38">
    <citation type="journal article" date="2003" name="Nature">
        <title>CYLD is a deubiquitinating enzyme that negatively regulates NF-kappaB activation by TNFR family members.</title>
        <authorList>
            <person name="Trompouki E."/>
            <person name="Hatzivassiliou E."/>
            <person name="Tsichritzis T."/>
            <person name="Farmer H."/>
            <person name="Ashworth A."/>
            <person name="Mosialos G."/>
        </authorList>
    </citation>
    <scope>FUNCTION</scope>
    <scope>UBIQUITINATION</scope>
    <scope>DEUBIQUITINATION BY CYLD</scope>
</reference>
<reference key="39">
    <citation type="journal article" date="2003" name="Nature">
        <title>The tumour suppressor CYLD negatively regulates NF-kappaB signalling by deubiquitination.</title>
        <authorList>
            <person name="Kovalenko A."/>
            <person name="Chable-Bessia C."/>
            <person name="Cantarella G."/>
            <person name="Israeel A."/>
            <person name="Wallach D."/>
            <person name="Courtois G."/>
        </authorList>
    </citation>
    <scope>INTERACTION WITH CYLD</scope>
    <scope>UBIQUITINATION</scope>
    <scope>DEUBIQUITINATION BY CYLD</scope>
</reference>
<reference key="40">
    <citation type="journal article" date="2004" name="J. Biol. Chem.">
        <title>AIP1/DAB2IP, a novel member of the Ras-GAP family, transduces TRAF2-induced ASK1-JNK activation.</title>
        <authorList>
            <person name="Zhang H."/>
            <person name="Zhang R."/>
            <person name="Luo Y."/>
            <person name="D'Alessio A."/>
            <person name="Pober J.S."/>
            <person name="Min W."/>
        </authorList>
    </citation>
    <scope>INTERACTION WITH DAB2IP</scope>
</reference>
<reference key="41">
    <citation type="journal article" date="2004" name="J. Biol. Chem.">
        <title>TRAF3 forms heterotrimers with TRAF2 and modulates its ability to mediate NF-{kappa}B activation.</title>
        <authorList>
            <person name="He L."/>
            <person name="Grammer A.C."/>
            <person name="Wu X."/>
            <person name="Lipsky P.E."/>
        </authorList>
    </citation>
    <scope>FUNCTION</scope>
    <scope>SUBCELLULAR LOCATION</scope>
    <scope>INTERACTION WITH TRAF3</scope>
    <scope>SUBUNIT</scope>
</reference>
<reference key="42">
    <citation type="journal article" date="2004" name="Mol. Cell. Biol.">
        <title>TRAF family proteins link PKR with NF-kappa B activation.</title>
        <authorList>
            <person name="Gil J."/>
            <person name="Garcia M.A."/>
            <person name="Gomez-Puertas P."/>
            <person name="Guerra S."/>
            <person name="Rullas J."/>
            <person name="Nakano H."/>
            <person name="Alcami J."/>
            <person name="Esteban M."/>
        </authorList>
    </citation>
    <scope>FUNCTION</scope>
    <scope>INTERACTION WITH EIF2AK2</scope>
</reference>
<reference key="43">
    <citation type="journal article" date="2005" name="Mol. Cell">
        <title>VISA is an adapter protein required for virus-triggered IFN-beta Signaling.</title>
        <authorList>
            <person name="Xu L.-G."/>
            <person name="Wang Y.-Y."/>
            <person name="Han K.-J."/>
            <person name="Li L.-Y."/>
            <person name="Zhai Z."/>
            <person name="Shu H.-B."/>
        </authorList>
    </citation>
    <scope>INTERACTION WITH MAVS</scope>
</reference>
<reference key="44">
    <citation type="journal article" date="2005" name="Mol. Cell. Biol.">
        <title>Regulation of the deubiquitinating enzyme CYLD by IkappaB kinase gamma-dependent phosphorylation.</title>
        <authorList>
            <person name="Reiley W."/>
            <person name="Zhang M."/>
            <person name="Wu X."/>
            <person name="Granger E."/>
            <person name="Sun S.C."/>
        </authorList>
    </citation>
    <scope>UBIQUITINATION</scope>
    <scope>DEUBIQUITINATION BY CYLD</scope>
</reference>
<reference key="45">
    <citation type="journal article" date="2005" name="Nat. Immunol.">
        <title>Selective regulation of tumor necrosis factor-induced Erk signaling by Src family kinases and the T cell protein tyrosine phosphatase.</title>
        <authorList>
            <person name="van Vliet C."/>
            <person name="Bukczynska P.E."/>
            <person name="Puryer M.A."/>
            <person name="Sadek C.M."/>
            <person name="Shields B.J."/>
            <person name="Tremblay M.L."/>
            <person name="Tiganis T."/>
        </authorList>
    </citation>
    <scope>INTERACTION WITH PTPN2</scope>
</reference>
<reference key="46">
    <citation type="journal article" date="2006" name="Cell. Signal.">
        <title>Human ubiquitin specific protease 31 is a deubiquitinating enzyme implicated in activation of nuclear factor-kappaB.</title>
        <authorList>
            <person name="Tzimas C."/>
            <person name="Michailidou G."/>
            <person name="Arsenakis M."/>
            <person name="Kieff E."/>
            <person name="Mosialos G."/>
            <person name="Hatzivassiliou E.G."/>
        </authorList>
    </citation>
    <scope>INTERACTION WITH USP48</scope>
</reference>
<reference key="47">
    <citation type="journal article" date="2007" name="J. Biol. Chem.">
        <title>RIP1-mediated AIP1 phosphorylation at a 14-3-3-binding site is critical for tumor necrosis factor-induced ASK1-JNK/p38 activation.</title>
        <authorList>
            <person name="Zhang H."/>
            <person name="Zhang H."/>
            <person name="Lin Y."/>
            <person name="Li J."/>
            <person name="Pober J.S."/>
            <person name="Min W."/>
        </authorList>
    </citation>
    <scope>INTERACTION WITH DAB2IP</scope>
</reference>
<reference key="48">
    <citation type="journal article" date="2009" name="Anal. Chem.">
        <title>Lys-N and trypsin cover complementary parts of the phosphoproteome in a refined SCX-based approach.</title>
        <authorList>
            <person name="Gauci S."/>
            <person name="Helbig A.O."/>
            <person name="Slijper M."/>
            <person name="Krijgsveld J."/>
            <person name="Heck A.J."/>
            <person name="Mohammed S."/>
        </authorList>
    </citation>
    <scope>ACETYLATION [LARGE SCALE ANALYSIS] AT ALA-2</scope>
    <scope>CLEAVAGE OF INITIATOR METHIONINE [LARGE SCALE ANALYSIS]</scope>
    <scope>IDENTIFICATION BY MASS SPECTROMETRY [LARGE SCALE ANALYSIS]</scope>
</reference>
<reference key="49">
    <citation type="journal article" date="2009" name="J. Biol. Chem.">
        <title>Enhanced cytoprotective effects of the inhibitor of apoptosis protein cellular IAP1 through stabilization with TRAF2.</title>
        <authorList>
            <person name="Csomos R.A."/>
            <person name="Brady G.F."/>
            <person name="Duckett C.S."/>
        </authorList>
    </citation>
    <scope>FUNCTION</scope>
    <scope>INTERACTION WITH BIRC2</scope>
</reference>
<reference key="50">
    <citation type="journal article" date="2009" name="Mol. Cell">
        <title>PKC phosphorylation of TRAF2 mediates IKKalpha/beta recruitment and K63-linked polyubiquitination.</title>
        <authorList>
            <person name="Li S."/>
            <person name="Wang L."/>
            <person name="Dorf M.E."/>
        </authorList>
    </citation>
    <scope>FUNCTION</scope>
    <scope>INTERACTION WITH IKKA; IKKB; TAB2 AND TAB3</scope>
    <scope>UBIQUITINATION AT LYS-31</scope>
    <scope>PHOSPHORYLATION AT THR-117</scope>
    <scope>MUTAGENESIS OF THR-117</scope>
    <scope>UBIQUITINATION</scope>
    <scope>SUBCELLULAR LOCATION</scope>
</reference>
<reference key="51">
    <citation type="journal article" date="2009" name="Mol. Cell. Biol.">
        <title>TRAF2 phosphorylation modulates tumor necrosis factor alpha-induced gene expression and cell resistance to apoptosis.</title>
        <authorList>
            <person name="Blackwell K."/>
            <person name="Zhang L."/>
            <person name="Thomas G.S."/>
            <person name="Sun S."/>
            <person name="Nakano H."/>
            <person name="Habelhah H."/>
        </authorList>
    </citation>
    <scope>FUNCTION</scope>
    <scope>IDENTIFICATION IN A COMPLEX WITH TNFRSF1A; RIPK1 AND IKKB</scope>
    <scope>MUTAGENESIS OF SER-11</scope>
    <scope>PHOSPHORYLATION AT SER-11</scope>
</reference>
<reference key="52">
    <citation type="journal article" date="2010" name="Cell. Immunol.">
        <title>RELT induces cellular death in HEK 293 epithelial cells.</title>
        <authorList>
            <person name="Cusick J.K."/>
            <person name="Mustian A."/>
            <person name="Goldberg K."/>
            <person name="Reyland M.E."/>
        </authorList>
    </citation>
    <scope>INTERACTION WITH RELL2</scope>
</reference>
<reference key="53">
    <citation type="journal article" date="2010" name="Cell Res.">
        <title>TRAF2-MLK3 interaction is essential for TNF-alpha-induced MLK3 activation.</title>
        <authorList>
            <person name="Sondarva G."/>
            <person name="Kundu C.N."/>
            <person name="Mehrotra S."/>
            <person name="Mishra R."/>
            <person name="Rangasamy V."/>
            <person name="Sathyanarayana P."/>
            <person name="Ray R.S."/>
            <person name="Rana B."/>
            <person name="Rana A."/>
        </authorList>
    </citation>
    <scope>FUNCTION</scope>
    <scope>INTERACTION WITH MAP3K11</scope>
</reference>
<reference key="54">
    <citation type="journal article" date="2010" name="J. Mol. Biol.">
        <title>Asymmetric recruitment of cIAPs by TRAF2.</title>
        <authorList>
            <person name="Mace P.D."/>
            <person name="Smits C."/>
            <person name="Vaux D.L."/>
            <person name="Silke J."/>
            <person name="Day C.L."/>
        </authorList>
    </citation>
    <scope>INTERACTION WITH BIRC2</scope>
    <scope>SUBUNIT</scope>
    <scope>HOMOTRIMERIZATION</scope>
</reference>
<reference key="55">
    <citation type="journal article" date="2010" name="J. Mol. Biol.">
        <title>The RING domain of TRAF2 plays an essential role in the inhibition of TNFalpha-induced cell death but not in the activation of NF-kappaB.</title>
        <authorList>
            <person name="Zhang L."/>
            <person name="Blackwell K."/>
            <person name="Shi Z."/>
            <person name="Habelhah H."/>
        </authorList>
    </citation>
    <scope>FUNCTION</scope>
    <scope>DOMAIN</scope>
</reference>
<reference key="56">
    <citation type="journal article" date="2010" name="Mol. Cell. Biochem.">
        <title>Ubiquitin ligase Smurf1 targets TRAF family proteins for ubiquitination and degradation.</title>
        <authorList>
            <person name="Li S."/>
            <person name="Lu K."/>
            <person name="Wang J."/>
            <person name="An L."/>
            <person name="Yang G."/>
            <person name="Chen H."/>
            <person name="Cui Y."/>
            <person name="Yin X."/>
            <person name="Xie P."/>
            <person name="Xing G."/>
            <person name="He F."/>
            <person name="Zhang L."/>
        </authorList>
    </citation>
    <scope>UBIQUITINATION</scope>
    <scope>FUNCTION</scope>
</reference>
<reference key="57">
    <citation type="journal article" date="2010" name="Mol. Immunol.">
        <title>Direct binding of TRAF2 and TRAF6 to TICAM-1/TRIF adaptor participates in activation of the Toll-like receptor 3/4 pathway.</title>
        <authorList>
            <person name="Sasai M."/>
            <person name="Tatematsu M."/>
            <person name="Oshiumi H."/>
            <person name="Funami K."/>
            <person name="Matsumoto M."/>
            <person name="Hatakeyama S."/>
            <person name="Seya T."/>
        </authorList>
    </citation>
    <scope>INTERACTION WITH TICAM1</scope>
    <scope>FUNCTION</scope>
</reference>
<reference key="58">
    <citation type="journal article" date="2010" name="Nature">
        <title>Sphingosine-1-phosphate is a missing cofactor for the E3 ubiquitin ligase TRAF2.</title>
        <authorList>
            <person name="Alvarez S.E."/>
            <person name="Harikumar K.B."/>
            <person name="Hait N.C."/>
            <person name="Allegood J."/>
            <person name="Strub G.M."/>
            <person name="Kim E.Y."/>
            <person name="Maceyka M."/>
            <person name="Jiang H."/>
            <person name="Luo C."/>
            <person name="Kordula T."/>
            <person name="Milstien S."/>
            <person name="Spiegel S."/>
        </authorList>
    </citation>
    <scope>FUNCTION</scope>
    <scope>CATALYTIC ACTIVITY</scope>
    <scope>ACTIVITY REGULATION</scope>
    <scope>UBIQUITINATION</scope>
    <scope>INTERACTION WITH SPHK1</scope>
    <scope>SPHINGOLIPID BINDING</scope>
</reference>
<reference key="59">
    <citation type="journal article" date="2010" name="Sci. Signal.">
        <title>Quantitative phosphoproteomics reveals widespread full phosphorylation site occupancy during mitosis.</title>
        <authorList>
            <person name="Olsen J.V."/>
            <person name="Vermeulen M."/>
            <person name="Santamaria A."/>
            <person name="Kumar C."/>
            <person name="Miller M.L."/>
            <person name="Jensen L.J."/>
            <person name="Gnad F."/>
            <person name="Cox J."/>
            <person name="Jensen T.S."/>
            <person name="Nigg E.A."/>
            <person name="Brunak S."/>
            <person name="Mann M."/>
        </authorList>
    </citation>
    <scope>ACETYLATION [LARGE SCALE ANALYSIS] AT ALA-2</scope>
    <scope>CLEAVAGE OF INITIATOR METHIONINE [LARGE SCALE ANALYSIS]</scope>
    <scope>IDENTIFICATION BY MASS SPECTROMETRY [LARGE SCALE ANALYSIS]</scope>
    <source>
        <tissue>Cervix carcinoma</tissue>
    </source>
</reference>
<reference key="60">
    <citation type="journal article" date="2011" name="BMC Syst. Biol.">
        <title>Initial characterization of the human central proteome.</title>
        <authorList>
            <person name="Burkard T.R."/>
            <person name="Planyavsky M."/>
            <person name="Kaupe I."/>
            <person name="Breitwieser F.P."/>
            <person name="Buerckstuemmer T."/>
            <person name="Bennett K.L."/>
            <person name="Superti-Furga G."/>
            <person name="Colinge J."/>
        </authorList>
    </citation>
    <scope>IDENTIFICATION BY MASS SPECTROMETRY [LARGE SCALE ANALYSIS]</scope>
</reference>
<reference key="61">
    <citation type="journal article" date="2011" name="Mol. Biol. Cell">
        <title>UXT-V1 protects cells against TNF-induced apoptosis through modulating complex II formation.</title>
        <authorList>
            <person name="Huang Y."/>
            <person name="Chen L."/>
            <person name="Zhou Y."/>
            <person name="Liu H."/>
            <person name="Yang J."/>
            <person name="Liu Z."/>
            <person name="Wang C."/>
        </authorList>
    </citation>
    <scope>IDENTIFICATION IN APOPTOTIC COMPLEX I</scope>
    <scope>INTERACTION WITH UXT</scope>
</reference>
<reference key="62">
    <citation type="journal article" date="2011" name="J. Cell. Physiol.">
        <title>Alternative splicing of CARMA2/CARD14 transcripts generates protein variants with differential effect on NF-kappaB activation and endoplasmic reticulum stress-induced cell death.</title>
        <authorList>
            <person name="Scudiero I."/>
            <person name="Zotti T."/>
            <person name="Ferravante A."/>
            <person name="Vessichelli M."/>
            <person name="Vito P."/>
            <person name="Stilo R."/>
        </authorList>
    </citation>
    <scope>INTERACTION WITH CARD14</scope>
</reference>
<reference key="63">
    <citation type="journal article" date="2011" name="Sci. Signal.">
        <title>System-wide temporal characterization of the proteome and phosphoproteome of human embryonic stem cell differentiation.</title>
        <authorList>
            <person name="Rigbolt K.T."/>
            <person name="Prokhorova T.A."/>
            <person name="Akimov V."/>
            <person name="Henningsen J."/>
            <person name="Johansen P.T."/>
            <person name="Kratchmarova I."/>
            <person name="Kassem M."/>
            <person name="Mann M."/>
            <person name="Olsen J.V."/>
            <person name="Blagoev B."/>
        </authorList>
    </citation>
    <scope>ACETYLATION [LARGE SCALE ANALYSIS] AT ALA-2</scope>
    <scope>PHOSPHORYLATION [LARGE SCALE ANALYSIS] AT THR-7; SER-11 AND THR-22</scope>
    <scope>CLEAVAGE OF INITIATOR METHIONINE [LARGE SCALE ANALYSIS]</scope>
    <scope>IDENTIFICATION BY MASS SPECTROMETRY [LARGE SCALE ANALYSIS]</scope>
</reference>
<reference key="64">
    <citation type="journal article" date="2012" name="J. Cell. Mol. Med.">
        <title>Identification of F-box only protein 7 as a negative regulator of NF-kappaB signalling.</title>
        <authorList>
            <person name="Kuiken H.J."/>
            <person name="Egan D.A."/>
            <person name="Laman H."/>
            <person name="Bernards R."/>
            <person name="Beijersbergen R.L."/>
            <person name="Dirac A.M."/>
        </authorList>
    </citation>
    <scope>FUNCTION</scope>
    <scope>UBIQUITINATION BY FBXO7</scope>
</reference>
<reference key="65">
    <citation type="journal article" date="2012" name="Cell Death Differ.">
        <title>Arginine methylation-dependent regulation of ASK1 signaling by PRMT1.</title>
        <authorList>
            <person name="Cho J.H."/>
            <person name="Lee M.K."/>
            <person name="Yoon K.W."/>
            <person name="Lee J."/>
            <person name="Cho S.G."/>
            <person name="Choi E.J."/>
        </authorList>
    </citation>
    <scope>INTERACTION WITH MAP3K5</scope>
</reference>
<reference key="66">
    <citation type="journal article" date="2013" name="Cell Rep.">
        <title>IKKepsilon-mediated tumorigenesis requires K63-linked polyubiquitination by a cIAP1/cIAP2/TRAF2 E3 ubiquitin ligase complex.</title>
        <authorList>
            <person name="Zhou A.Y."/>
            <person name="Shen R.R."/>
            <person name="Kim E."/>
            <person name="Lock Y.J."/>
            <person name="Xu M."/>
            <person name="Chen Z.J."/>
            <person name="Hahn W.C."/>
        </authorList>
    </citation>
    <scope>FUNCTION IN IKBKE UBIQUITINATION</scope>
</reference>
<reference key="67">
    <citation type="journal article" date="2013" name="J. Proteome Res.">
        <title>Toward a comprehensive characterization of a human cancer cell phosphoproteome.</title>
        <authorList>
            <person name="Zhou H."/>
            <person name="Di Palma S."/>
            <person name="Preisinger C."/>
            <person name="Peng M."/>
            <person name="Polat A.N."/>
            <person name="Heck A.J."/>
            <person name="Mohammed S."/>
        </authorList>
    </citation>
    <scope>PHOSPHORYLATION [LARGE SCALE ANALYSIS] AT SER-5; THR-7 AND SER-11</scope>
    <scope>IDENTIFICATION BY MASS SPECTROMETRY [LARGE SCALE ANALYSIS]</scope>
    <source>
        <tissue>Cervix carcinoma</tissue>
        <tissue>Erythroleukemia</tissue>
    </source>
</reference>
<reference key="68">
    <citation type="journal article" date="2013" name="Cell Host Microbe">
        <title>NleB, a bacterial effector with glycosyltransferase activity, targets GAPDH function to inhibit NF-kappaB activation.</title>
        <authorList>
            <person name="Gao X."/>
            <person name="Wang X."/>
            <person name="Pham T.H."/>
            <person name="Feuerbacher L.A."/>
            <person name="Lubos M.L."/>
            <person name="Huang M."/>
            <person name="Olsen R."/>
            <person name="Mushegian A."/>
            <person name="Slawson C."/>
            <person name="Hardwidge P.R."/>
        </authorList>
    </citation>
    <scope>INTERACTION WITH GAPDH</scope>
</reference>
<reference key="69">
    <citation type="journal article" date="2014" name="Nat. Commun.">
        <title>LRRC19 expressed in the kidney induces TRAF2/6-mediated signals to prevent infection by uropathogenic bacteria.</title>
        <authorList>
            <person name="Su X."/>
            <person name="Min S."/>
            <person name="Cao S."/>
            <person name="Yan H."/>
            <person name="Zhao Y."/>
            <person name="Li H."/>
            <person name="Chai L."/>
            <person name="Mei S."/>
            <person name="Yang J."/>
            <person name="Zhang Y."/>
            <person name="Zhang Z."/>
            <person name="Liu F."/>
            <person name="Sun W."/>
            <person name="Che Y."/>
            <person name="Yang R."/>
        </authorList>
    </citation>
    <scope>UBIQUITINATION</scope>
    <scope>INTERACTION WITH LRRC19</scope>
</reference>
<reference key="70">
    <citation type="journal article" date="2015" name="J. Cell Sci.">
        <title>Aminopeptidase P3, a new member of the TNF-TNFR2 signaling complex, induces phosphorylation of JNK1 and JNK2.</title>
        <authorList>
            <person name="Inoue M."/>
            <person name="Kamada H."/>
            <person name="Abe Y."/>
            <person name="Higashisaka K."/>
            <person name="Nagano K."/>
            <person name="Mukai Y."/>
            <person name="Yoshioka Y."/>
            <person name="Tsutsumi Y."/>
            <person name="Tsunoda S."/>
        </authorList>
    </citation>
    <scope>INTERACTION WITH XPNPEP3</scope>
</reference>
<reference key="71">
    <citation type="journal article" date="2017" name="Nature">
        <title>TRAF2 and OTUD7B govern a ubiquitin-dependent switch that regulates mTORC2 signalling.</title>
        <authorList>
            <person name="Wang B."/>
            <person name="Jie Z."/>
            <person name="Joo D."/>
            <person name="Ordureau A."/>
            <person name="Liu P."/>
            <person name="Gan W."/>
            <person name="Guo J."/>
            <person name="Zhang J."/>
            <person name="North B.J."/>
            <person name="Dai X."/>
            <person name="Cheng X."/>
            <person name="Bian X."/>
            <person name="Zhang L."/>
            <person name="Harper J.W."/>
            <person name="Sun S.C."/>
            <person name="Wei W."/>
        </authorList>
    </citation>
    <scope>FUNCTION</scope>
    <scope>CATALYTIC ACTIVITY</scope>
    <scope>PATHWAY</scope>
</reference>
<reference key="72">
    <citation type="journal article" date="2018" name="Mol. Cell">
        <title>PELI1 selectively targets kinase-active RIP3 for ubiquitylation-dependent proteasomal degradation.</title>
        <authorList>
            <person name="Choi S.W."/>
            <person name="Park H.H."/>
            <person name="Kim S."/>
            <person name="Chung J.M."/>
            <person name="Noh H.J."/>
            <person name="Kim S.K."/>
            <person name="Song H.K."/>
            <person name="Lee C.W."/>
            <person name="Morgan M.J."/>
            <person name="Kang H.C."/>
            <person name="Kim Y.S."/>
        </authorList>
    </citation>
    <scope>INTERACTION WITH RIPK3</scope>
</reference>
<reference key="73">
    <citation type="journal article" date="2024" name="Immunity">
        <title>Signaling via a CD27-TRAF2-SHP-1 axis during naive T cell activation promotes memory-associated gene regulatory networks.</title>
        <authorList>
            <person name="Jaeger-Ruckstuhl C.A."/>
            <person name="Lo Y."/>
            <person name="Fulton E."/>
            <person name="Waltner O.G."/>
            <person name="Shabaneh T.B."/>
            <person name="Simon S."/>
            <person name="Muthuraman P.V."/>
            <person name="Correnti C.E."/>
            <person name="Newsom O.J."/>
            <person name="Engstrom I.A."/>
            <person name="Kanaan S.B."/>
            <person name="Bhise S.S."/>
            <person name="Peralta J.M.C."/>
            <person name="Ruff R."/>
            <person name="Price J.P."/>
            <person name="Stull S.M."/>
            <person name="Stevens A.R."/>
            <person name="Bugos G."/>
            <person name="Kluesner M.G."/>
            <person name="Voillet V."/>
            <person name="Muhunthan V."/>
            <person name="Morrish F."/>
            <person name="Olson J.M."/>
            <person name="Gottardo R."/>
            <person name="Sarthy J.F."/>
            <person name="Henikoff S."/>
            <person name="Sullivan L.B."/>
            <person name="Furlan S.N."/>
            <person name="Riddell S.R."/>
        </authorList>
    </citation>
    <scope>INTERACTION WITH CD27</scope>
</reference>
<reference key="74">
    <citation type="journal article" date="1999" name="Nature">
        <title>Structural basis for self-association and receptor recognition of human TRAF2.</title>
        <authorList>
            <person name="Park Y.C."/>
            <person name="Burkitt V."/>
            <person name="Villa A.R."/>
            <person name="Tong L."/>
            <person name="Wu H."/>
        </authorList>
    </citation>
    <scope>X-RAY CRYSTALLOGRAPHY (2.2 ANGSTROMS) OF 310-501 IN COMPLEX WITH TNFRSF1B</scope>
</reference>
<reference key="75">
    <citation type="journal article" date="1999" name="Proc. Natl. Acad. Sci. U.S.A.">
        <title>Crystallographic analysis of CD40 recognition and signaling by human TRAF2.</title>
        <authorList>
            <person name="McWhirter S.M."/>
            <person name="Pullen S.S."/>
            <person name="Holton J.M."/>
            <person name="Crute J.J."/>
            <person name="Kehry M.R."/>
            <person name="Alber T."/>
        </authorList>
    </citation>
    <scope>X-RAY CRYSTALLOGRAPHY (2.0 ANGSTROMS) OF 334-501 IN COMPLEX WITH EBV BNFL1</scope>
    <scope>X-RAY CRYSTALLOGRAPHY (2.7 ANGSTROMS) OF 315-501 IN COMPLEX WITH TNFRSF5</scope>
    <scope>X-RAY CRYSTALLOGRAPHY (2.0 ANGSTROMS) OF 334-501 IN COMPLEX WITH TNFRSF4</scope>
    <scope>X-RAY CRYSTALLOGRAPHY (2.5 ANGSTROMS) OF 334-501 IN COMPLEX WITH TNFRSF9</scope>
</reference>
<reference key="76">
    <citation type="journal article" date="2000" name="Cell">
        <title>A novel mechanism of TRAF signaling revealed by structural and functional analyses of the TRADD-TRAF2 interaction.</title>
        <authorList>
            <person name="Park Y.C."/>
            <person name="Ye H."/>
            <person name="Hsia C."/>
            <person name="Segal D."/>
            <person name="Rich R.L."/>
            <person name="Liou H.C."/>
            <person name="Myszka D.G."/>
            <person name="Wu H."/>
        </authorList>
    </citation>
    <scope>X-RAY CRYSTALLOGRAPHY (2.0 ANGSTROMS) OF 331-501 IN COMPLEX WITH TRADD</scope>
</reference>
<reference key="77">
    <citation type="journal article" date="2009" name="Biochemistry">
        <title>Structural basis for the lack of E2 interaction in the RING domain of TRAF2.</title>
        <authorList>
            <person name="Yin Q."/>
            <person name="Lamothe B."/>
            <person name="Darnay B.G."/>
            <person name="Wu H."/>
        </authorList>
    </citation>
    <scope>X-RAY CRYSTALLOGRAPHY (1.9 ANGSTROMS) OF 1-133</scope>
    <scope>FUNCTION</scope>
    <scope>SUBUNIT</scope>
</reference>
<reference key="78">
    <citation type="journal article" date="2010" name="Mol. Cell">
        <title>Crystal structures of the TRAF2: cIAP2 and the TRAF1: TRAF2: cIAP2 complexes: affinity, specificity, and regulation.</title>
        <authorList>
            <person name="Zheng C."/>
            <person name="Kabaleeswaran V."/>
            <person name="Wang Y."/>
            <person name="Cheng G."/>
            <person name="Wu H."/>
        </authorList>
    </citation>
    <scope>X-RAY CRYSTALLOGRAPHY (2.61 ANGSTROMS) OF 266-330 IN COMPLEXES WITH TRAF1 AND BIRC3</scope>
    <scope>FUNCTION</scope>
    <scope>SUBUNIT</scope>
    <scope>COILED-COIL DOMAIN</scope>
    <scope>MUTAGENESIS OF ILE-285; VAL-288 AND GLU-292</scope>
</reference>
<organism>
    <name type="scientific">Homo sapiens</name>
    <name type="common">Human</name>
    <dbReference type="NCBI Taxonomy" id="9606"/>
    <lineage>
        <taxon>Eukaryota</taxon>
        <taxon>Metazoa</taxon>
        <taxon>Chordata</taxon>
        <taxon>Craniata</taxon>
        <taxon>Vertebrata</taxon>
        <taxon>Euteleostomi</taxon>
        <taxon>Mammalia</taxon>
        <taxon>Eutheria</taxon>
        <taxon>Euarchontoglires</taxon>
        <taxon>Primates</taxon>
        <taxon>Haplorrhini</taxon>
        <taxon>Catarrhini</taxon>
        <taxon>Hominidae</taxon>
        <taxon>Homo</taxon>
    </lineage>
</organism>
<evidence type="ECO:0000250" key="1"/>
<evidence type="ECO:0000250" key="2">
    <source>
        <dbReference type="UniProtKB" id="P39429"/>
    </source>
</evidence>
<evidence type="ECO:0000255" key="3">
    <source>
        <dbReference type="PROSITE-ProRule" id="PRU00129"/>
    </source>
</evidence>
<evidence type="ECO:0000255" key="4">
    <source>
        <dbReference type="PROSITE-ProRule" id="PRU00175"/>
    </source>
</evidence>
<evidence type="ECO:0000255" key="5">
    <source>
        <dbReference type="PROSITE-ProRule" id="PRU00207"/>
    </source>
</evidence>
<evidence type="ECO:0000269" key="6">
    <source>
    </source>
</evidence>
<evidence type="ECO:0000269" key="7">
    <source>
    </source>
</evidence>
<evidence type="ECO:0000269" key="8">
    <source>
    </source>
</evidence>
<evidence type="ECO:0000269" key="9">
    <source>
    </source>
</evidence>
<evidence type="ECO:0000269" key="10">
    <source>
    </source>
</evidence>
<evidence type="ECO:0000269" key="11">
    <source>
    </source>
</evidence>
<evidence type="ECO:0000269" key="12">
    <source>
    </source>
</evidence>
<evidence type="ECO:0000269" key="13">
    <source>
    </source>
</evidence>
<evidence type="ECO:0000269" key="14">
    <source>
    </source>
</evidence>
<evidence type="ECO:0000269" key="15">
    <source>
    </source>
</evidence>
<evidence type="ECO:0000269" key="16">
    <source>
    </source>
</evidence>
<evidence type="ECO:0000269" key="17">
    <source>
    </source>
</evidence>
<evidence type="ECO:0000269" key="18">
    <source>
    </source>
</evidence>
<evidence type="ECO:0000269" key="19">
    <source>
    </source>
</evidence>
<evidence type="ECO:0000269" key="20">
    <source>
    </source>
</evidence>
<evidence type="ECO:0000269" key="21">
    <source>
    </source>
</evidence>
<evidence type="ECO:0000269" key="22">
    <source>
    </source>
</evidence>
<evidence type="ECO:0000269" key="23">
    <source>
    </source>
</evidence>
<evidence type="ECO:0000269" key="24">
    <source>
    </source>
</evidence>
<evidence type="ECO:0000269" key="25">
    <source>
    </source>
</evidence>
<evidence type="ECO:0000269" key="26">
    <source>
    </source>
</evidence>
<evidence type="ECO:0000269" key="27">
    <source>
    </source>
</evidence>
<evidence type="ECO:0000269" key="28">
    <source>
    </source>
</evidence>
<evidence type="ECO:0000269" key="29">
    <source>
    </source>
</evidence>
<evidence type="ECO:0000269" key="30">
    <source>
    </source>
</evidence>
<evidence type="ECO:0000269" key="31">
    <source>
    </source>
</evidence>
<evidence type="ECO:0000269" key="32">
    <source>
    </source>
</evidence>
<evidence type="ECO:0000269" key="33">
    <source>
    </source>
</evidence>
<evidence type="ECO:0000269" key="34">
    <source>
    </source>
</evidence>
<evidence type="ECO:0000269" key="35">
    <source>
    </source>
</evidence>
<evidence type="ECO:0000269" key="36">
    <source>
    </source>
</evidence>
<evidence type="ECO:0000269" key="37">
    <source>
    </source>
</evidence>
<evidence type="ECO:0000269" key="38">
    <source>
    </source>
</evidence>
<evidence type="ECO:0000269" key="39">
    <source>
    </source>
</evidence>
<evidence type="ECO:0000269" key="40">
    <source>
    </source>
</evidence>
<evidence type="ECO:0000269" key="41">
    <source>
    </source>
</evidence>
<evidence type="ECO:0000269" key="42">
    <source>
    </source>
</evidence>
<evidence type="ECO:0000269" key="43">
    <source>
    </source>
</evidence>
<evidence type="ECO:0000269" key="44">
    <source>
    </source>
</evidence>
<evidence type="ECO:0000269" key="45">
    <source>
    </source>
</evidence>
<evidence type="ECO:0000269" key="46">
    <source>
    </source>
</evidence>
<evidence type="ECO:0000269" key="47">
    <source>
    </source>
</evidence>
<evidence type="ECO:0000269" key="48">
    <source>
    </source>
</evidence>
<evidence type="ECO:0000269" key="49">
    <source>
    </source>
</evidence>
<evidence type="ECO:0000269" key="50">
    <source>
    </source>
</evidence>
<evidence type="ECO:0000269" key="51">
    <source>
    </source>
</evidence>
<evidence type="ECO:0000269" key="52">
    <source>
    </source>
</evidence>
<evidence type="ECO:0000269" key="53">
    <source>
    </source>
</evidence>
<evidence type="ECO:0000269" key="54">
    <source>
    </source>
</evidence>
<evidence type="ECO:0000269" key="55">
    <source>
    </source>
</evidence>
<evidence type="ECO:0000269" key="56">
    <source>
    </source>
</evidence>
<evidence type="ECO:0000269" key="57">
    <source>
    </source>
</evidence>
<evidence type="ECO:0000269" key="58">
    <source>
    </source>
</evidence>
<evidence type="ECO:0000269" key="59">
    <source>
    </source>
</evidence>
<evidence type="ECO:0000269" key="60">
    <source>
    </source>
</evidence>
<evidence type="ECO:0000269" key="61">
    <source>
    </source>
</evidence>
<evidence type="ECO:0000269" key="62">
    <source>
    </source>
</evidence>
<evidence type="ECO:0000269" key="63">
    <source>
    </source>
</evidence>
<evidence type="ECO:0000269" key="64">
    <source>
    </source>
</evidence>
<evidence type="ECO:0000269" key="65">
    <source>
    </source>
</evidence>
<evidence type="ECO:0000269" key="66">
    <source>
    </source>
</evidence>
<evidence type="ECO:0000269" key="67">
    <source>
    </source>
</evidence>
<evidence type="ECO:0000269" key="68">
    <source>
    </source>
</evidence>
<evidence type="ECO:0000269" key="69">
    <source>
    </source>
</evidence>
<evidence type="ECO:0000303" key="70">
    <source>
    </source>
</evidence>
<evidence type="ECO:0000303" key="71">
    <source>
    </source>
</evidence>
<evidence type="ECO:0000303" key="72">
    <source>
    </source>
</evidence>
<evidence type="ECO:0000305" key="73"/>
<evidence type="ECO:0000305" key="74">
    <source>
    </source>
</evidence>
<evidence type="ECO:0000305" key="75">
    <source>
    </source>
</evidence>
<evidence type="ECO:0000312" key="76">
    <source>
        <dbReference type="HGNC" id="HGNC:12032"/>
    </source>
</evidence>
<evidence type="ECO:0007744" key="77">
    <source>
    </source>
</evidence>
<evidence type="ECO:0007744" key="78">
    <source>
    </source>
</evidence>
<evidence type="ECO:0007744" key="79">
    <source>
    </source>
</evidence>
<evidence type="ECO:0007744" key="80">
    <source>
    </source>
</evidence>
<evidence type="ECO:0007829" key="81">
    <source>
        <dbReference type="PDB" id="1CA9"/>
    </source>
</evidence>
<evidence type="ECO:0007829" key="82">
    <source>
        <dbReference type="PDB" id="1D0J"/>
    </source>
</evidence>
<evidence type="ECO:0007829" key="83">
    <source>
        <dbReference type="PDB" id="3KNV"/>
    </source>
</evidence>
<evidence type="ECO:0007829" key="84">
    <source>
        <dbReference type="PDB" id="8T5Q"/>
    </source>
</evidence>
<sequence length="501" mass="55859">MAAASVTPPGSLELLQPGFSKTLLGTKLEAKYLCSACRNVLRRPFQAQCGHRYCSFCLASILSSGPQNCAACVHEGIYEEGISILESSSAFPDNAARREVESLPAVCPSDGCTWKGTLKEYESCHEGRCPLMLTECPACKGLVRLGEKERHLEHECPERSLSCRHCRAPCCGADVKAHHEVCPKFPLTCDGCGKKKIPREKFQDHVKTCGKCRVPCRFHAIGCLETVEGEKQQEHEVQWLREHLAMLLSSVLEAKPLLGDQSHAGSELLQRCESLEKKTATFENIVCVLNREVERVAMTAEACSRQHRLDQDKIEALSSKVQQLERSIGLKDLAMADLEQKVLEMEASTYDGVFIWKISDFARKRQEAVAGRIPAIFSPAFYTSRYGYKMCLRIYLNGDGTGRGTHLSLFFVVMKGPNDALLRWPFNQKVTLMLLDQNNREHVIDAFRPDVTSSSFQRPVNDMNIASGCPLFCPVSKMEAKNSYVRDDAIFIKAIVDLTGL</sequence>
<comment type="function">
    <text evidence="2 8 19 20 22 24 26 31 32 33 34 35 36 38 39 40 42 46 48 51">E3 ubiquitin-protein ligase that regulates activation of NF-kappa-B and JNK and plays a central role in the regulation of cell survival and apoptosis (PubMed:10346818, PubMed:11784851, PubMed:12917689, PubMed:15383523, PubMed:18981220, PubMed:19150425, PubMed:19810754, PubMed:19918265, PubMed:19937093, PubMed:20047764, PubMed:20064526, PubMed:20385093, PubMed:20577214, PubMed:22212761). Catalyzes 'Lys-63'-linked ubiquitination of target proteins, such as BIRC3, IKBKE, MLST8, RIPK1 and TICAM1 (PubMed:23453969, PubMed:28489822). Is an essential constituent of several E3 ubiquitin-protein ligase complexes, where it promotes the ubiquitination of target proteins by bringing them into contact with other E3 ubiquitin ligases (PubMed:15383523, PubMed:18981220). Regulates BIRC2 and BIRC3 protein levels by inhibiting their autoubiquitination and subsequent degradation; this does not depend on the TRAF2 RING-type zinc finger domain (PubMed:11907583, PubMed:19506082). Plays a role in mediating activation of NF-kappa-B by EIF2AK2/PKR (PubMed:15121867). In complex with BIRC2 or BIRC3, promotes ubiquitination of IKBKE (PubMed:23453969). Acts as a regulator of mTORC1 and mTORC2 assembly by mediating 'Lys-63'-linked ubiquitination of MLST8, thereby inhibiting formation of the mTORC2 complex, while facilitating assembly of the mTORC1 complex (PubMed:28489822). Required for normal antibody isotype switching from IgM to IgG (By similarity).</text>
</comment>
<comment type="catalytic activity">
    <reaction evidence="42 51">
        <text>S-ubiquitinyl-[E2 ubiquitin-conjugating enzyme]-L-cysteine + [acceptor protein]-L-lysine = [E2 ubiquitin-conjugating enzyme]-L-cysteine + N(6)-ubiquitinyl-[acceptor protein]-L-lysine.</text>
        <dbReference type="EC" id="2.3.2.27"/>
    </reaction>
</comment>
<comment type="activity regulation">
    <text evidence="42">Has very low E3 ubiquitin ligase activity in the absence of sphingosine-1-phosphate. E3 ubiquitin ligase activity is strongly activated by cytoplasmic sphingosine-1-phosphate.</text>
</comment>
<comment type="pathway">
    <text evidence="51">Protein modification; protein ubiquitination.</text>
</comment>
<comment type="subunit">
    <text evidence="2 6 7 8 9 10 11 12 13 14 15 16 17 18 20 21 23 24 25 26 27 28 29 30 31 32 33 34 35 37 38 40 41 42 43 44 45 47 49 50 52 53 54 55 56 57 58 59 60 61 62 63 64 65 66 67 68 69">Homotrimer (PubMed:8069916). Heterotrimer with TRAF1 (PubMed:8069916). Heterotrimer with TRAF3 (via TRAF domain) (PubMed:15383523, PubMed:20447407). The domain containing the RING-type and the first TRAF-type zinc finger can also form homodimers (in vitro) (PubMed:19810754). Interacts with TNFRSF1B/TNFR2 (PubMed:10206649, PubMed:7639698, PubMed:8069916). Interacts with TNFRSF5/CD40 (PubMed:9718306). Interacts with TNFRSF4, TNFRSF7/CD27, TNFRSF8/CD30, TNFRSF9/CD137, TNFRSF11A/RANK, TNFRSF13B/TACI, TNFRSF14, TNFRSF16/NGFR, TNFRSF17/BCMA, TNFRSF18/AITR, TNFRSF19/TROY, TNFRSF19L/RELT and EDAR (PubMed:10037686, PubMed:10411888, PubMed:10514511, PubMed:10809768, PubMed:10880535, PubMed:11035039, PubMed:38354704, PubMed:8627180, PubMed:9153189, PubMed:9418902, PubMed:9488716, PubMed:9607925, PubMed:9692890, PubMed:9774460). Stimulation of TNF-alpha receptor TNFRSF1A leads to the formation of two distinct signaling complexes. Plasma membrane-bound complex I is composed of TNFRSF1A, TRADD, RIPK1, TRAF2 and BIRC2/c-IAP1 or BIRC3 which interacts with CHUCK/IKK-alpha, IKBKB/IKK-beta and IKBKG/IKK-gamma promoting cell survival (PubMed:18981220, PubMed:21307340). Subsequently, TRADD, RIPK1 and TRAF2 dissociate from TNFRSF1A and form cytoplasmic complex II with FADD and caspase CASP8 promoting cell apoptosis (PubMed:21307340). Interacts with TRADD (PubMed:10892748). Identified in a complex with TNFRSF1A, RIPK1 and IKBKB/IKK-beta (PubMed:18981220). Interacts with RIPK2 (PubMed:9705938). Interacts with BIRC2 and BIRC3 N-terminus; a single BIRC2 or BIRC3 molecule interacts with a heterotrimer formed by TRAF1 and TRAF2, or a TRAF2 homotrimer (PubMed:11907583, PubMed:19506082, PubMed:20385093, PubMed:20447407). Identified in a complex composed of TRAF2, TRAF3, BIRC2 and BIRC3 (By similarity). Interacts with BIRC2; the interaction promotes BIRC2 stability (PubMed:19506082). Interaction with BIRC2 and/or BIRC3 is essential for ubiquitination of IKBKE, degradation of NFKBIA and activation of NF-kappa-B (By similarity). Within complex I, phosphorylated TRAF2 interacts (via 'Lys-63'-linked polyubiquitin chains) with CHUCK/IKK-alpha, IKBKB/IKK-beta, IKBKG/IKK-gamma TAB2, TAB3 and TAK1 in response to TNF-alpha stimulation (PubMed:19150425). Within complex I, interacts with UXT isoform 1 (via TPQE motif); the interaction prevents the recruitment of FADD and CASP8/caspase 8 to complex I (PubMed:21307340). Forms a complex composed of TNFRSF8/CD30 or TNFRSF1B/TNFR2, and TRAF1, TRAF2 and E3 ligase TRAIP (PubMed:9104814). Within the complex, interacts with TRAIP; the interaction inhibits TRAF2-mediated NF-kappa B activation (PubMed:9104814). Component of a complex composed of TANK and TBK1 (PubMed:10581243). Interacts with TRPC4AP (By similarity). Interacts with MAP3K1/MEKK1, MAP3K5/ASK1 and MAP3K11/MLK3 in response to TNF-alpha stimulation; the interaction leads to JNK activation and interaction with MAP3K5 is inhibited by PRMT1 (PubMed:10346818, PubMed:19918265, PubMed:22095282, PubMed:9774977). Component of a complex composed of MAP3K14/NIK BIRC3 and TRAF3; the interaction leads to BIRC2/3-mediated ubiquitination of TRAF3 upon CD40 engagement in a TRAF2-dependent manner (By similarity). Interacts with MAP3K14/NIK in response to TNF-alpha stimulation; the interaction leads to NF-kappa B activation (PubMed:9020361). Interacts with PEG3; the interaction may promote TRAF2-mediated NF-kappa B activation (By similarity). Interacts with HIVEP3; the interaction may inhibit TNF-alpha-TRAF2-mediated NF-kappa B and JNK activation (By similarity). Interacts with TANK/ITRAF; the interaction prevents interaction between TNFRSF1B/TNFR2 and TRAF2 (PubMed:8710854). Interacts with deubiquitinating enzyme CYLD; the interaction results in the deubiquitination and inactivation of TRAF2 (PubMed:12917691). Interacts with SIAH2; the interaction leads to TRAF2 ubiquitination and degradation (PubMed:12411493). Interacts with E2 conjugating enzyme UBE2N/Ubc13, E3 ligase ITCH and RNF11 in response to TNF-alpha stimulation (By similarity). Interacts with ubiquitin-editing enzyme TNFAIP3/A20 in response to TNF-alpha stimulation; the interaction promotes TRAF2 dissociation from UBE2N/Ubc13, ITCH, RNF11 and TAX1BP1 and prevents prolonged TRAF-2 ubiquitination (By similarity). Interacts with TAX1BP1 in response to TNF-alpha stimulation; the interaction promotes TRAF2 dissociation from UBE2N/Ubc13 and TNFAIP3/A20, and prevents prolonged TRAF-2 ubiquitination (By similarity). Interacts (via C-terminus) with EIF2AK2/PKR (via the kinase catalytic domain) (PubMed:15121867). Interacts with deubiquitinating enzyme USP48 (PubMed:16214042). Interacts with PTPN2; probably involved in TNF-mediated signaling (PubMed:15696169). Interacts with Toll-like receptor TLR4/3 adapter TICAM1/TRIF; the interaction may promote TICAM1 ubiquitination (PubMed:20047764). Interacts with kinase/endoribonuclease ERN1/IRE1 and DAB2IP in response to ER stress; the interaction requires DAB2IP (By similarity). Interacts with ERN1/IRE1 and TAOK3 in response to ER stress; the interaction may promote TRAF2 phosphorylation (PubMed:11278723). Interacts (via zinc fingers) with DAB2IP (via C-terminus PER domain)in response to TNF-alpha stimulation (PubMed:15310755, PubMed:17389591). Interacts with CASP8AP2/FLASH (By similarity). Interacts with NFATC2IP; the interaction may repress IL-4 production in T cells (By similarity). Interacts with kinase CDK9 (PubMed:9827693). Interacts with sphingosine kinase 1 SPHK1 (PubMed:20577214). Interacts with kinase TNIK (PubMed:10521462). Interacts with TRAFD1 (By similarity). Interacts with DNA phosphodiesterase TDP2 (PubMed:10764746). Interacts with MAVS/IPS1 (PubMed:16153868). Interacts with CARD14 (PubMed:21302310). Interacts with Epstein-Barr virus LMP1/BNFL1 (PubMed:10411888). Interacts with GPS2 (By similarity). Interacts with XPNPEP3 (PubMed:25609706). Interacts with RIPK3 (PubMed:29883609). Interacts with RELL2 (PubMed:19969290). Interacts with LRRC19 (PubMed:25026888). Interacts with GAPDH; promoting TRAF2 ubiquitination (PubMed:23332158).</text>
</comment>
<comment type="interaction">
    <interactant intactId="EBI-355744">
        <id>Q12933</id>
    </interactant>
    <interactant intactId="EBI-740884">
        <id>Q9NRN7</id>
        <label>AASDHPPT</label>
    </interactant>
    <organismsDiffer>false</organismsDiffer>
    <experiments>7</experiments>
</comment>
<comment type="interaction">
    <interactant intactId="EBI-355744">
        <id>Q12933</id>
    </interactant>
    <interactant intactId="EBI-395282">
        <id>Q9UHB7</id>
        <label>AFF4</label>
    </interactant>
    <organismsDiffer>false</organismsDiffer>
    <experiments>3</experiments>
</comment>
<comment type="interaction">
    <interactant intactId="EBI-355744">
        <id>Q12933</id>
    </interactant>
    <interactant intactId="EBI-10261324">
        <id>Q9UHB7-2</id>
        <label>AFF4</label>
    </interactant>
    <organismsDiffer>false</organismsDiffer>
    <experiments>3</experiments>
</comment>
<comment type="interaction">
    <interactant intactId="EBI-355744">
        <id>Q12933</id>
    </interactant>
    <interactant intactId="EBI-712648">
        <id>O95994</id>
        <label>AGR2</label>
    </interactant>
    <organismsDiffer>false</organismsDiffer>
    <experiments>3</experiments>
</comment>
<comment type="interaction">
    <interactant intactId="EBI-355744">
        <id>Q12933</id>
    </interactant>
    <interactant intactId="EBI-17190479">
        <id>C9JRZ8-2</id>
        <label>AKR1B15</label>
    </interactant>
    <organismsDiffer>false</organismsDiffer>
    <experiments>3</experiments>
</comment>
<comment type="interaction">
    <interactant intactId="EBI-355744">
        <id>Q12933</id>
    </interactant>
    <interactant intactId="EBI-10187270">
        <id>Q9Y2J4-4</id>
        <label>AMOTL2</label>
    </interactant>
    <organismsDiffer>false</organismsDiffer>
    <experiments>3</experiments>
</comment>
<comment type="interaction">
    <interactant intactId="EBI-355744">
        <id>Q12933</id>
    </interactant>
    <interactant intactId="EBI-17183751">
        <id>X5D778</id>
        <label>ANKRD11</label>
    </interactant>
    <organismsDiffer>false</organismsDiffer>
    <experiments>4</experiments>
</comment>
<comment type="interaction">
    <interactant intactId="EBI-355744">
        <id>Q12933</id>
    </interactant>
    <interactant intactId="EBI-744859">
        <id>Q96IX9</id>
        <label>ANKRD36BP1</label>
    </interactant>
    <organismsDiffer>false</organismsDiffer>
    <experiments>4</experiments>
</comment>
<comment type="interaction">
    <interactant intactId="EBI-355744">
        <id>Q12933</id>
    </interactant>
    <interactant intactId="EBI-741243">
        <id>Q9UKG1</id>
        <label>APPL1</label>
    </interactant>
    <organismsDiffer>false</organismsDiffer>
    <experiments>3</experiments>
</comment>
<comment type="interaction">
    <interactant intactId="EBI-355744">
        <id>Q12933</id>
    </interactant>
    <interactant intactId="EBI-745213">
        <id>P29972</id>
        <label>AQP1</label>
    </interactant>
    <organismsDiffer>false</organismsDiffer>
    <experiments>3</experiments>
</comment>
<comment type="interaction">
    <interactant intactId="EBI-355744">
        <id>Q12933</id>
    </interactant>
    <interactant intactId="EBI-1642523">
        <id>Q15052</id>
        <label>ARHGEF6</label>
    </interactant>
    <organismsDiffer>false</organismsDiffer>
    <experiments>3</experiments>
</comment>
<comment type="interaction">
    <interactant intactId="EBI-355744">
        <id>Q12933</id>
    </interactant>
    <interactant intactId="EBI-10266832">
        <id>Q8N5N6</id>
        <label>ARSJ</label>
    </interactant>
    <organismsDiffer>false</organismsDiffer>
    <experiments>3</experiments>
</comment>
<comment type="interaction">
    <interactant intactId="EBI-355744">
        <id>Q12933</id>
    </interactant>
    <interactant intactId="EBI-10268317">
        <id>Q8N9N2</id>
        <label>ASCC1</label>
    </interactant>
    <organismsDiffer>false</organismsDiffer>
    <experiments>3</experiments>
</comment>
<comment type="interaction">
    <interactant intactId="EBI-355744">
        <id>Q12933</id>
    </interactant>
    <interactant intactId="EBI-10962548">
        <id>Q8N9N2-2</id>
        <label>ASCC1</label>
    </interactant>
    <organismsDiffer>false</organismsDiffer>
    <experiments>3</experiments>
</comment>
<comment type="interaction">
    <interactant intactId="EBI-355744">
        <id>Q12933</id>
    </interactant>
    <interactant intactId="EBI-745689">
        <id>Q7L5A3</id>
        <label>ATOSB</label>
    </interactant>
    <organismsDiffer>false</organismsDiffer>
    <experiments>3</experiments>
</comment>
<comment type="interaction">
    <interactant intactId="EBI-355744">
        <id>Q12933</id>
    </interactant>
    <interactant intactId="EBI-930964">
        <id>P54253</id>
        <label>ATXN1</label>
    </interactant>
    <organismsDiffer>false</organismsDiffer>
    <experiments>14</experiments>
</comment>
<comment type="interaction">
    <interactant intactId="EBI-355744">
        <id>Q12933</id>
    </interactant>
    <interactant intactId="EBI-710484">
        <id>O15169</id>
        <label>AXIN1</label>
    </interactant>
    <organismsDiffer>false</organismsDiffer>
    <experiments>3</experiments>
</comment>
<comment type="interaction">
    <interactant intactId="EBI-355744">
        <id>Q12933</id>
    </interactant>
    <interactant intactId="EBI-742750">
        <id>Q8TBE0</id>
        <label>BAHD1</label>
    </interactant>
    <organismsDiffer>false</organismsDiffer>
    <experiments>4</experiments>
</comment>
<comment type="interaction">
    <interactant intactId="EBI-355744">
        <id>Q12933</id>
    </interactant>
    <interactant intactId="EBI-16429313">
        <id>B4DE54</id>
        <label>BANP</label>
    </interactant>
    <organismsDiffer>false</organismsDiffer>
    <experiments>3</experiments>
</comment>
<comment type="interaction">
    <interactant intactId="EBI-355744">
        <id>Q12933</id>
    </interactant>
    <interactant intactId="EBI-744695">
        <id>Q8N9N5</id>
        <label>BANP</label>
    </interactant>
    <organismsDiffer>false</organismsDiffer>
    <experiments>4</experiments>
</comment>
<comment type="interaction">
    <interactant intactId="EBI-355744">
        <id>Q12933</id>
    </interactant>
    <interactant intactId="EBI-11524452">
        <id>Q8N9N5-2</id>
        <label>BANP</label>
    </interactant>
    <organismsDiffer>false</organismsDiffer>
    <experiments>3</experiments>
</comment>
<comment type="interaction">
    <interactant intactId="EBI-355744">
        <id>Q12933</id>
    </interactant>
    <interactant intactId="EBI-16429296">
        <id>Q8N9N5-7</id>
        <label>BANP</label>
    </interactant>
    <organismsDiffer>false</organismsDiffer>
    <experiments>3</experiments>
</comment>
<comment type="interaction">
    <interactant intactId="EBI-355744">
        <id>Q12933</id>
    </interactant>
    <interactant intactId="EBI-741542">
        <id>Q9UIF8</id>
        <label>BAZ2B</label>
    </interactant>
    <organismsDiffer>false</organismsDiffer>
    <experiments>3</experiments>
</comment>
<comment type="interaction">
    <interactant intactId="EBI-355744">
        <id>Q12933</id>
    </interactant>
    <interactant intactId="EBI-958922">
        <id>O95999</id>
        <label>BCL10</label>
    </interactant>
    <organismsDiffer>false</organismsDiffer>
    <experiments>11</experiments>
</comment>
<comment type="interaction">
    <interactant intactId="EBI-355744">
        <id>Q12933</id>
    </interactant>
    <interactant intactId="EBI-765407">
        <id>P41182</id>
        <label>BCL6</label>
    </interactant>
    <organismsDiffer>false</organismsDiffer>
    <experiments>3</experiments>
</comment>
<comment type="interaction">
    <interactant intactId="EBI-355744">
        <id>Q12933</id>
    </interactant>
    <interactant intactId="EBI-745073">
        <id>Q9BXY8</id>
        <label>BEX2</label>
    </interactant>
    <organismsDiffer>false</organismsDiffer>
    <experiments>6</experiments>
</comment>
<comment type="interaction">
    <interactant intactId="EBI-355744">
        <id>Q12933</id>
    </interactant>
    <interactant intactId="EBI-514538">
        <id>Q13490</id>
        <label>BIRC2</label>
    </interactant>
    <organismsDiffer>false</organismsDiffer>
    <experiments>19</experiments>
</comment>
<comment type="interaction">
    <interactant intactId="EBI-355744">
        <id>Q12933</id>
    </interactant>
    <interactant intactId="EBI-517709">
        <id>Q13489</id>
        <label>BIRC3</label>
    </interactant>
    <organismsDiffer>false</organismsDiffer>
    <experiments>8</experiments>
</comment>
<comment type="interaction">
    <interactant intactId="EBI-355744">
        <id>Q12933</id>
    </interactant>
    <interactant intactId="EBI-12118438">
        <id>Q8IYS8</id>
        <label>BOD1L2</label>
    </interactant>
    <organismsDiffer>false</organismsDiffer>
    <experiments>3</experiments>
</comment>
<comment type="interaction">
    <interactant intactId="EBI-355744">
        <id>Q12933</id>
    </interactant>
    <interactant intactId="EBI-358049">
        <id>Q13895</id>
        <label>BYSL</label>
    </interactant>
    <organismsDiffer>false</organismsDiffer>
    <experiments>3</experiments>
</comment>
<comment type="interaction">
    <interactant intactId="EBI-355744">
        <id>Q12933</id>
    </interactant>
    <interactant intactId="EBI-12030460">
        <id>Q8WYQ4-2</id>
        <label>C22orf15</label>
    </interactant>
    <organismsDiffer>false</organismsDiffer>
    <experiments>3</experiments>
</comment>
<comment type="interaction">
    <interactant intactId="EBI-355744">
        <id>Q12933</id>
    </interactant>
    <interactant intactId="EBI-739879">
        <id>Q53TS8</id>
        <label>C2CD6</label>
    </interactant>
    <organismsDiffer>false</organismsDiffer>
    <experiments>3</experiments>
</comment>
<comment type="interaction">
    <interactant intactId="EBI-355744">
        <id>Q12933</id>
    </interactant>
    <interactant intactId="EBI-6149008">
        <id>O75808</id>
        <label>CAPN15</label>
    </interactant>
    <organismsDiffer>false</organismsDiffer>
    <experiments>3</experiments>
</comment>
<comment type="interaction">
    <interactant intactId="EBI-355744">
        <id>Q12933</id>
    </interactant>
    <interactant intactId="EBI-744545">
        <id>Q8NEC5</id>
        <label>CATSPER1</label>
    </interactant>
    <organismsDiffer>false</organismsDiffer>
    <experiments>3</experiments>
</comment>
<comment type="interaction">
    <interactant intactId="EBI-355744">
        <id>Q12933</id>
    </interactant>
    <interactant intactId="EBI-712912">
        <id>Q9HC52</id>
        <label>CBX8</label>
    </interactant>
    <organismsDiffer>false</organismsDiffer>
    <experiments>6</experiments>
</comment>
<comment type="interaction">
    <interactant intactId="EBI-355744">
        <id>Q12933</id>
    </interactant>
    <interactant intactId="EBI-11748295">
        <id>E9PSE9</id>
        <label>CCDC198</label>
    </interactant>
    <organismsDiffer>false</organismsDiffer>
    <experiments>3</experiments>
</comment>
<comment type="interaction">
    <interactant intactId="EBI-355744">
        <id>Q12933</id>
    </interactant>
    <interactant intactId="EBI-10238351">
        <id>Q9NVL8</id>
        <label>CCDC198</label>
    </interactant>
    <organismsDiffer>false</organismsDiffer>
    <experiments>3</experiments>
</comment>
<comment type="interaction">
    <interactant intactId="EBI-355744">
        <id>Q12933</id>
    </interactant>
    <interactant intactId="EBI-10175300">
        <id>Q8TD31-3</id>
        <label>CCHCR1</label>
    </interactant>
    <organismsDiffer>false</organismsDiffer>
    <experiments>8</experiments>
</comment>
<comment type="interaction">
    <interactant intactId="EBI-355744">
        <id>Q12933</id>
    </interactant>
    <interactant intactId="EBI-21668062">
        <id>Q8IV13</id>
        <label>CCNJL</label>
    </interactant>
    <organismsDiffer>false</organismsDiffer>
    <experiments>3</experiments>
</comment>
<comment type="interaction">
    <interactant intactId="EBI-355744">
        <id>Q12933</id>
    </interactant>
    <interactant intactId="EBI-520729">
        <id>P26842</id>
        <label>CD27</label>
    </interactant>
    <organismsDiffer>false</organismsDiffer>
    <experiments>3</experiments>
</comment>
<comment type="interaction">
    <interactant intactId="EBI-355744">
        <id>Q12933</id>
    </interactant>
    <interactant intactId="EBI-525714">
        <id>P25942</id>
        <label>CD40</label>
    </interactant>
    <organismsDiffer>false</organismsDiffer>
    <experiments>19</experiments>
</comment>
<comment type="interaction">
    <interactant intactId="EBI-355744">
        <id>Q12933</id>
    </interactant>
    <interactant intactId="EBI-10260504">
        <id>Q86Y33</id>
        <label>CDC20B</label>
    </interactant>
    <organismsDiffer>false</organismsDiffer>
    <experiments>3</experiments>
</comment>
<comment type="interaction">
    <interactant intactId="EBI-355744">
        <id>Q12933</id>
    </interactant>
    <interactant intactId="EBI-11983537">
        <id>Q86Y33-5</id>
        <label>CDC20B</label>
    </interactant>
    <organismsDiffer>false</organismsDiffer>
    <experiments>3</experiments>
</comment>
<comment type="interaction">
    <interactant intactId="EBI-355744">
        <id>Q12933</id>
    </interactant>
    <interactant intactId="EBI-295634">
        <id>Q16543</id>
        <label>CDC37</label>
    </interactant>
    <organismsDiffer>false</organismsDiffer>
    <experiments>3</experiments>
</comment>
<comment type="interaction">
    <interactant intactId="EBI-355744">
        <id>Q12933</id>
    </interactant>
    <interactant intactId="EBI-739534">
        <id>Q99618</id>
        <label>CDCA3</label>
    </interactant>
    <organismsDiffer>false</organismsDiffer>
    <experiments>7</experiments>
</comment>
<comment type="interaction">
    <interactant intactId="EBI-355744">
        <id>Q12933</id>
    </interactant>
    <interactant intactId="EBI-746238">
        <id>Q07002</id>
        <label>CDK18</label>
    </interactant>
    <organismsDiffer>false</organismsDiffer>
    <experiments>3</experiments>
</comment>
<comment type="interaction">
    <interactant intactId="EBI-355744">
        <id>Q12933</id>
    </interactant>
    <interactant intactId="EBI-519280">
        <id>P46527</id>
        <label>CDKN1B</label>
    </interactant>
    <organismsDiffer>false</organismsDiffer>
    <experiments>6</experiments>
</comment>
<comment type="interaction">
    <interactant intactId="EBI-355744">
        <id>Q12933</id>
    </interactant>
    <interactant intactId="EBI-10181988">
        <id>Q8IYX8-2</id>
        <label>CEP57L1</label>
    </interactant>
    <organismsDiffer>false</organismsDiffer>
    <experiments>3</experiments>
</comment>
<comment type="interaction">
    <interactant intactId="EBI-355744">
        <id>Q12933</id>
    </interactant>
    <interactant intactId="EBI-2321769">
        <id>Q9Y6H1</id>
        <label>CHCHD2</label>
    </interactant>
    <organismsDiffer>false</organismsDiffer>
    <experiments>3</experiments>
</comment>
<comment type="interaction">
    <interactant intactId="EBI-355744">
        <id>Q12933</id>
    </interactant>
    <interactant intactId="EBI-11980535">
        <id>P51800-3</id>
        <label>CLCNKA</label>
    </interactant>
    <organismsDiffer>false</organismsDiffer>
    <experiments>3</experiments>
</comment>
<comment type="interaction">
    <interactant intactId="EBI-355744">
        <id>Q12933</id>
    </interactant>
    <interactant intactId="EBI-10192698">
        <id>Q02930-3</id>
        <label>CREB5</label>
    </interactant>
    <organismsDiffer>false</organismsDiffer>
    <experiments>6</experiments>
</comment>
<comment type="interaction">
    <interactant intactId="EBI-355744">
        <id>Q12933</id>
    </interactant>
    <interactant intactId="EBI-2212355">
        <id>Q49AN0</id>
        <label>CRY2</label>
    </interactant>
    <organismsDiffer>false</organismsDiffer>
    <experiments>3</experiments>
</comment>
<comment type="interaction">
    <interactant intactId="EBI-355744">
        <id>Q12933</id>
    </interactant>
    <interactant intactId="EBI-750444">
        <id>P53672</id>
        <label>CRYBA2</label>
    </interactant>
    <organismsDiffer>false</organismsDiffer>
    <experiments>3</experiments>
</comment>
<comment type="interaction">
    <interactant intactId="EBI-355744">
        <id>Q12933</id>
    </interactant>
    <interactant intactId="EBI-932887">
        <id>P49711</id>
        <label>CTCF</label>
    </interactant>
    <organismsDiffer>false</organismsDiffer>
    <experiments>3</experiments>
</comment>
<comment type="interaction">
    <interactant intactId="EBI-355744">
        <id>Q12933</id>
    </interactant>
    <interactant intactId="EBI-5453285">
        <id>Q2TBE0</id>
        <label>CWF19L2</label>
    </interactant>
    <organismsDiffer>false</organismsDiffer>
    <experiments>3</experiments>
</comment>
<comment type="interaction">
    <interactant intactId="EBI-355744">
        <id>Q12933</id>
    </interactant>
    <interactant intactId="EBI-744761">
        <id>Q6BCY4</id>
        <label>CYB5R2</label>
    </interactant>
    <organismsDiffer>false</organismsDiffer>
    <experiments>3</experiments>
</comment>
<comment type="interaction">
    <interactant intactId="EBI-355744">
        <id>Q12933</id>
    </interactant>
    <interactant intactId="EBI-12102608">
        <id>Q6BCY4-2</id>
        <label>CYB5R2</label>
    </interactant>
    <organismsDiffer>false</organismsDiffer>
    <experiments>3</experiments>
</comment>
<comment type="interaction">
    <interactant intactId="EBI-355744">
        <id>Q12933</id>
    </interactant>
    <interactant intactId="EBI-748248">
        <id>Q8WTU0</id>
        <label>DDI1</label>
    </interactant>
    <organismsDiffer>false</organismsDiffer>
    <experiments>3</experiments>
</comment>
<comment type="interaction">
    <interactant intactId="EBI-355744">
        <id>Q12933</id>
    </interactant>
    <interactant intactId="EBI-351257">
        <id>P26196</id>
        <label>DDX6</label>
    </interactant>
    <organismsDiffer>false</organismsDiffer>
    <experiments>3</experiments>
</comment>
<comment type="interaction">
    <interactant intactId="EBI-355744">
        <id>Q12933</id>
    </interactant>
    <interactant intactId="EBI-715275">
        <id>Q08495</id>
        <label>DMTN</label>
    </interactant>
    <organismsDiffer>false</organismsDiffer>
    <experiments>3</experiments>
</comment>
<comment type="interaction">
    <interactant intactId="EBI-355744">
        <id>Q12933</id>
    </interactant>
    <interactant intactId="EBI-740402">
        <id>O60941</id>
        <label>DTNB</label>
    </interactant>
    <organismsDiffer>false</organismsDiffer>
    <experiments>5</experiments>
</comment>
<comment type="interaction">
    <interactant intactId="EBI-355744">
        <id>Q12933</id>
    </interactant>
    <interactant intactId="EBI-11984733">
        <id>O60941-5</id>
        <label>DTNB</label>
    </interactant>
    <organismsDiffer>false</organismsDiffer>
    <experiments>3</experiments>
</comment>
<comment type="interaction">
    <interactant intactId="EBI-355744">
        <id>Q12933</id>
    </interactant>
    <interactant intactId="EBI-739789">
        <id>Q92997</id>
        <label>DVL3</label>
    </interactant>
    <organismsDiffer>false</organismsDiffer>
    <experiments>3</experiments>
</comment>
<comment type="interaction">
    <interactant intactId="EBI-355744">
        <id>Q12933</id>
    </interactant>
    <interactant intactId="EBI-1053596">
        <id>Q13627</id>
        <label>DYRK1A</label>
    </interactant>
    <organismsDiffer>false</organismsDiffer>
    <experiments>3</experiments>
</comment>
<comment type="interaction">
    <interactant intactId="EBI-355744">
        <id>Q12933</id>
    </interactant>
    <interactant intactId="EBI-769261">
        <id>Q96JC9</id>
        <label>EAF1</label>
    </interactant>
    <organismsDiffer>false</organismsDiffer>
    <experiments>3</experiments>
</comment>
<comment type="interaction">
    <interactant intactId="EBI-355744">
        <id>Q12933</id>
    </interactant>
    <interactant intactId="EBI-12267154">
        <id>Q9HAK2</id>
        <label>EBF2</label>
    </interactant>
    <organismsDiffer>false</organismsDiffer>
    <experiments>3</experiments>
</comment>
<comment type="interaction">
    <interactant intactId="EBI-355744">
        <id>Q12933</id>
    </interactant>
    <interactant intactId="EBI-2949647">
        <id>Q8WWZ3</id>
        <label>EDARADD</label>
    </interactant>
    <organismsDiffer>false</organismsDiffer>
    <experiments>5</experiments>
</comment>
<comment type="interaction">
    <interactant intactId="EBI-355744">
        <id>Q12933</id>
    </interactant>
    <interactant intactId="EBI-16434097">
        <id>A0A0S2Z3V1</id>
        <label>EFEMP1</label>
    </interactant>
    <organismsDiffer>false</organismsDiffer>
    <experiments>3</experiments>
</comment>
<comment type="interaction">
    <interactant intactId="EBI-355744">
        <id>Q12933</id>
    </interactant>
    <interactant intactId="EBI-536772">
        <id>Q12805</id>
        <label>EFEMP1</label>
    </interactant>
    <organismsDiffer>false</organismsDiffer>
    <experiments>12</experiments>
</comment>
<comment type="interaction">
    <interactant intactId="EBI-355744">
        <id>Q12933</id>
    </interactant>
    <interactant intactId="EBI-743105">
        <id>Q5JVL4</id>
        <label>EFHC1</label>
    </interactant>
    <organismsDiffer>false</organismsDiffer>
    <experiments>6</experiments>
</comment>
<comment type="interaction">
    <interactant intactId="EBI-355744">
        <id>Q12933</id>
    </interactant>
    <interactant intactId="EBI-297353">
        <id>P00533</id>
        <label>EGFR</label>
    </interactant>
    <organismsDiffer>false</organismsDiffer>
    <experiments>4</experiments>
</comment>
<comment type="interaction">
    <interactant intactId="EBI-355744">
        <id>Q12933</id>
    </interactant>
    <interactant intactId="EBI-2339219">
        <id>Q08426</id>
        <label>EHHADH</label>
    </interactant>
    <organismsDiffer>false</organismsDiffer>
    <experiments>3</experiments>
</comment>
<comment type="interaction">
    <interactant intactId="EBI-355744">
        <id>Q12933</id>
    </interactant>
    <interactant intactId="EBI-744099">
        <id>Q9H0I2</id>
        <label>ENKD1</label>
    </interactant>
    <organismsDiffer>false</organismsDiffer>
    <experiments>7</experiments>
</comment>
<comment type="interaction">
    <interactant intactId="EBI-355744">
        <id>Q12933</id>
    </interactant>
    <interactant intactId="EBI-12089140">
        <id>A0A0A0MR80</id>
        <label>EP400</label>
    </interactant>
    <organismsDiffer>false</organismsDiffer>
    <experiments>3</experiments>
</comment>
<comment type="interaction">
    <interactant intactId="EBI-355744">
        <id>Q12933</id>
    </interactant>
    <interactant intactId="EBI-371750">
        <id>O75460</id>
        <label>ERN1</label>
    </interactant>
    <organismsDiffer>false</organismsDiffer>
    <experiments>3</experiments>
</comment>
<comment type="interaction">
    <interactant intactId="EBI-355744">
        <id>Q12933</id>
    </interactant>
    <interactant intactId="EBI-16434659">
        <id>A0A0S2Z3N6</id>
        <label>ETV6</label>
    </interactant>
    <organismsDiffer>false</organismsDiffer>
    <experiments>3</experiments>
</comment>
<comment type="interaction">
    <interactant intactId="EBI-355744">
        <id>Q12933</id>
    </interactant>
    <interactant intactId="EBI-739737">
        <id>Q01844</id>
        <label>EWSR1</label>
    </interactant>
    <organismsDiffer>false</organismsDiffer>
    <experiments>3</experiments>
</comment>
<comment type="interaction">
    <interactant intactId="EBI-355744">
        <id>Q12933</id>
    </interactant>
    <interactant intactId="EBI-749333">
        <id>Q8N2X6</id>
        <label>EXOC3-AS1</label>
    </interactant>
    <organismsDiffer>false</organismsDiffer>
    <experiments>4</experiments>
</comment>
<comment type="interaction">
    <interactant intactId="EBI-355744">
        <id>Q12933</id>
    </interactant>
    <interactant intactId="EBI-11977223">
        <id>O95990-4</id>
        <label>FAM107A</label>
    </interactant>
    <organismsDiffer>false</organismsDiffer>
    <experiments>3</experiments>
</comment>
<comment type="interaction">
    <interactant intactId="EBI-355744">
        <id>Q12933</id>
    </interactant>
    <interactant intactId="EBI-739883">
        <id>Q96EK7</id>
        <label>FAM120B</label>
    </interactant>
    <organismsDiffer>false</organismsDiffer>
    <experiments>4</experiments>
</comment>
<comment type="interaction">
    <interactant intactId="EBI-355744">
        <id>Q12933</id>
    </interactant>
    <interactant intactId="EBI-11986315">
        <id>Q9H5Z6-2</id>
        <label>FAM124B</label>
    </interactant>
    <organismsDiffer>false</organismsDiffer>
    <experiments>3</experiments>
</comment>
<comment type="interaction">
    <interactant intactId="EBI-355744">
        <id>Q12933</id>
    </interactant>
    <interactant intactId="EBI-719941">
        <id>Q3B820</id>
        <label>FAM161A</label>
    </interactant>
    <organismsDiffer>false</organismsDiffer>
    <experiments>3</experiments>
</comment>
<comment type="interaction">
    <interactant intactId="EBI-355744">
        <id>Q12933</id>
    </interactant>
    <interactant intactId="EBI-7225287">
        <id>Q96MY7</id>
        <label>FAM161B</label>
    </interactant>
    <organismsDiffer>false</organismsDiffer>
    <experiments>3</experiments>
</comment>
<comment type="interaction">
    <interactant intactId="EBI-355744">
        <id>Q12933</id>
    </interactant>
    <interactant intactId="EBI-742802">
        <id>Q9Y247</id>
        <label>FAM50B</label>
    </interactant>
    <organismsDiffer>false</organismsDiffer>
    <experiments>3</experiments>
</comment>
<comment type="interaction">
    <interactant intactId="EBI-355744">
        <id>Q12933</id>
    </interactant>
    <interactant intactId="EBI-6658203">
        <id>Q86YD7</id>
        <label>FAM90A1</label>
    </interactant>
    <organismsDiffer>false</organismsDiffer>
    <experiments>6</experiments>
</comment>
<comment type="interaction">
    <interactant intactId="EBI-355744">
        <id>Q12933</id>
    </interactant>
    <interactant intactId="EBI-8468186">
        <id>Q8IZU1</id>
        <label>FAM9A</label>
    </interactant>
    <organismsDiffer>false</organismsDiffer>
    <experiments>3</experiments>
</comment>
<comment type="interaction">
    <interactant intactId="EBI-355744">
        <id>Q12933</id>
    </interactant>
    <interactant intactId="EBI-2513774">
        <id>O95363</id>
        <label>FARS2</label>
    </interactant>
    <organismsDiffer>false</organismsDiffer>
    <experiments>3</experiments>
</comment>
<comment type="interaction">
    <interactant intactId="EBI-355744">
        <id>Q12933</id>
    </interactant>
    <interactant intactId="EBI-740282">
        <id>Q9NVF7</id>
        <label>FBXO28</label>
    </interactant>
    <organismsDiffer>false</organismsDiffer>
    <experiments>9</experiments>
</comment>
<comment type="interaction">
    <interactant intactId="EBI-355744">
        <id>Q12933</id>
    </interactant>
    <interactant intactId="EBI-10297077">
        <id>Q9BRP7</id>
        <label>FDXACB1</label>
    </interactant>
    <organismsDiffer>false</organismsDiffer>
    <experiments>6</experiments>
</comment>
<comment type="interaction">
    <interactant intactId="EBI-355744">
        <id>Q12933</id>
    </interactant>
    <interactant intactId="EBI-719415">
        <id>Q4VC44</id>
        <label>FLYWCH1</label>
    </interactant>
    <organismsDiffer>false</organismsDiffer>
    <experiments>3</experiments>
</comment>
<comment type="interaction">
    <interactant intactId="EBI-355744">
        <id>Q12933</id>
    </interactant>
    <interactant intactId="EBI-10242151">
        <id>Q53EP0-3</id>
        <label>FNDC3B</label>
    </interactant>
    <organismsDiffer>false</organismsDiffer>
    <experiments>3</experiments>
</comment>
<comment type="interaction">
    <interactant intactId="EBI-355744">
        <id>Q12933</id>
    </interactant>
    <interactant intactId="EBI-11319000">
        <id>O15353</id>
        <label>FOXN1</label>
    </interactant>
    <organismsDiffer>false</organismsDiffer>
    <experiments>3</experiments>
</comment>
<comment type="interaction">
    <interactant intactId="EBI-355744">
        <id>Q12933</id>
    </interactant>
    <interactant intactId="EBI-618165">
        <id>Q06547</id>
        <label>GABPB1</label>
    </interactant>
    <organismsDiffer>false</organismsDiffer>
    <experiments>7</experiments>
</comment>
<comment type="interaction">
    <interactant intactId="EBI-355744">
        <id>Q12933</id>
    </interactant>
    <interactant intactId="EBI-7960826">
        <id>Q8NHY3</id>
        <label>GAS2L2</label>
    </interactant>
    <organismsDiffer>false</organismsDiffer>
    <experiments>3</experiments>
</comment>
<comment type="interaction">
    <interactant intactId="EBI-355744">
        <id>Q12933</id>
    </interactant>
    <interactant intactId="EBI-1052570">
        <id>O95995</id>
        <label>GAS8</label>
    </interactant>
    <organismsDiffer>false</organismsDiffer>
    <experiments>3</experiments>
</comment>
<comment type="interaction">
    <interactant intactId="EBI-355744">
        <id>Q12933</id>
    </interactant>
    <interactant intactId="EBI-947242">
        <id>P28676</id>
        <label>GCA</label>
    </interactant>
    <organismsDiffer>false</organismsDiffer>
    <experiments>3</experiments>
</comment>
<comment type="interaction">
    <interactant intactId="EBI-355744">
        <id>Q12933</id>
    </interactant>
    <interactant intactId="EBI-744104">
        <id>P55040</id>
        <label>GEM</label>
    </interactant>
    <organismsDiffer>false</organismsDiffer>
    <experiments>3</experiments>
</comment>
<comment type="interaction">
    <interactant intactId="EBI-355744">
        <id>Q12933</id>
    </interactant>
    <interactant intactId="EBI-739467">
        <id>Q9H8Y8</id>
        <label>GORASP2</label>
    </interactant>
    <organismsDiffer>false</organismsDiffer>
    <experiments>8</experiments>
</comment>
<comment type="interaction">
    <interactant intactId="EBI-355744">
        <id>Q12933</id>
    </interactant>
    <interactant intactId="EBI-751540">
        <id>O95872</id>
        <label>GPANK1</label>
    </interactant>
    <organismsDiffer>false</organismsDiffer>
    <experiments>3</experiments>
</comment>
<comment type="interaction">
    <interactant intactId="EBI-355744">
        <id>Q12933</id>
    </interactant>
    <interactant intactId="EBI-746309">
        <id>Q92917</id>
        <label>GPKOW</label>
    </interactant>
    <organismsDiffer>false</organismsDiffer>
    <experiments>7</experiments>
</comment>
<comment type="interaction">
    <interactant intactId="EBI-355744">
        <id>Q12933</id>
    </interactant>
    <interactant intactId="EBI-717919">
        <id>Q4V328</id>
        <label>GRIPAP1</label>
    </interactant>
    <organismsDiffer>false</organismsDiffer>
    <experiments>3</experiments>
</comment>
<comment type="interaction">
    <interactant intactId="EBI-355744">
        <id>Q12933</id>
    </interactant>
    <interactant intactId="EBI-372619">
        <id>Q14687</id>
        <label>GSE1</label>
    </interactant>
    <organismsDiffer>false</organismsDiffer>
    <experiments>3</experiments>
</comment>
<comment type="interaction">
    <interactant intactId="EBI-355744">
        <id>Q12933</id>
    </interactant>
    <interactant intactId="EBI-10239244">
        <id>Q2KHT4</id>
        <label>GSG1</label>
    </interactant>
    <organismsDiffer>false</organismsDiffer>
    <experiments>3</experiments>
</comment>
<comment type="interaction">
    <interactant intactId="EBI-355744">
        <id>Q12933</id>
    </interactant>
    <interactant intactId="EBI-353467">
        <id>P09211</id>
        <label>GSTP1</label>
    </interactant>
    <organismsDiffer>false</organismsDiffer>
    <experiments>5</experiments>
</comment>
<comment type="interaction">
    <interactant intactId="EBI-355744">
        <id>Q12933</id>
    </interactant>
    <interactant intactId="EBI-748043">
        <id>O43708</id>
        <label>GSTZ1</label>
    </interactant>
    <organismsDiffer>false</organismsDiffer>
    <experiments>3</experiments>
</comment>
<comment type="interaction">
    <interactant intactId="EBI-355744">
        <id>Q12933</id>
    </interactant>
    <interactant intactId="EBI-12805802">
        <id>Q6B0K9</id>
        <label>HBM</label>
    </interactant>
    <organismsDiffer>false</organismsDiffer>
    <experiments>3</experiments>
</comment>
<comment type="interaction">
    <interactant intactId="EBI-355744">
        <id>Q12933</id>
    </interactant>
    <interactant intactId="EBI-9675710">
        <id>Q5T8I9</id>
        <label>HENMT1</label>
    </interactant>
    <organismsDiffer>false</organismsDiffer>
    <experiments>3</experiments>
</comment>
<comment type="interaction">
    <interactant intactId="EBI-355744">
        <id>Q12933</id>
    </interactant>
    <interactant intactId="EBI-740785">
        <id>P49639</id>
        <label>HOXA1</label>
    </interactant>
    <organismsDiffer>false</organismsDiffer>
    <experiments>3</experiments>
</comment>
<comment type="interaction">
    <interactant intactId="EBI-355744">
        <id>Q12933</id>
    </interactant>
    <interactant intactId="EBI-3893317">
        <id>P09067</id>
        <label>HOXB5</label>
    </interactant>
    <organismsDiffer>false</organismsDiffer>
    <experiments>3</experiments>
</comment>
<comment type="interaction">
    <interactant intactId="EBI-355744">
        <id>Q12933</id>
    </interactant>
    <interactant intactId="EBI-10291310">
        <id>Q96MM6</id>
        <label>HSPA12B</label>
    </interactant>
    <organismsDiffer>false</organismsDiffer>
    <experiments>3</experiments>
</comment>
<comment type="interaction">
    <interactant intactId="EBI-355744">
        <id>Q12933</id>
    </interactant>
    <interactant intactId="EBI-466029">
        <id>P42858</id>
        <label>HTT</label>
    </interactant>
    <organismsDiffer>false</organismsDiffer>
    <experiments>3</experiments>
</comment>
<comment type="interaction">
    <interactant intactId="EBI-355744">
        <id>Q12933</id>
    </interactant>
    <interactant intactId="EBI-353389">
        <id>P12268</id>
        <label>IMPDH2</label>
    </interactant>
    <organismsDiffer>false</organismsDiffer>
    <experiments>3</experiments>
</comment>
<comment type="interaction">
    <interactant intactId="EBI-355744">
        <id>Q12933</id>
    </interactant>
    <interactant intactId="EBI-715611">
        <id>Q9C086</id>
        <label>INO80B</label>
    </interactant>
    <organismsDiffer>false</organismsDiffer>
    <experiments>3</experiments>
</comment>
<comment type="interaction">
    <interactant intactId="EBI-355744">
        <id>Q12933</id>
    </interactant>
    <interactant intactId="EBI-10990676">
        <id>Q96PC2</id>
        <label>IP6K3</label>
    </interactant>
    <organismsDiffer>false</organismsDiffer>
    <experiments>3</experiments>
</comment>
<comment type="interaction">
    <interactant intactId="EBI-355744">
        <id>Q12933</id>
    </interactant>
    <interactant intactId="EBI-10220600">
        <id>Q8NA54</id>
        <label>IQUB</label>
    </interactant>
    <organismsDiffer>false</organismsDiffer>
    <experiments>3</experiments>
</comment>
<comment type="interaction">
    <interactant intactId="EBI-355744">
        <id>Q12933</id>
    </interactant>
    <interactant intactId="EBI-12337095">
        <id>Q6GPH6-2</id>
        <label>ITPRIPL1</label>
    </interactant>
    <organismsDiffer>false</organismsDiffer>
    <experiments>3</experiments>
</comment>
<comment type="interaction">
    <interactant intactId="EBI-355744">
        <id>Q12933</id>
    </interactant>
    <interactant intactId="EBI-2556193">
        <id>Q63ZY3</id>
        <label>KANK2</label>
    </interactant>
    <organismsDiffer>false</organismsDiffer>
    <experiments>3</experiments>
</comment>
<comment type="interaction">
    <interactant intactId="EBI-355744">
        <id>Q12933</id>
    </interactant>
    <interactant intactId="EBI-10188326">
        <id>Q5T5P2-6</id>
        <label>KIAA1217</label>
    </interactant>
    <organismsDiffer>false</organismsDiffer>
    <experiments>3</experiments>
</comment>
<comment type="interaction">
    <interactant intactId="EBI-355744">
        <id>Q12933</id>
    </interactant>
    <interactant intactId="EBI-2125614">
        <id>Q9BVG8</id>
        <label>KIFC3</label>
    </interactant>
    <organismsDiffer>false</organismsDiffer>
    <experiments>3</experiments>
</comment>
<comment type="interaction">
    <interactant intactId="EBI-355744">
        <id>Q12933</id>
    </interactant>
    <interactant intactId="EBI-14069005">
        <id>Q9BVG8-5</id>
        <label>KIFC3</label>
    </interactant>
    <organismsDiffer>false</organismsDiffer>
    <experiments>3</experiments>
</comment>
<comment type="interaction">
    <interactant intactId="EBI-355744">
        <id>Q12933</id>
    </interactant>
    <interactant intactId="EBI-8472267">
        <id>P57682</id>
        <label>KLF3</label>
    </interactant>
    <organismsDiffer>false</organismsDiffer>
    <experiments>6</experiments>
</comment>
<comment type="interaction">
    <interactant intactId="EBI-355744">
        <id>Q12933</id>
    </interactant>
    <interactant intactId="EBI-726510">
        <id>Q96BZ8</id>
        <label>LENG1</label>
    </interactant>
    <organismsDiffer>false</organismsDiffer>
    <experiments>3</experiments>
</comment>
<comment type="interaction">
    <interactant intactId="EBI-355744">
        <id>Q12933</id>
    </interactant>
    <interactant intactId="EBI-8465536">
        <id>Q86X59</id>
        <label>LINC02875</label>
    </interactant>
    <organismsDiffer>false</organismsDiffer>
    <experiments>3</experiments>
</comment>
<comment type="interaction">
    <interactant intactId="EBI-355744">
        <id>Q12933</id>
    </interactant>
    <interactant intactId="EBI-12028858">
        <id>Q8IXW0</id>
        <label>LMNTD2</label>
    </interactant>
    <organismsDiffer>false</organismsDiffer>
    <experiments>3</experiments>
</comment>
<comment type="interaction">
    <interactant intactId="EBI-355744">
        <id>Q12933</id>
    </interactant>
    <interactant intactId="EBI-739832">
        <id>Q8TBB1</id>
        <label>LNX1</label>
    </interactant>
    <organismsDiffer>false</organismsDiffer>
    <experiments>5</experiments>
</comment>
<comment type="interaction">
    <interactant intactId="EBI-355744">
        <id>Q12933</id>
    </interactant>
    <interactant intactId="EBI-2341787">
        <id>Q17RB8</id>
        <label>LONRF1</label>
    </interactant>
    <organismsDiffer>false</organismsDiffer>
    <experiments>3</experiments>
</comment>
<comment type="interaction">
    <interactant intactId="EBI-355744">
        <id>Q12933</id>
    </interactant>
    <interactant intactId="EBI-2690768">
        <id>Q496Y0</id>
        <label>LONRF3</label>
    </interactant>
    <organismsDiffer>false</organismsDiffer>
    <experiments>3</experiments>
</comment>
<comment type="interaction">
    <interactant intactId="EBI-355744">
        <id>Q12933</id>
    </interactant>
    <interactant intactId="EBI-3509981">
        <id>P36941</id>
        <label>LTBR</label>
    </interactant>
    <organismsDiffer>false</organismsDiffer>
    <experiments>4</experiments>
</comment>
<comment type="interaction">
    <interactant intactId="EBI-355744">
        <id>Q12933</id>
    </interactant>
    <interactant intactId="EBI-10293291">
        <id>Q96S90</id>
        <label>LYSMD1</label>
    </interactant>
    <organismsDiffer>false</organismsDiffer>
    <experiments>3</experiments>
</comment>
<comment type="interaction">
    <interactant intactId="EBI-355744">
        <id>Q12933</id>
    </interactant>
    <interactant intactId="EBI-2868511">
        <id>O75367</id>
        <label>MACROH2A1</label>
    </interactant>
    <organismsDiffer>false</organismsDiffer>
    <experiments>3</experiments>
</comment>
<comment type="interaction">
    <interactant intactId="EBI-355744">
        <id>Q12933</id>
    </interactant>
    <interactant intactId="EBI-358011">
        <id>Q99558</id>
        <label>MAP3K14</label>
    </interactant>
    <organismsDiffer>false</organismsDiffer>
    <experiments>9</experiments>
</comment>
<comment type="interaction">
    <interactant intactId="EBI-355744">
        <id>Q12933</id>
    </interactant>
    <interactant intactId="EBI-476263">
        <id>Q99683</id>
        <label>MAP3K5</label>
    </interactant>
    <organismsDiffer>false</organismsDiffer>
    <experiments>4</experiments>
</comment>
<comment type="interaction">
    <interactant intactId="EBI-355744">
        <id>Q12933</id>
    </interactant>
    <interactant intactId="EBI-995373">
        <id>Q7Z434</id>
        <label>MAVS</label>
    </interactant>
    <organismsDiffer>false</organismsDiffer>
    <experiments>5</experiments>
</comment>
<comment type="interaction">
    <interactant intactId="EBI-355744">
        <id>Q12933</id>
    </interactant>
    <interactant intactId="EBI-1053295">
        <id>Q8N6R0</id>
        <label>METTL13</label>
    </interactant>
    <organismsDiffer>false</organismsDiffer>
    <experiments>3</experiments>
</comment>
<comment type="interaction">
    <interactant intactId="EBI-355744">
        <id>Q12933</id>
    </interactant>
    <interactant intactId="EBI-1048159">
        <id>P55081</id>
        <label>MFAP1</label>
    </interactant>
    <organismsDiffer>false</organismsDiffer>
    <experiments>3</experiments>
</comment>
<comment type="interaction">
    <interactant intactId="EBI-355744">
        <id>Q12933</id>
    </interactant>
    <interactant intactId="EBI-14086479">
        <id>Q8IVT4</id>
        <label>MGC50722</label>
    </interactant>
    <organismsDiffer>false</organismsDiffer>
    <experiments>3</experiments>
</comment>
<comment type="interaction">
    <interactant intactId="EBI-355744">
        <id>Q12933</id>
    </interactant>
    <interactant intactId="EBI-2555085">
        <id>Q8IVT2</id>
        <label>MISP</label>
    </interactant>
    <organismsDiffer>false</organismsDiffer>
    <experiments>3</experiments>
</comment>
<comment type="interaction">
    <interactant intactId="EBI-355744">
        <id>Q12933</id>
    </interactant>
    <interactant intactId="EBI-2340269">
        <id>Q13064</id>
        <label>MKRN3</label>
    </interactant>
    <organismsDiffer>false</organismsDiffer>
    <experiments>3</experiments>
</comment>
<comment type="interaction">
    <interactant intactId="EBI-355744">
        <id>Q12933</id>
    </interactant>
    <interactant intactId="EBI-10288852">
        <id>Q9UBU8-2</id>
        <label>MORF4L1</label>
    </interactant>
    <organismsDiffer>false</organismsDiffer>
    <experiments>3</experiments>
</comment>
<comment type="interaction">
    <interactant intactId="EBI-355744">
        <id>Q12933</id>
    </interactant>
    <interactant intactId="EBI-9675802">
        <id>Q6PF18</id>
        <label>MORN3</label>
    </interactant>
    <organismsDiffer>false</organismsDiffer>
    <experiments>6</experiments>
</comment>
<comment type="interaction">
    <interactant intactId="EBI-355744">
        <id>Q12933</id>
    </interactant>
    <interactant intactId="EBI-1757866">
        <id>P00540</id>
        <label>MOS</label>
    </interactant>
    <organismsDiffer>false</organismsDiffer>
    <experiments>3</experiments>
</comment>
<comment type="interaction">
    <interactant intactId="EBI-355744">
        <id>Q12933</id>
    </interactant>
    <interactant intactId="EBI-9092052">
        <id>Q9Y3D2</id>
        <label>MSRB2</label>
    </interactant>
    <organismsDiffer>false</organismsDiffer>
    <experiments>3</experiments>
</comment>
<comment type="interaction">
    <interactant intactId="EBI-355744">
        <id>Q12933</id>
    </interactant>
    <interactant intactId="EBI-7950783">
        <id>Q96JP2</id>
        <label>MYO15B</label>
    </interactant>
    <organismsDiffer>false</organismsDiffer>
    <experiments>3</experiments>
</comment>
<comment type="interaction">
    <interactant intactId="EBI-355744">
        <id>Q12933</id>
    </interactant>
    <interactant intactId="EBI-8641936">
        <id>Q15742</id>
        <label>NAB2</label>
    </interactant>
    <organismsDiffer>false</organismsDiffer>
    <experiments>3</experiments>
</comment>
<comment type="interaction">
    <interactant intactId="EBI-355744">
        <id>Q12933</id>
    </interactant>
    <interactant intactId="EBI-8656665">
        <id>Q8N6N6</id>
        <label>NATD1</label>
    </interactant>
    <organismsDiffer>false</organismsDiffer>
    <experiments>3</experiments>
</comment>
<comment type="interaction">
    <interactant intactId="EBI-355744">
        <id>Q12933</id>
    </interactant>
    <interactant intactId="EBI-2880203">
        <id>O76041</id>
        <label>NEBL</label>
    </interactant>
    <organismsDiffer>false</organismsDiffer>
    <experiments>7</experiments>
</comment>
<comment type="interaction">
    <interactant intactId="EBI-355744">
        <id>Q12933</id>
    </interactant>
    <interactant intactId="EBI-11746523">
        <id>Q14511-2</id>
        <label>NEDD9</label>
    </interactant>
    <organismsDiffer>false</organismsDiffer>
    <experiments>3</experiments>
</comment>
<comment type="interaction">
    <interactant intactId="EBI-355744">
        <id>Q12933</id>
    </interactant>
    <interactant intactId="EBI-11750983">
        <id>Q9HC98-4</id>
        <label>NEK6</label>
    </interactant>
    <organismsDiffer>false</organismsDiffer>
    <experiments>3</experiments>
</comment>
<comment type="interaction">
    <interactant intactId="EBI-355744">
        <id>Q12933</id>
    </interactant>
    <interactant intactId="EBI-3951858">
        <id>Q16649</id>
        <label>NFIL3</label>
    </interactant>
    <organismsDiffer>false</organismsDiffer>
    <experiments>3</experiments>
</comment>
<comment type="interaction">
    <interactant intactId="EBI-355744">
        <id>Q12933</id>
    </interactant>
    <interactant intactId="EBI-10271199">
        <id>Q8NI38</id>
        <label>NFKBID</label>
    </interactant>
    <organismsDiffer>false</organismsDiffer>
    <experiments>3</experiments>
</comment>
<comment type="interaction">
    <interactant intactId="EBI-355744">
        <id>Q12933</id>
    </interactant>
    <interactant intactId="EBI-2859639">
        <id>Q5HYW2</id>
        <label>NHSL2</label>
    </interactant>
    <organismsDiffer>false</organismsDiffer>
    <experiments>3</experiments>
</comment>
<comment type="interaction">
    <interactant intactId="EBI-355744">
        <id>Q12933</id>
    </interactant>
    <interactant intactId="EBI-10303844">
        <id>Q9GZQ4</id>
        <label>NMUR2</label>
    </interactant>
    <organismsDiffer>false</organismsDiffer>
    <experiments>3</experiments>
</comment>
<comment type="interaction">
    <interactant intactId="EBI-355744">
        <id>Q12933</id>
    </interactant>
    <interactant intactId="EBI-12025760">
        <id>Q86UR1-2</id>
        <label>NOXA1</label>
    </interactant>
    <organismsDiffer>false</organismsDiffer>
    <experiments>3</experiments>
</comment>
<comment type="interaction">
    <interactant intactId="EBI-355744">
        <id>Q12933</id>
    </interactant>
    <interactant intactId="EBI-2547810">
        <id>Q16656</id>
        <label>NRF1</label>
    </interactant>
    <organismsDiffer>false</organismsDiffer>
    <experiments>3</experiments>
</comment>
<comment type="interaction">
    <interactant intactId="EBI-355744">
        <id>Q12933</id>
    </interactant>
    <interactant intactId="EBI-11742836">
        <id>Q16656-4</id>
        <label>NRF1</label>
    </interactant>
    <organismsDiffer>false</organismsDiffer>
    <experiments>3</experiments>
</comment>
<comment type="interaction">
    <interactant intactId="EBI-355744">
        <id>Q12933</id>
    </interactant>
    <interactant intactId="EBI-12028784">
        <id>Q6X4W1-2</id>
        <label>NSMF</label>
    </interactant>
    <organismsDiffer>false</organismsDiffer>
    <experiments>3</experiments>
</comment>
<comment type="interaction">
    <interactant intactId="EBI-355744">
        <id>Q12933</id>
    </interactant>
    <interactant intactId="EBI-2949792">
        <id>Q9BRJ7</id>
        <label>NUDT16L1</label>
    </interactant>
    <organismsDiffer>false</organismsDiffer>
    <experiments>6</experiments>
</comment>
<comment type="interaction">
    <interactant intactId="EBI-355744">
        <id>Q12933</id>
    </interactant>
    <interactant intactId="EBI-2513978">
        <id>Q8N3R9</id>
        <label>PALS1</label>
    </interactant>
    <organismsDiffer>false</organismsDiffer>
    <experiments>3</experiments>
</comment>
<comment type="interaction">
    <interactant intactId="EBI-355744">
        <id>Q12933</id>
    </interactant>
    <interactant intactId="EBI-11022007">
        <id>Q9HBE1-4</id>
        <label>PATZ1</label>
    </interactant>
    <organismsDiffer>false</organismsDiffer>
    <experiments>3</experiments>
</comment>
<comment type="interaction">
    <interactant intactId="EBI-355744">
        <id>Q12933</id>
    </interactant>
    <interactant intactId="EBI-2129767">
        <id>P35227</id>
        <label>PCGF2</label>
    </interactant>
    <organismsDiffer>false</organismsDiffer>
    <experiments>3</experiments>
</comment>
<comment type="interaction">
    <interactant intactId="EBI-355744">
        <id>Q12933</id>
    </interactant>
    <interactant intactId="EBI-2827999">
        <id>Q86SE9</id>
        <label>PCGF5</label>
    </interactant>
    <organismsDiffer>false</organismsDiffer>
    <experiments>3</experiments>
</comment>
<comment type="interaction">
    <interactant intactId="EBI-355744">
        <id>Q12933</id>
    </interactant>
    <interactant intactId="EBI-10239064">
        <id>Q17RL8</id>
        <label>PDZD4</label>
    </interactant>
    <organismsDiffer>false</organismsDiffer>
    <experiments>3</experiments>
</comment>
<comment type="interaction">
    <interactant intactId="EBI-355744">
        <id>Q12933</id>
    </interactant>
    <interactant intactId="EBI-10290053">
        <id>Q96JS3</id>
        <label>PGBD1</label>
    </interactant>
    <organismsDiffer>false</organismsDiffer>
    <experiments>7</experiments>
</comment>
<comment type="interaction">
    <interactant intactId="EBI-355744">
        <id>Q12933</id>
    </interactant>
    <interactant intactId="EBI-348567">
        <id>O75928-2</id>
        <label>PIAS2</label>
    </interactant>
    <organismsDiffer>false</organismsDiffer>
    <experiments>3</experiments>
</comment>
<comment type="interaction">
    <interactant intactId="EBI-355744">
        <id>Q12933</id>
    </interactant>
    <interactant intactId="EBI-14066006">
        <id>Q4G0R1</id>
        <label>PIBF1</label>
    </interactant>
    <organismsDiffer>false</organismsDiffer>
    <experiments>3</experiments>
</comment>
<comment type="interaction">
    <interactant intactId="EBI-355744">
        <id>Q12933</id>
    </interactant>
    <interactant intactId="EBI-714158">
        <id>Q13526</id>
        <label>PIN1</label>
    </interactant>
    <organismsDiffer>false</organismsDiffer>
    <experiments>7</experiments>
</comment>
<comment type="interaction">
    <interactant intactId="EBI-355744">
        <id>Q12933</id>
    </interactant>
    <interactant intactId="EBI-602382">
        <id>Q16512</id>
        <label>PKN1</label>
    </interactant>
    <organismsDiffer>false</organismsDiffer>
    <experiments>3</experiments>
</comment>
<comment type="interaction">
    <interactant intactId="EBI-355744">
        <id>Q12933</id>
    </interactant>
    <interactant intactId="EBI-5452779">
        <id>Q9BUI4</id>
        <label>POLR3C</label>
    </interactant>
    <organismsDiffer>false</organismsDiffer>
    <experiments>3</experiments>
</comment>
<comment type="interaction">
    <interactant intactId="EBI-355744">
        <id>Q12933</id>
    </interactant>
    <interactant intactId="EBI-11956563">
        <id>Q96HA1-2</id>
        <label>POM121</label>
    </interactant>
    <organismsDiffer>false</organismsDiffer>
    <experiments>3</experiments>
</comment>
<comment type="interaction">
    <interactant intactId="EBI-355744">
        <id>Q12933</id>
    </interactant>
    <interactant intactId="EBI-368321">
        <id>O60437</id>
        <label>PPL</label>
    </interactant>
    <organismsDiffer>false</organismsDiffer>
    <experiments>6</experiments>
</comment>
<comment type="interaction">
    <interactant intactId="EBI-355744">
        <id>Q12933</id>
    </interactant>
    <interactant intactId="EBI-2557469">
        <id>Q6NYC8</id>
        <label>PPP1R18</label>
    </interactant>
    <organismsDiffer>false</organismsDiffer>
    <experiments>3</experiments>
</comment>
<comment type="interaction">
    <interactant intactId="EBI-355744">
        <id>Q12933</id>
    </interactant>
    <interactant intactId="EBI-308500">
        <id>Q5T8A7</id>
        <label>PPP1R26</label>
    </interactant>
    <organismsDiffer>false</organismsDiffer>
    <experiments>3</experiments>
</comment>
<comment type="interaction">
    <interactant intactId="EBI-355744">
        <id>Q12933</id>
    </interactant>
    <interactant intactId="EBI-1053424">
        <id>O43741</id>
        <label>PRKAB2</label>
    </interactant>
    <organismsDiffer>false</organismsDiffer>
    <experiments>8</experiments>
</comment>
<comment type="interaction">
    <interactant intactId="EBI-355744">
        <id>Q12933</id>
    </interactant>
    <interactant intactId="EBI-744488">
        <id>Q9H875</id>
        <label>PRKRIP1</label>
    </interactant>
    <organismsDiffer>false</organismsDiffer>
    <experiments>3</experiments>
</comment>
<comment type="interaction">
    <interactant intactId="EBI-355744">
        <id>Q12933</id>
    </interactant>
    <interactant intactId="EBI-2798416">
        <id>Q99633</id>
        <label>PRPF18</label>
    </interactant>
    <organismsDiffer>false</organismsDiffer>
    <experiments>3</experiments>
</comment>
<comment type="interaction">
    <interactant intactId="EBI-355744">
        <id>Q12933</id>
    </interactant>
    <interactant intactId="EBI-372273">
        <id>P20618</id>
        <label>PSMB1</label>
    </interactant>
    <organismsDiffer>false</organismsDiffer>
    <experiments>5</experiments>
</comment>
<comment type="interaction">
    <interactant intactId="EBI-355744">
        <id>Q12933</id>
    </interactant>
    <interactant intactId="EBI-750973">
        <id>O00233</id>
        <label>PSMD9</label>
    </interactant>
    <organismsDiffer>false</organismsDiffer>
    <experiments>3</experiments>
</comment>
<comment type="interaction">
    <interactant intactId="EBI-355744">
        <id>Q12933</id>
    </interactant>
    <interactant intactId="EBI-2371956">
        <id>Q9GZU8</id>
        <label>PSME3IP1</label>
    </interactant>
    <organismsDiffer>false</organismsDiffer>
    <experiments>3</experiments>
</comment>
<comment type="interaction">
    <interactant intactId="EBI-355744">
        <id>Q12933</id>
    </interactant>
    <interactant intactId="EBI-347462">
        <id>P47897</id>
        <label>QARS1</label>
    </interactant>
    <organismsDiffer>false</organismsDiffer>
    <experiments>3</experiments>
</comment>
<comment type="interaction">
    <interactant intactId="EBI-355744">
        <id>Q12933</id>
    </interactant>
    <interactant intactId="EBI-2798044">
        <id>Q2TAL8</id>
        <label>QRICH1</label>
    </interactant>
    <organismsDiffer>false</organismsDiffer>
    <experiments>3</experiments>
</comment>
<comment type="interaction">
    <interactant intactId="EBI-355744">
        <id>Q12933</id>
    </interactant>
    <interactant intactId="EBI-746453">
        <id>P54725</id>
        <label>RAD23A</label>
    </interactant>
    <organismsDiffer>false</organismsDiffer>
    <experiments>8</experiments>
</comment>
<comment type="interaction">
    <interactant intactId="EBI-355744">
        <id>Q12933</id>
    </interactant>
    <interactant intactId="EBI-948156">
        <id>Q9Y4B4</id>
        <label>RAD54L2</label>
    </interactant>
    <organismsDiffer>false</organismsDiffer>
    <experiments>3</experiments>
</comment>
<comment type="interaction">
    <interactant intactId="EBI-355744">
        <id>Q12933</id>
    </interactant>
    <interactant intactId="EBI-367390">
        <id>Q8WWW0</id>
        <label>RASSF5</label>
    </interactant>
    <organismsDiffer>false</organismsDiffer>
    <experiments>3</experiments>
</comment>
<comment type="interaction">
    <interactant intactId="EBI-355744">
        <id>Q12933</id>
    </interactant>
    <interactant intactId="EBI-740773">
        <id>Q96IZ5</id>
        <label>RBM41</label>
    </interactant>
    <organismsDiffer>false</organismsDiffer>
    <experiments>6</experiments>
</comment>
<comment type="interaction">
    <interactant intactId="EBI-355744">
        <id>Q12933</id>
    </interactant>
    <interactant intactId="EBI-743428">
        <id>Q9P2K3</id>
        <label>RCOR3</label>
    </interactant>
    <organismsDiffer>false</organismsDiffer>
    <experiments>4</experiments>
</comment>
<comment type="interaction">
    <interactant intactId="EBI-355744">
        <id>Q12933</id>
    </interactant>
    <interactant intactId="EBI-742557">
        <id>P48380</id>
        <label>RFX3</label>
    </interactant>
    <organismsDiffer>false</organismsDiffer>
    <experiments>5</experiments>
</comment>
<comment type="interaction">
    <interactant intactId="EBI-355744">
        <id>Q12933</id>
    </interactant>
    <interactant intactId="EBI-366017">
        <id>Q13671</id>
        <label>RIN1</label>
    </interactant>
    <organismsDiffer>false</organismsDiffer>
    <experiments>3</experiments>
</comment>
<comment type="interaction">
    <interactant intactId="EBI-355744">
        <id>Q12933</id>
    </interactant>
    <interactant intactId="EBI-358507">
        <id>Q13546</id>
        <label>RIPK1</label>
    </interactant>
    <organismsDiffer>false</organismsDiffer>
    <experiments>8</experiments>
</comment>
<comment type="interaction">
    <interactant intactId="EBI-355744">
        <id>Q12933</id>
    </interactant>
    <interactant intactId="EBI-358522">
        <id>O43353</id>
        <label>RIPK2</label>
    </interactant>
    <organismsDiffer>false</organismsDiffer>
    <experiments>2</experiments>
</comment>
<comment type="interaction">
    <interactant intactId="EBI-355744">
        <id>Q12933</id>
    </interactant>
    <interactant intactId="EBI-10226430">
        <id>Q0D2K3</id>
        <label>RIPPLY1</label>
    </interactant>
    <organismsDiffer>false</organismsDiffer>
    <experiments>6</experiments>
</comment>
<comment type="interaction">
    <interactant intactId="EBI-355744">
        <id>Q12933</id>
    </interactant>
    <interactant intactId="EBI-12092053">
        <id>P57055</id>
        <label>RIPPLY3</label>
    </interactant>
    <organismsDiffer>false</organismsDiffer>
    <experiments>3</experiments>
</comment>
<comment type="interaction">
    <interactant intactId="EBI-355744">
        <id>Q12933</id>
    </interactant>
    <interactant intactId="EBI-722397">
        <id>Q9NTX7</id>
        <label>RNF146</label>
    </interactant>
    <organismsDiffer>false</organismsDiffer>
    <experiments>3</experiments>
</comment>
<comment type="interaction">
    <interactant intactId="EBI-355744">
        <id>Q12933</id>
    </interactant>
    <interactant intactId="EBI-11750630">
        <id>Q9NTX7-2</id>
        <label>RNF146</label>
    </interactant>
    <organismsDiffer>false</organismsDiffer>
    <experiments>3</experiments>
</comment>
<comment type="interaction">
    <interactant intactId="EBI-355744">
        <id>Q12933</id>
    </interactant>
    <interactant intactId="EBI-2340927">
        <id>P78317</id>
        <label>RNF4</label>
    </interactant>
    <organismsDiffer>false</organismsDiffer>
    <experiments>3</experiments>
</comment>
<comment type="interaction">
    <interactant intactId="EBI-355744">
        <id>Q12933</id>
    </interactant>
    <interactant intactId="EBI-748350">
        <id>Q9UHP6</id>
        <label>RSPH14</label>
    </interactant>
    <organismsDiffer>false</organismsDiffer>
    <experiments>3</experiments>
</comment>
<comment type="interaction">
    <interactant intactId="EBI-355744">
        <id>Q12933</id>
    </interactant>
    <interactant intactId="EBI-14067109">
        <id>Q96NU1</id>
        <label>SAMD11</label>
    </interactant>
    <organismsDiffer>false</organismsDiffer>
    <experiments>3</experiments>
</comment>
<comment type="interaction">
    <interactant intactId="EBI-355744">
        <id>Q12933</id>
    </interactant>
    <interactant intactId="EBI-12000762">
        <id>Q7Z5V6-2</id>
        <label>SAXO4</label>
    </interactant>
    <organismsDiffer>false</organismsDiffer>
    <experiments>3</experiments>
</comment>
<comment type="interaction">
    <interactant intactId="EBI-355744">
        <id>Q12933</id>
    </interactant>
    <interactant intactId="EBI-748391">
        <id>Q9BWG6</id>
        <label>SCNM1</label>
    </interactant>
    <organismsDiffer>false</organismsDiffer>
    <experiments>3</experiments>
</comment>
<comment type="interaction">
    <interactant intactId="EBI-355744">
        <id>Q12933</id>
    </interactant>
    <interactant intactId="EBI-747035">
        <id>Q9H788</id>
        <label>SH2D4A</label>
    </interactant>
    <organismsDiffer>false</organismsDiffer>
    <experiments>3</experiments>
</comment>
<comment type="interaction">
    <interactant intactId="EBI-355744">
        <id>Q12933</id>
    </interactant>
    <interactant intactId="EBI-79084">
        <id>Q92529</id>
        <label>SHC3</label>
    </interactant>
    <organismsDiffer>false</organismsDiffer>
    <experiments>3</experiments>
</comment>
<comment type="interaction">
    <interactant intactId="EBI-355744">
        <id>Q12933</id>
    </interactant>
    <interactant intactId="EBI-20805570">
        <id>P48751</id>
        <label>SLC4A3</label>
    </interactant>
    <organismsDiffer>false</organismsDiffer>
    <experiments>3</experiments>
</comment>
<comment type="interaction">
    <interactant intactId="EBI-355744">
        <id>Q12933</id>
    </interactant>
    <interactant intactId="EBI-2872322">
        <id>Q9H0W8</id>
        <label>SMG9</label>
    </interactant>
    <organismsDiffer>false</organismsDiffer>
    <experiments>6</experiments>
</comment>
<comment type="interaction">
    <interactant intactId="EBI-355744">
        <id>Q12933</id>
    </interactant>
    <interactant intactId="EBI-1045459">
        <id>O95863</id>
        <label>SNAI1</label>
    </interactant>
    <organismsDiffer>false</organismsDiffer>
    <experiments>3</experiments>
</comment>
<comment type="interaction">
    <interactant intactId="EBI-355744">
        <id>Q12933</id>
    </interactant>
    <interactant intactId="EBI-9675976">
        <id>Q9BV90</id>
        <label>SNRNP25</label>
    </interactant>
    <organismsDiffer>false</organismsDiffer>
    <experiments>3</experiments>
</comment>
<comment type="interaction">
    <interactant intactId="EBI-355744">
        <id>Q12933</id>
    </interactant>
    <interactant intactId="EBI-3928516">
        <id>Q9UN79</id>
        <label>SOX13</label>
    </interactant>
    <organismsDiffer>false</organismsDiffer>
    <experiments>3</experiments>
</comment>
<comment type="interaction">
    <interactant intactId="EBI-355744">
        <id>Q12933</id>
    </interactant>
    <interactant intactId="EBI-9078386">
        <id>P41225</id>
        <label>SOX3</label>
    </interactant>
    <organismsDiffer>false</organismsDiffer>
    <experiments>3</experiments>
</comment>
<comment type="interaction">
    <interactant intactId="EBI-355744">
        <id>Q12933</id>
    </interactant>
    <interactant intactId="EBI-11954419">
        <id>P35711-4</id>
        <label>SOX5</label>
    </interactant>
    <organismsDiffer>false</organismsDiffer>
    <experiments>3</experiments>
</comment>
<comment type="interaction">
    <interactant intactId="EBI-355744">
        <id>Q12933</id>
    </interactant>
    <interactant intactId="EBI-742688">
        <id>Q9NZD8</id>
        <label>SPG21</label>
    </interactant>
    <organismsDiffer>false</organismsDiffer>
    <experiments>8</experiments>
</comment>
<comment type="interaction">
    <interactant intactId="EBI-355744">
        <id>Q12933</id>
    </interactant>
    <interactant intactId="EBI-80140">
        <id>P63165</id>
        <label>SUMO1</label>
    </interactant>
    <organismsDiffer>false</organismsDiffer>
    <experiments>3</experiments>
</comment>
<comment type="interaction">
    <interactant intactId="EBI-355744">
        <id>Q12933</id>
    </interactant>
    <interactant intactId="EBI-10175576">
        <id>G2XKQ0</id>
        <label>SUMO1P1</label>
    </interactant>
    <organismsDiffer>false</organismsDiffer>
    <experiments>3</experiments>
</comment>
<comment type="interaction">
    <interactant intactId="EBI-355744">
        <id>Q12933</id>
    </interactant>
    <interactant intactId="EBI-745392">
        <id>Q9BSW7</id>
        <label>SYT17</label>
    </interactant>
    <organismsDiffer>false</organismsDiffer>
    <experiments>6</experiments>
</comment>
<comment type="interaction">
    <interactant intactId="EBI-355744">
        <id>Q12933</id>
    </interactant>
    <interactant intactId="EBI-10246152">
        <id>Q5T7P8-2</id>
        <label>SYT6</label>
    </interactant>
    <organismsDiffer>false</organismsDiffer>
    <experiments>3</experiments>
</comment>
<comment type="interaction">
    <interactant intactId="EBI-355744">
        <id>Q12933</id>
    </interactant>
    <interactant intactId="EBI-356349">
        <id>Q92844</id>
        <label>TANK</label>
    </interactant>
    <organismsDiffer>false</organismsDiffer>
    <experiments>10</experiments>
</comment>
<comment type="interaction">
    <interactant intactId="EBI-355744">
        <id>Q12933</id>
    </interactant>
    <interactant intactId="EBI-1384100">
        <id>Q9H2K8</id>
        <label>TAOK3</label>
    </interactant>
    <organismsDiffer>false</organismsDiffer>
    <experiments>2</experiments>
</comment>
<comment type="interaction">
    <interactant intactId="EBI-355744">
        <id>Q12933</id>
    </interactant>
    <interactant intactId="EBI-356402">
        <id>Q9UHD2</id>
        <label>TBK1</label>
    </interactant>
    <organismsDiffer>false</organismsDiffer>
    <experiments>9</experiments>
</comment>
<comment type="interaction">
    <interactant intactId="EBI-355744">
        <id>Q12933</id>
    </interactant>
    <interactant intactId="EBI-11974855">
        <id>Q9Y4C2-2</id>
        <label>TCAF1</label>
    </interactant>
    <organismsDiffer>false</organismsDiffer>
    <experiments>3</experiments>
</comment>
<comment type="interaction">
    <interactant intactId="EBI-355744">
        <id>Q12933</id>
    </interactant>
    <interactant intactId="EBI-954089">
        <id>O15273</id>
        <label>TCAP</label>
    </interactant>
    <organismsDiffer>false</organismsDiffer>
    <experiments>3</experiments>
</comment>
<comment type="interaction">
    <interactant intactId="EBI-355744">
        <id>Q12933</id>
    </interactant>
    <interactant intactId="EBI-710310">
        <id>Q15560</id>
        <label>TCEA2</label>
    </interactant>
    <organismsDiffer>false</organismsDiffer>
    <experiments>7</experiments>
</comment>
<comment type="interaction">
    <interactant intactId="EBI-355744">
        <id>Q12933</id>
    </interactant>
    <interactant intactId="EBI-11955057">
        <id>Q8N8B7-2</id>
        <label>TCEANC</label>
    </interactant>
    <organismsDiffer>false</organismsDiffer>
    <experiments>3</experiments>
</comment>
<comment type="interaction">
    <interactant intactId="EBI-355744">
        <id>Q12933</id>
    </interactant>
    <interactant intactId="EBI-749995">
        <id>P56279</id>
        <label>TCL1A</label>
    </interactant>
    <organismsDiffer>false</organismsDiffer>
    <experiments>3</experiments>
</comment>
<comment type="interaction">
    <interactant intactId="EBI-355744">
        <id>Q12933</id>
    </interactant>
    <interactant intactId="EBI-8644516">
        <id>Q9BXF9</id>
        <label>TEKT3</label>
    </interactant>
    <organismsDiffer>false</organismsDiffer>
    <experiments>6</experiments>
</comment>
<comment type="interaction">
    <interactant intactId="EBI-355744">
        <id>Q12933</id>
    </interactant>
    <interactant intactId="EBI-741350">
        <id>Q9BT49</id>
        <label>THAP7</label>
    </interactant>
    <organismsDiffer>false</organismsDiffer>
    <experiments>13</experiments>
</comment>
<comment type="interaction">
    <interactant intactId="EBI-355744">
        <id>Q12933</id>
    </interactant>
    <interactant intactId="EBI-6137619">
        <id>Q96CV8</id>
        <label>THOP1</label>
    </interactant>
    <organismsDiffer>false</organismsDiffer>
    <experiments>3</experiments>
</comment>
<comment type="interaction">
    <interactant intactId="EBI-355744">
        <id>Q12933</id>
    </interactant>
    <interactant intactId="EBI-740711">
        <id>Q96CG3</id>
        <label>TIFA</label>
    </interactant>
    <organismsDiffer>false</organismsDiffer>
    <experiments>12</experiments>
</comment>
<comment type="interaction">
    <interactant intactId="EBI-355744">
        <id>Q12933</id>
    </interactant>
    <interactant intactId="EBI-12117432">
        <id>Q8IY51</id>
        <label>TIGD4</label>
    </interactant>
    <organismsDiffer>false</organismsDiffer>
    <experiments>3</experiments>
</comment>
<comment type="interaction">
    <interactant intactId="EBI-355744">
        <id>Q12933</id>
    </interactant>
    <interactant intactId="EBI-717810">
        <id>Q08117</id>
        <label>TLE5</label>
    </interactant>
    <organismsDiffer>false</organismsDiffer>
    <experiments>3</experiments>
</comment>
<comment type="interaction">
    <interactant intactId="EBI-355744">
        <id>Q12933</id>
    </interactant>
    <interactant intactId="EBI-527670">
        <id>P21580</id>
        <label>TNFAIP3</label>
    </interactant>
    <organismsDiffer>false</organismsDiffer>
    <experiments>10</experiments>
</comment>
<comment type="interaction">
    <interactant intactId="EBI-355744">
        <id>Q12933</id>
    </interactant>
    <interactant intactId="EBI-525675">
        <id>Q9Y6Q6</id>
        <label>TNFRSF11A</label>
    </interactant>
    <organismsDiffer>false</organismsDiffer>
    <experiments>2</experiments>
</comment>
<comment type="interaction">
    <interactant intactId="EBI-355744">
        <id>Q12933</id>
    </interactant>
    <interactant intactId="EBI-20899422">
        <id>Q9Y6Q6-2</id>
        <label>TNFRSF11A</label>
    </interactant>
    <organismsDiffer>false</organismsDiffer>
    <experiments>5</experiments>
</comment>
<comment type="interaction">
    <interactant intactId="EBI-355744">
        <id>Q12933</id>
    </interactant>
    <interactant intactId="EBI-2851995">
        <id>Q9NP84</id>
        <label>TNFRSF12A</label>
    </interactant>
    <organismsDiffer>false</organismsDiffer>
    <experiments>3</experiments>
</comment>
<comment type="interaction">
    <interactant intactId="EBI-355744">
        <id>Q12933</id>
    </interactant>
    <interactant intactId="EBI-1056653">
        <id>Q92956</id>
        <label>TNFRSF14</label>
    </interactant>
    <organismsDiffer>false</organismsDiffer>
    <experiments>2</experiments>
</comment>
<comment type="interaction">
    <interactant intactId="EBI-355744">
        <id>Q12933</id>
    </interactant>
    <interactant intactId="EBI-358983">
        <id>P20333</id>
        <label>TNFRSF1B</label>
    </interactant>
    <organismsDiffer>false</organismsDiffer>
    <experiments>4</experiments>
</comment>
<comment type="interaction">
    <interactant intactId="EBI-355744">
        <id>Q12933</id>
    </interactant>
    <interactant intactId="EBI-1051794">
        <id>Q9UKE5</id>
        <label>TNIK</label>
    </interactant>
    <organismsDiffer>false</organismsDiffer>
    <experiments>2</experiments>
</comment>
<comment type="interaction">
    <interactant intactId="EBI-355744">
        <id>Q12933</id>
    </interactant>
    <interactant intactId="EBI-359215">
        <id>Q15628</id>
        <label>TRADD</label>
    </interactant>
    <organismsDiffer>false</organismsDiffer>
    <experiments>13</experiments>
</comment>
<comment type="interaction">
    <interactant intactId="EBI-355744">
        <id>Q12933</id>
    </interactant>
    <interactant intactId="EBI-359224">
        <id>Q13077</id>
        <label>TRAF1</label>
    </interactant>
    <organismsDiffer>false</organismsDiffer>
    <experiments>14</experiments>
</comment>
<comment type="interaction">
    <interactant intactId="EBI-355744">
        <id>Q12933</id>
    </interactant>
    <interactant intactId="EBI-355744">
        <id>Q12933</id>
        <label>TRAF2</label>
    </interactant>
    <organismsDiffer>false</organismsDiffer>
    <experiments>11</experiments>
</comment>
<comment type="interaction">
    <interactant intactId="EBI-355744">
        <id>Q12933</id>
    </interactant>
    <interactant intactId="EBI-523498">
        <id>O00463</id>
        <label>TRAF5</label>
    </interactant>
    <organismsDiffer>false</organismsDiffer>
    <experiments>5</experiments>
</comment>
<comment type="interaction">
    <interactant intactId="EBI-355744">
        <id>Q12933</id>
    </interactant>
    <interactant intactId="EBI-359276">
        <id>Q9Y4K3</id>
        <label>TRAF6</label>
    </interactant>
    <organismsDiffer>false</organismsDiffer>
    <experiments>10</experiments>
</comment>
<comment type="interaction">
    <interactant intactId="EBI-355744">
        <id>Q12933</id>
    </interactant>
    <interactant intactId="EBI-2820256">
        <id>Q14142</id>
        <label>TRIM14</label>
    </interactant>
    <organismsDiffer>false</organismsDiffer>
    <experiments>3</experiments>
</comment>
<comment type="interaction">
    <interactant intactId="EBI-355744">
        <id>Q12933</id>
    </interactant>
    <interactant intactId="EBI-5235829">
        <id>Q8IWZ5</id>
        <label>TRIM42</label>
    </interactant>
    <organismsDiffer>false</organismsDiffer>
    <experiments>3</experiments>
</comment>
<comment type="interaction">
    <interactant intactId="EBI-355744">
        <id>Q12933</id>
    </interactant>
    <interactant intactId="EBI-9867283">
        <id>Q86XT4</id>
        <label>TRIM50</label>
    </interactant>
    <organismsDiffer>false</organismsDiffer>
    <experiments>3</experiments>
</comment>
<comment type="interaction">
    <interactant intactId="EBI-355744">
        <id>Q12933</id>
    </interactant>
    <interactant intactId="EBI-2349743">
        <id>Q12815</id>
        <label>TROAP</label>
    </interactant>
    <organismsDiffer>false</organismsDiffer>
    <experiments>5</experiments>
</comment>
<comment type="interaction">
    <interactant intactId="EBI-355744">
        <id>Q12933</id>
    </interactant>
    <interactant intactId="EBI-12403619">
        <id>Q86TN4-2</id>
        <label>TRPT1</label>
    </interactant>
    <organismsDiffer>false</organismsDiffer>
    <experiments>3</experiments>
</comment>
<comment type="interaction">
    <interactant intactId="EBI-355744">
        <id>Q12933</id>
    </interactant>
    <interactant intactId="EBI-10241197">
        <id>Q3SY00</id>
        <label>TSGA10IP</label>
    </interactant>
    <organismsDiffer>false</organismsDiffer>
    <experiments>3</experiments>
</comment>
<comment type="interaction">
    <interactant intactId="EBI-355744">
        <id>Q12933</id>
    </interactant>
    <interactant intactId="EBI-10687282">
        <id>Q9NRE2</id>
        <label>TSHZ2</label>
    </interactant>
    <organismsDiffer>false</organismsDiffer>
    <experiments>3</experiments>
</comment>
<comment type="interaction">
    <interactant intactId="EBI-355744">
        <id>Q12933</id>
    </interactant>
    <interactant intactId="EBI-9053916">
        <id>Q63HK5</id>
        <label>TSHZ3</label>
    </interactant>
    <organismsDiffer>false</organismsDiffer>
    <experiments>3</experiments>
</comment>
<comment type="interaction">
    <interactant intactId="EBI-355744">
        <id>Q12933</id>
    </interactant>
    <interactant intactId="EBI-717229">
        <id>Q9Y5U2</id>
        <label>TSSC4</label>
    </interactant>
    <organismsDiffer>false</organismsDiffer>
    <experiments>3</experiments>
</comment>
<comment type="interaction">
    <interactant intactId="EBI-355744">
        <id>Q12933</id>
    </interactant>
    <interactant intactId="EBI-9090990">
        <id>Q5W5X9-3</id>
        <label>TTC23</label>
    </interactant>
    <organismsDiffer>false</organismsDiffer>
    <experiments>3</experiments>
</comment>
<comment type="interaction">
    <interactant intactId="EBI-355744">
        <id>Q12933</id>
    </interactant>
    <interactant intactId="EBI-594644">
        <id>P10599</id>
        <label>TXN</label>
    </interactant>
    <organismsDiffer>false</organismsDiffer>
    <experiments>3</experiments>
</comment>
<comment type="interaction">
    <interactant intactId="EBI-355744">
        <id>Q12933</id>
    </interactant>
    <interactant intactId="EBI-10180829">
        <id>Q7KZS0</id>
        <label>UBE2I</label>
    </interactant>
    <organismsDiffer>false</organismsDiffer>
    <experiments>3</experiments>
</comment>
<comment type="interaction">
    <interactant intactId="EBI-355744">
        <id>Q12933</id>
    </interactant>
    <interactant intactId="EBI-746004">
        <id>Q5T124</id>
        <label>UBXN11</label>
    </interactant>
    <organismsDiffer>false</organismsDiffer>
    <experiments>5</experiments>
</comment>
<comment type="interaction">
    <interactant intactId="EBI-355744">
        <id>Q12933</id>
    </interactant>
    <interactant intactId="EBI-11524408">
        <id>Q5T124-6</id>
        <label>UBXN11</label>
    </interactant>
    <organismsDiffer>false</organismsDiffer>
    <experiments>3</experiments>
</comment>
<comment type="interaction">
    <interactant intactId="EBI-355744">
        <id>Q12933</id>
    </interactant>
    <interactant intactId="EBI-1054489">
        <id>P22415</id>
        <label>USF1</label>
    </interactant>
    <organismsDiffer>false</organismsDiffer>
    <experiments>3</experiments>
</comment>
<comment type="interaction">
    <interactant intactId="EBI-355744">
        <id>Q12933</id>
    </interactant>
    <interactant intactId="EBI-743272">
        <id>O75604</id>
        <label>USP2</label>
    </interactant>
    <organismsDiffer>false</organismsDiffer>
    <experiments>7</experiments>
</comment>
<comment type="interaction">
    <interactant intactId="EBI-355744">
        <id>Q12933</id>
    </interactant>
    <interactant intactId="EBI-11737646">
        <id>Q5TAP6</id>
        <label>UTP14C</label>
    </interactant>
    <organismsDiffer>false</organismsDiffer>
    <experiments>3</experiments>
</comment>
<comment type="interaction">
    <interactant intactId="EBI-355744">
        <id>Q12933</id>
    </interactant>
    <interactant intactId="EBI-5457544">
        <id>Q9BRU9</id>
        <label>UTP23</label>
    </interactant>
    <organismsDiffer>false</organismsDiffer>
    <experiments>3</experiments>
</comment>
<comment type="interaction">
    <interactant intactId="EBI-355744">
        <id>Q12933</id>
    </interactant>
    <interactant intactId="EBI-11980193">
        <id>Q14119</id>
        <label>VEZF1</label>
    </interactant>
    <organismsDiffer>false</organismsDiffer>
    <experiments>3</experiments>
</comment>
<comment type="interaction">
    <interactant intactId="EBI-355744">
        <id>Q12933</id>
    </interactant>
    <interactant intactId="EBI-10243723">
        <id>Q5GFL6</id>
        <label>VWA2</label>
    </interactant>
    <organismsDiffer>false</organismsDiffer>
    <experiments>3</experiments>
</comment>
<comment type="interaction">
    <interactant intactId="EBI-355744">
        <id>Q12933</id>
    </interactant>
    <interactant intactId="EBI-1548747">
        <id>Q92558</id>
        <label>WASF1</label>
    </interactant>
    <organismsDiffer>false</organismsDiffer>
    <experiments>3</experiments>
</comment>
<comment type="interaction">
    <interactant intactId="EBI-355744">
        <id>Q12933</id>
    </interactant>
    <interactant intactId="EBI-515331">
        <id>P07947</id>
        <label>YES1</label>
    </interactant>
    <organismsDiffer>false</organismsDiffer>
    <experiments>6</experiments>
</comment>
<comment type="interaction">
    <interactant intactId="EBI-355744">
        <id>Q12933</id>
    </interactant>
    <interactant intactId="EBI-711925">
        <id>Q05516</id>
        <label>ZBTB16</label>
    </interactant>
    <organismsDiffer>false</organismsDiffer>
    <experiments>5</experiments>
</comment>
<comment type="interaction">
    <interactant intactId="EBI-355744">
        <id>Q12933</id>
    </interactant>
    <interactant intactId="EBI-744471">
        <id>O43167</id>
        <label>ZBTB24</label>
    </interactant>
    <organismsDiffer>false</organismsDiffer>
    <experiments>3</experiments>
</comment>
<comment type="interaction">
    <interactant intactId="EBI-355744">
        <id>Q12933</id>
    </interactant>
    <interactant intactId="EBI-739899">
        <id>P24278</id>
        <label>ZBTB25</label>
    </interactant>
    <organismsDiffer>false</organismsDiffer>
    <experiments>4</experiments>
</comment>
<comment type="interaction">
    <interactant intactId="EBI-355744">
        <id>Q12933</id>
    </interactant>
    <interactant intactId="EBI-2859943">
        <id>Q6ZSB9</id>
        <label>ZBTB49</label>
    </interactant>
    <organismsDiffer>false</organismsDiffer>
    <experiments>3</experiments>
</comment>
<comment type="interaction">
    <interactant intactId="EBI-355744">
        <id>Q12933</id>
    </interactant>
    <interactant intactId="EBI-740767">
        <id>Q53FD0</id>
        <label>ZC2HC1C</label>
    </interactant>
    <organismsDiffer>false</organismsDiffer>
    <experiments>3</experiments>
</comment>
<comment type="interaction">
    <interactant intactId="EBI-355744">
        <id>Q12933</id>
    </interactant>
    <interactant intactId="EBI-14104088">
        <id>Q53FD0-2</id>
        <label>ZC2HC1C</label>
    </interactant>
    <organismsDiffer>false</organismsDiffer>
    <experiments>3</experiments>
</comment>
<comment type="interaction">
    <interactant intactId="EBI-355744">
        <id>Q12933</id>
    </interactant>
    <interactant intactId="EBI-724630">
        <id>Q6FIF0</id>
        <label>ZFAND6</label>
    </interactant>
    <organismsDiffer>false</organismsDiffer>
    <experiments>8</experiments>
</comment>
<comment type="interaction">
    <interactant intactId="EBI-355744">
        <id>Q12933</id>
    </interactant>
    <interactant intactId="EBI-1965777">
        <id>Q9BRR0</id>
        <label>ZKSCAN3</label>
    </interactant>
    <organismsDiffer>false</organismsDiffer>
    <experiments>3</experiments>
</comment>
<comment type="interaction">
    <interactant intactId="EBI-355744">
        <id>Q12933</id>
    </interactant>
    <interactant intactId="EBI-2682299">
        <id>Q96NC0</id>
        <label>ZMAT2</label>
    </interactant>
    <organismsDiffer>false</organismsDiffer>
    <experiments>6</experiments>
</comment>
<comment type="interaction">
    <interactant intactId="EBI-355744">
        <id>Q12933</id>
    </interactant>
    <interactant intactId="EBI-17634549">
        <id>Q9UJ78-2</id>
        <label>ZMYM5</label>
    </interactant>
    <organismsDiffer>false</organismsDiffer>
    <experiments>3</experiments>
</comment>
<comment type="interaction">
    <interactant intactId="EBI-355744">
        <id>Q12933</id>
    </interactant>
    <interactant intactId="EBI-10177272">
        <id>P15622-3</id>
        <label>ZNF250</label>
    </interactant>
    <organismsDiffer>false</organismsDiffer>
    <experiments>3</experiments>
</comment>
<comment type="interaction">
    <interactant intactId="EBI-355744">
        <id>Q12933</id>
    </interactant>
    <interactant intactId="EBI-11041653">
        <id>P13682</id>
        <label>ZNF35</label>
    </interactant>
    <organismsDiffer>false</organismsDiffer>
    <experiments>3</experiments>
</comment>
<comment type="interaction">
    <interactant intactId="EBI-355744">
        <id>Q12933</id>
    </interactant>
    <interactant intactId="EBI-720304">
        <id>Q86VK4</id>
        <label>ZNF410</label>
    </interactant>
    <organismsDiffer>false</organismsDiffer>
    <experiments>3</experiments>
</comment>
<comment type="interaction">
    <interactant intactId="EBI-355744">
        <id>Q12933</id>
    </interactant>
    <interactant intactId="EBI-11741890">
        <id>Q86VK4-3</id>
        <label>ZNF410</label>
    </interactant>
    <organismsDiffer>false</organismsDiffer>
    <experiments>3</experiments>
</comment>
<comment type="interaction">
    <interactant intactId="EBI-355744">
        <id>Q12933</id>
    </interactant>
    <interactant intactId="EBI-740727">
        <id>Q8TAU3</id>
        <label>ZNF417</label>
    </interactant>
    <organismsDiffer>false</organismsDiffer>
    <experiments>3</experiments>
</comment>
<comment type="interaction">
    <interactant intactId="EBI-355744">
        <id>Q12933</id>
    </interactant>
    <interactant intactId="EBI-11962468">
        <id>Q7Z4V0</id>
        <label>ZNF438</label>
    </interactant>
    <organismsDiffer>false</organismsDiffer>
    <experiments>3</experiments>
</comment>
<comment type="interaction">
    <interactant intactId="EBI-355744">
        <id>Q12933</id>
    </interactant>
    <interactant intactId="EBI-948288">
        <id>Q96MN9</id>
        <label>ZNF488</label>
    </interactant>
    <organismsDiffer>false</organismsDiffer>
    <experiments>3</experiments>
</comment>
<comment type="interaction">
    <interactant intactId="EBI-355744">
        <id>Q12933</id>
    </interactant>
    <interactant intactId="EBI-10239929">
        <id>Q32MK9</id>
        <label>ZNF509</label>
    </interactant>
    <organismsDiffer>false</organismsDiffer>
    <experiments>3</experiments>
</comment>
<comment type="interaction">
    <interactant intactId="EBI-355744">
        <id>Q12933</id>
    </interactant>
    <interactant intactId="EBI-2841978">
        <id>Q6NX49</id>
        <label>ZNF544</label>
    </interactant>
    <organismsDiffer>false</organismsDiffer>
    <experiments>4</experiments>
</comment>
<comment type="interaction">
    <interactant intactId="EBI-355744">
        <id>Q12933</id>
    </interactant>
    <interactant intactId="EBI-10172590">
        <id>Q7Z3I7</id>
        <label>ZNF572</label>
    </interactant>
    <organismsDiffer>false</organismsDiffer>
    <experiments>3</experiments>
</comment>
<comment type="interaction">
    <interactant intactId="EBI-355744">
        <id>Q12933</id>
    </interactant>
    <interactant intactId="EBI-17189720">
        <id>Q6ZN55-2</id>
        <label>ZNF574</label>
    </interactant>
    <organismsDiffer>false</organismsDiffer>
    <experiments>3</experiments>
</comment>
<comment type="interaction">
    <interactant intactId="EBI-355744">
        <id>Q12933</id>
    </interactant>
    <interactant intactId="EBI-11985915">
        <id>Q5T619</id>
        <label>ZNF648</label>
    </interactant>
    <organismsDiffer>false</organismsDiffer>
    <experiments>3</experiments>
</comment>
<comment type="interaction">
    <interactant intactId="EBI-355744">
        <id>Q12933</id>
    </interactant>
    <interactant intactId="EBI-625509">
        <id>Q8N720</id>
        <label>ZNF655</label>
    </interactant>
    <organismsDiffer>false</organismsDiffer>
    <experiments>3</experiments>
</comment>
<comment type="interaction">
    <interactant intactId="EBI-355744">
        <id>Q12933</id>
    </interactant>
    <interactant intactId="EBI-10255155">
        <id>Q6ZS27-3</id>
        <label>ZNF662</label>
    </interactant>
    <organismsDiffer>false</organismsDiffer>
    <experiments>3</experiments>
</comment>
<comment type="interaction">
    <interactant intactId="EBI-355744">
        <id>Q12933</id>
    </interactant>
    <interactant intactId="EBI-16429989">
        <id>A0A0S2Z6P0</id>
        <label>ZNF688</label>
    </interactant>
    <organismsDiffer>false</organismsDiffer>
    <experiments>3</experiments>
</comment>
<comment type="interaction">
    <interactant intactId="EBI-355744">
        <id>Q12933</id>
    </interactant>
    <interactant intactId="EBI-10251462">
        <id>Q6NX45</id>
        <label>ZNF774</label>
    </interactant>
    <organismsDiffer>false</organismsDiffer>
    <experiments>3</experiments>
</comment>
<comment type="interaction">
    <interactant intactId="EBI-355744">
        <id>Q12933</id>
    </interactant>
    <interactant intactId="EBI-5667532">
        <id>Q3MJ62</id>
        <label>ZSCAN23</label>
    </interactant>
    <organismsDiffer>false</organismsDiffer>
    <experiments>6</experiments>
</comment>
<comment type="interaction">
    <interactant intactId="EBI-355744">
        <id>Q12933</id>
    </interactant>
    <interactant intactId="EBI-739949">
        <id>Q9NX65</id>
        <label>ZSCAN32</label>
    </interactant>
    <organismsDiffer>false</organismsDiffer>
    <experiments>3</experiments>
</comment>
<comment type="interaction">
    <interactant intactId="EBI-355744">
        <id>Q12933</id>
    </interactant>
    <interactant intactId="EBI-5235554">
        <id>Q96MP5</id>
        <label>ZSWIM3</label>
    </interactant>
    <organismsDiffer>false</organismsDiffer>
    <experiments>3</experiments>
</comment>
<comment type="interaction">
    <interactant intactId="EBI-355744">
        <id>Q12933</id>
    </interactant>
    <interactant intactId="EBI-2795524">
        <id>Q8IYH5</id>
        <label>ZZZ3</label>
    </interactant>
    <organismsDiffer>false</organismsDiffer>
    <experiments>3</experiments>
</comment>
<comment type="interaction">
    <interactant intactId="EBI-355744">
        <id>Q12933</id>
    </interactant>
    <interactant intactId="EBI-10211777">
        <id>A0A384ME25</id>
    </interactant>
    <organismsDiffer>false</organismsDiffer>
    <experiments>3</experiments>
</comment>
<comment type="interaction">
    <interactant intactId="EBI-355744">
        <id>Q12933</id>
    </interactant>
    <interactant intactId="EBI-10175581">
        <id>B2R8Y4</id>
    </interactant>
    <organismsDiffer>false</organismsDiffer>
    <experiments>3</experiments>
</comment>
<comment type="interaction">
    <interactant intactId="EBI-355744">
        <id>Q12933</id>
    </interactant>
    <interactant intactId="EBI-6140033">
        <id>O08736</id>
        <label>Casp12</label>
    </interactant>
    <organismsDiffer>true</organismsDiffer>
    <experiments>6</experiments>
</comment>
<comment type="interaction">
    <interactant intactId="EBI-355744">
        <id>Q12933</id>
    </interactant>
    <interactant intactId="EBI-3957603">
        <id>P09022</id>
        <label>Hoxa1</label>
    </interactant>
    <organismsDiffer>true</organismsDiffer>
    <experiments>3</experiments>
</comment>
<comment type="interaction">
    <interactant intactId="EBI-355744">
        <id>Q12933</id>
    </interactant>
    <interactant intactId="EBI-636664">
        <id>Q62925</id>
        <label>Map3k1</label>
    </interactant>
    <organismsDiffer>true</organismsDiffer>
    <experiments>2</experiments>
</comment>
<comment type="interaction">
    <interactant intactId="EBI-355744">
        <id>Q12933</id>
    </interactant>
    <interactant intactId="EBI-1038810">
        <id>P07174</id>
        <label>Ngfr</label>
    </interactant>
    <organismsDiffer>true</organismsDiffer>
    <experiments>3</experiments>
</comment>
<comment type="interaction">
    <interactant intactId="EBI-355744">
        <id>Q12933</id>
    </interactant>
    <interactant intactId="EBI-9522973">
        <id>P89055</id>
        <label>NSP1</label>
    </interactant>
    <organismsDiffer>true</organismsDiffer>
    <experiments>3</experiments>
</comment>
<comment type="interaction">
    <interactant intactId="EBI-355744">
        <id>Q12933</id>
    </interactant>
    <interactant intactId="EBI-25475920">
        <id>PRO_0000449631</id>
        <label>rep</label>
        <dbReference type="UniProtKB" id="P0DTD1"/>
    </interactant>
    <organismsDiffer>true</organismsDiffer>
    <experiments>3</experiments>
</comment>
<comment type="interaction">
    <interactant intactId="EBI-355744">
        <id>Q12933</id>
    </interactant>
    <interactant intactId="EBI-520693">
        <id>P20334</id>
        <label>Tnfrsf9</label>
    </interactant>
    <organismsDiffer>true</organismsDiffer>
    <experiments>2</experiments>
</comment>
<comment type="interaction">
    <interactant intactId="EBI-355744">
        <id>Q12933</id>
    </interactant>
    <interactant intactId="EBI-523899">
        <id>P70191</id>
        <label>Traf5</label>
    </interactant>
    <organismsDiffer>true</organismsDiffer>
    <experiments>2</experiments>
</comment>
<comment type="interaction">
    <interactant intactId="EBI-355744">
        <id>Q12933</id>
    </interactant>
    <interactant intactId="EBI-7907665">
        <id>P88961</id>
    </interactant>
    <organismsDiffer>true</organismsDiffer>
    <experiments>3</experiments>
</comment>
<comment type="interaction">
    <interactant intactId="EBI-355760">
        <id>Q12933-2</id>
    </interactant>
    <interactant intactId="EBI-1056653">
        <id>Q92956</id>
        <label>TNFRSF14</label>
    </interactant>
    <organismsDiffer>false</organismsDiffer>
    <experiments>4</experiments>
</comment>
<comment type="subcellular location">
    <subcellularLocation>
        <location evidence="26 32">Cytoplasm</location>
    </subcellularLocation>
</comment>
<comment type="alternative products">
    <event type="alternative splicing"/>
    <isoform>
        <id>Q12933-1</id>
        <name>1</name>
        <sequence type="displayed"/>
    </isoform>
    <isoform>
        <id>Q12933-2</id>
        <name>2</name>
        <sequence type="described" ref="VSP_007401"/>
    </isoform>
    <isoform>
        <id>Q12933-3</id>
        <name>3</name>
        <sequence type="described" ref="VSP_039687"/>
    </isoform>
    <isoform>
        <id>Q12933-4</id>
        <name>4</name>
        <sequence type="described" ref="VSP_039688"/>
    </isoform>
</comment>
<comment type="domain">
    <text evidence="39">The coiled coil domain mediates homo- and hetero-oligomerization.</text>
</comment>
<comment type="domain">
    <text evidence="39">The MATH/TRAF domain binds to receptor cytoplasmic domains.</text>
</comment>
<comment type="domain">
    <text evidence="39">The RING-type zinc finger domain is essential for E3 ubiquitin-protein ligase activity. It is not essential for the stabilization of BIRC2, or for the ubiquitination of RIPK1 in response to TNFR1 signaling.</text>
</comment>
<comment type="PTM">
    <text evidence="32">Phosphorylated at several serine residues within the first 128 amino acid residues. Phosphorylated at Thr-117 in response to signaling via TNF and TNFRSF1A. Phosphorylation at Thr-117 is required for 'Lys-63'-linked polyubiquitination, but not for 'Lys-48'-linked polyubiquitination. Phosphorylation at Thr-117 is important for interaction with IKKA and IKKB, activation of IKK and subsequent activation of NF-kappa-B.</text>
</comment>
<comment type="PTM">
    <text evidence="2 32 46 49">Undergoes both 'Lys-48'-linked and 'Lys-63'-linked polyubiquitination. Polyubiquitinated via 'Lys-63'-linked ubiquitin in response to TNF signaling; this requires prior phosphorylation at Thr-117. 'Lys-63'-linked polyubiquitination promotes TRAF2-mediated activation of NF-kappa-B. Can be polyubiquitinated at several Lys residues via 'Lys-48'-linked ubiquitin chains in response to TNF signaling, leading to proteasomal degradation. Autoubiquitinated, leading to its subsequent proteasomal degradation. Polyubiquitinated by BIRC2 and SIAH2, leading to its subsequent proteasomal degradation. Deubiquitinated by CYLD, a protease that specifically cleaves 'Lys-63'-linked polyubiquitin chains. Ubiquination is inhibited by LRRC19; inhibits proteasomal degradation (PubMed:25026888). Ubiquitinated at Lys-320 by the SCF(FBXL2) complex, leading to its degradation by the proteasome (By similarity). Ubiquitinated by E3 ubiquitin-protein ligase complex containing FBXO7; leading to repression of NF-kappa-B signaling (PubMed:22212761).</text>
</comment>
<comment type="similarity">
    <text evidence="73">Belongs to the TNF receptor-associated factor family. A subfamily.</text>
</comment>
<comment type="caution">
    <text evidence="74 75">Was reported to interact with IL15RA (PubMed:10463949). However, this work was later retracted (PubMed:21357251).</text>
</comment>
<accession>Q12933</accession>
<accession>A8K107</accession>
<accession>B4DPJ7</accession>
<accession>Q7Z337</accession>
<accession>Q96NT2</accession>
<name>TRAF2_HUMAN</name>
<keyword id="KW-0002">3D-structure</keyword>
<keyword id="KW-0007">Acetylation</keyword>
<keyword id="KW-0025">Alternative splicing</keyword>
<keyword id="KW-0053">Apoptosis</keyword>
<keyword id="KW-0175">Coiled coil</keyword>
<keyword id="KW-0963">Cytoplasm</keyword>
<keyword id="KW-1017">Isopeptide bond</keyword>
<keyword id="KW-0446">Lipid-binding</keyword>
<keyword id="KW-0479">Metal-binding</keyword>
<keyword id="KW-0597">Phosphoprotein</keyword>
<keyword id="KW-1267">Proteomics identification</keyword>
<keyword id="KW-1185">Reference proteome</keyword>
<keyword id="KW-0677">Repeat</keyword>
<keyword id="KW-0808">Transferase</keyword>
<keyword id="KW-0832">Ubl conjugation</keyword>
<keyword id="KW-0833">Ubl conjugation pathway</keyword>
<keyword id="KW-0862">Zinc</keyword>
<keyword id="KW-0863">Zinc-finger</keyword>
<gene>
    <name evidence="72 76" type="primary">TRAF2</name>
    <name type="synonym">TRAP3</name>
</gene>
<proteinExistence type="evidence at protein level"/>
<protein>
    <recommendedName>
        <fullName>TNF receptor-associated factor 2</fullName>
        <ecNumber evidence="42 51">2.3.2.27</ecNumber>
    </recommendedName>
    <alternativeName>
        <fullName>E3 ubiquitin-protein ligase TRAF2</fullName>
    </alternativeName>
    <alternativeName>
        <fullName evidence="73">RING-type E3 ubiquitin transferase TRAF2</fullName>
    </alternativeName>
    <alternativeName>
        <fullName>Tumor necrosis factor type 2 receptor-associated protein 3</fullName>
    </alternativeName>
</protein>
<dbReference type="EC" id="2.3.2.27" evidence="42 51"/>
<dbReference type="EMBL" id="U12597">
    <property type="protein sequence ID" value="AAA87706.1"/>
    <property type="molecule type" value="mRNA"/>
</dbReference>
<dbReference type="EMBL" id="AK054686">
    <property type="protein sequence ID" value="BAB70792.1"/>
    <property type="molecule type" value="mRNA"/>
</dbReference>
<dbReference type="EMBL" id="AK289722">
    <property type="protein sequence ID" value="BAF82411.1"/>
    <property type="molecule type" value="mRNA"/>
</dbReference>
<dbReference type="EMBL" id="AK298370">
    <property type="protein sequence ID" value="BAG60609.1"/>
    <property type="molecule type" value="mRNA"/>
</dbReference>
<dbReference type="EMBL" id="BX538160">
    <property type="protein sequence ID" value="CAD98040.1"/>
    <property type="molecule type" value="mRNA"/>
</dbReference>
<dbReference type="EMBL" id="AY623660">
    <property type="protein sequence ID" value="AAT27320.1"/>
    <property type="molecule type" value="Genomic_DNA"/>
</dbReference>
<dbReference type="EMBL" id="AL355987">
    <property type="status" value="NOT_ANNOTATED_CDS"/>
    <property type="molecule type" value="Genomic_DNA"/>
</dbReference>
<dbReference type="EMBL" id="AL449425">
    <property type="status" value="NOT_ANNOTATED_CDS"/>
    <property type="molecule type" value="Genomic_DNA"/>
</dbReference>
<dbReference type="EMBL" id="CH471090">
    <property type="protein sequence ID" value="EAW88299.1"/>
    <property type="molecule type" value="Genomic_DNA"/>
</dbReference>
<dbReference type="EMBL" id="BC032410">
    <property type="protein sequence ID" value="AAH32410.1"/>
    <property type="molecule type" value="mRNA"/>
</dbReference>
<dbReference type="EMBL" id="BC033810">
    <property type="protein sequence ID" value="AAH33810.1"/>
    <property type="molecule type" value="mRNA"/>
</dbReference>
<dbReference type="EMBL" id="BC043492">
    <property type="protein sequence ID" value="AAH43492.1"/>
    <property type="molecule type" value="mRNA"/>
</dbReference>
<dbReference type="EMBL" id="BC064662">
    <property type="protein sequence ID" value="AAH64662.1"/>
    <property type="molecule type" value="mRNA"/>
</dbReference>
<dbReference type="CCDS" id="CCDS7013.1">
    <molecule id="Q12933-1"/>
</dbReference>
<dbReference type="PIR" id="S56163">
    <property type="entry name" value="S56163"/>
</dbReference>
<dbReference type="RefSeq" id="NP_066961.2">
    <molecule id="Q12933-1"/>
    <property type="nucleotide sequence ID" value="NM_021138.3"/>
</dbReference>
<dbReference type="RefSeq" id="XP_011517276.1">
    <property type="nucleotide sequence ID" value="XM_011518974.2"/>
</dbReference>
<dbReference type="RefSeq" id="XP_011517277.1">
    <property type="nucleotide sequence ID" value="XM_011518975.2"/>
</dbReference>
<dbReference type="RefSeq" id="XP_011517278.1">
    <molecule id="Q12933-1"/>
    <property type="nucleotide sequence ID" value="XM_011518976.4"/>
</dbReference>
<dbReference type="RefSeq" id="XP_011517279.1">
    <molecule id="Q12933-1"/>
    <property type="nucleotide sequence ID" value="XM_011518977.3"/>
</dbReference>
<dbReference type="RefSeq" id="XP_011517280.1">
    <property type="nucleotide sequence ID" value="XM_011518978.2"/>
</dbReference>
<dbReference type="RefSeq" id="XP_016870584.1">
    <property type="nucleotide sequence ID" value="XM_017015095.1"/>
</dbReference>
<dbReference type="RefSeq" id="XP_047279785.1">
    <molecule id="Q12933-1"/>
    <property type="nucleotide sequence ID" value="XM_047423829.1"/>
</dbReference>
<dbReference type="RefSeq" id="XP_054219690.1">
    <molecule id="Q12933-1"/>
    <property type="nucleotide sequence ID" value="XM_054363715.1"/>
</dbReference>
<dbReference type="RefSeq" id="XP_054219691.1">
    <molecule id="Q12933-1"/>
    <property type="nucleotide sequence ID" value="XM_054363716.1"/>
</dbReference>
<dbReference type="RefSeq" id="XP_054219692.1">
    <molecule id="Q12933-1"/>
    <property type="nucleotide sequence ID" value="XM_054363717.1"/>
</dbReference>
<dbReference type="PDB" id="1CA4">
    <property type="method" value="X-ray"/>
    <property type="resolution" value="2.20 A"/>
    <property type="chains" value="A/B/C/D/E/F=334-501"/>
</dbReference>
<dbReference type="PDB" id="1CA9">
    <property type="method" value="X-ray"/>
    <property type="resolution" value="2.30 A"/>
    <property type="chains" value="A/B/C/D/E/F=310-501"/>
</dbReference>
<dbReference type="PDB" id="1CZY">
    <property type="method" value="X-ray"/>
    <property type="resolution" value="2.00 A"/>
    <property type="chains" value="A/B/C=334-501"/>
</dbReference>
<dbReference type="PDB" id="1CZZ">
    <property type="method" value="X-ray"/>
    <property type="resolution" value="2.70 A"/>
    <property type="chains" value="A/B/C=315-501"/>
</dbReference>
<dbReference type="PDB" id="1D00">
    <property type="method" value="X-ray"/>
    <property type="resolution" value="2.00 A"/>
    <property type="chains" value="A/B/C/D/E/F/G/H=334-501"/>
</dbReference>
<dbReference type="PDB" id="1D01">
    <property type="method" value="X-ray"/>
    <property type="resolution" value="2.00 A"/>
    <property type="chains" value="A/B/C/D/E/F=334-501"/>
</dbReference>
<dbReference type="PDB" id="1D0A">
    <property type="method" value="X-ray"/>
    <property type="resolution" value="2.00 A"/>
    <property type="chains" value="A/B/C/D/E/F=334-501"/>
</dbReference>
<dbReference type="PDB" id="1D0J">
    <property type="method" value="X-ray"/>
    <property type="resolution" value="2.50 A"/>
    <property type="chains" value="A/B/C/D/E/F=334-501"/>
</dbReference>
<dbReference type="PDB" id="1F3V">
    <property type="method" value="X-ray"/>
    <property type="resolution" value="2.00 A"/>
    <property type="chains" value="B=331-501"/>
</dbReference>
<dbReference type="PDB" id="1QSC">
    <property type="method" value="X-ray"/>
    <property type="resolution" value="2.40 A"/>
    <property type="chains" value="A/B/C=311-501"/>
</dbReference>
<dbReference type="PDB" id="3KNV">
    <property type="method" value="X-ray"/>
    <property type="resolution" value="1.90 A"/>
    <property type="chains" value="A=1-133"/>
</dbReference>
<dbReference type="PDB" id="3M06">
    <property type="method" value="X-ray"/>
    <property type="resolution" value="2.67 A"/>
    <property type="chains" value="A/B/C/D/E/F=266-329"/>
</dbReference>
<dbReference type="PDB" id="3M0A">
    <property type="method" value="X-ray"/>
    <property type="resolution" value="2.61 A"/>
    <property type="chains" value="A/B/C=266-329"/>
</dbReference>
<dbReference type="PDB" id="3M0D">
    <property type="method" value="X-ray"/>
    <property type="resolution" value="2.80 A"/>
    <property type="chains" value="A/B=266-329"/>
</dbReference>
<dbReference type="PDB" id="8T5Q">
    <property type="method" value="X-ray"/>
    <property type="resolution" value="1.90 A"/>
    <property type="chains" value="A/B/C/D/E/F=315-501"/>
</dbReference>
<dbReference type="PDBsum" id="1CA4"/>
<dbReference type="PDBsum" id="1CA9"/>
<dbReference type="PDBsum" id="1CZY"/>
<dbReference type="PDBsum" id="1CZZ"/>
<dbReference type="PDBsum" id="1D00"/>
<dbReference type="PDBsum" id="1D01"/>
<dbReference type="PDBsum" id="1D0A"/>
<dbReference type="PDBsum" id="1D0J"/>
<dbReference type="PDBsum" id="1F3V"/>
<dbReference type="PDBsum" id="1QSC"/>
<dbReference type="PDBsum" id="3KNV"/>
<dbReference type="PDBsum" id="3M06"/>
<dbReference type="PDBsum" id="3M0A"/>
<dbReference type="PDBsum" id="3M0D"/>
<dbReference type="PDBsum" id="8T5Q"/>
<dbReference type="SMR" id="Q12933"/>
<dbReference type="BioGRID" id="113038">
    <property type="interactions" value="613"/>
</dbReference>
<dbReference type="ComplexPortal" id="CPX-25723">
    <property type="entry name" value="sTNF-TNR1A receptor-ligand core complex, BIRC3 variant"/>
</dbReference>
<dbReference type="ComplexPortal" id="CPX-25726">
    <property type="entry name" value="mTNF-TNR1A receptor-ligand core complex, BIRC3 variant"/>
</dbReference>
<dbReference type="ComplexPortal" id="CPX-25727">
    <property type="entry name" value="mTNF-TNR1B receptor-ligand core complex, BIRC3 variant"/>
</dbReference>
<dbReference type="ComplexPortal" id="CPX-8828">
    <property type="entry name" value="sTNF-TNR1A receptor-ligand core complex, BIRC2 variant"/>
</dbReference>
<dbReference type="ComplexPortal" id="CPX-8932">
    <property type="entry name" value="mTNF-TNR1A receptor-ligand core complex, BIRC2 variant"/>
</dbReference>
<dbReference type="ComplexPortal" id="CPX-8933">
    <property type="entry name" value="mTNF-TNR1B receptor-ligand core complex, BIRC2 variant"/>
</dbReference>
<dbReference type="ComplexPortal" id="CPX-9741">
    <property type="entry name" value="TRAF2-TIFA E3 ubiquitin ligase complex"/>
</dbReference>
<dbReference type="CORUM" id="Q12933"/>
<dbReference type="DIP" id="DIP-6223N"/>
<dbReference type="ELM" id="Q12933"/>
<dbReference type="FunCoup" id="Q12933">
    <property type="interactions" value="1558"/>
</dbReference>
<dbReference type="IntAct" id="Q12933">
    <property type="interactions" value="462"/>
</dbReference>
<dbReference type="MINT" id="Q12933"/>
<dbReference type="STRING" id="9606.ENSP00000247668"/>
<dbReference type="GlyGen" id="Q12933">
    <property type="glycosylation" value="1 site, 1 O-linked glycan (1 site)"/>
</dbReference>
<dbReference type="iPTMnet" id="Q12933"/>
<dbReference type="MetOSite" id="Q12933"/>
<dbReference type="PhosphoSitePlus" id="Q12933"/>
<dbReference type="BioMuta" id="TRAF2"/>
<dbReference type="DMDM" id="23503103"/>
<dbReference type="jPOST" id="Q12933"/>
<dbReference type="MassIVE" id="Q12933"/>
<dbReference type="PaxDb" id="9606-ENSP00000247668"/>
<dbReference type="PeptideAtlas" id="Q12933"/>
<dbReference type="ProteomicsDB" id="59035">
    <molecule id="Q12933-1"/>
</dbReference>
<dbReference type="ProteomicsDB" id="59036">
    <molecule id="Q12933-2"/>
</dbReference>
<dbReference type="ProteomicsDB" id="59037">
    <molecule id="Q12933-3"/>
</dbReference>
<dbReference type="ProteomicsDB" id="59038">
    <molecule id="Q12933-4"/>
</dbReference>
<dbReference type="Pumba" id="Q12933"/>
<dbReference type="Antibodypedia" id="2422">
    <property type="antibodies" value="761 antibodies from 48 providers"/>
</dbReference>
<dbReference type="DNASU" id="7186"/>
<dbReference type="Ensembl" id="ENST00000247668.7">
    <molecule id="Q12933-1"/>
    <property type="protein sequence ID" value="ENSP00000247668.2"/>
    <property type="gene ID" value="ENSG00000127191.18"/>
</dbReference>
<dbReference type="GeneID" id="7186"/>
<dbReference type="KEGG" id="hsa:7186"/>
<dbReference type="MANE-Select" id="ENST00000247668.7">
    <property type="protein sequence ID" value="ENSP00000247668.2"/>
    <property type="RefSeq nucleotide sequence ID" value="NM_021138.4"/>
    <property type="RefSeq protein sequence ID" value="NP_066961.2"/>
</dbReference>
<dbReference type="UCSC" id="uc004cjv.4">
    <molecule id="Q12933-1"/>
    <property type="organism name" value="human"/>
</dbReference>
<dbReference type="AGR" id="HGNC:12032"/>
<dbReference type="CTD" id="7186"/>
<dbReference type="DisGeNET" id="7186"/>
<dbReference type="GeneCards" id="TRAF2"/>
<dbReference type="HGNC" id="HGNC:12032">
    <property type="gene designation" value="TRAF2"/>
</dbReference>
<dbReference type="HPA" id="ENSG00000127191">
    <property type="expression patterns" value="Low tissue specificity"/>
</dbReference>
<dbReference type="MalaCards" id="TRAF2"/>
<dbReference type="MIM" id="601895">
    <property type="type" value="gene"/>
</dbReference>
<dbReference type="neXtProt" id="NX_Q12933"/>
<dbReference type="OpenTargets" id="ENSG00000127191"/>
<dbReference type="PharmGKB" id="PA164742666"/>
<dbReference type="VEuPathDB" id="HostDB:ENSG00000127191"/>
<dbReference type="eggNOG" id="KOG0297">
    <property type="taxonomic scope" value="Eukaryota"/>
</dbReference>
<dbReference type="GeneTree" id="ENSGT00940000156621"/>
<dbReference type="HOGENOM" id="CLU_021061_4_1_1"/>
<dbReference type="InParanoid" id="Q12933"/>
<dbReference type="OMA" id="INESCSW"/>
<dbReference type="OrthoDB" id="6499288at2759"/>
<dbReference type="PAN-GO" id="Q12933">
    <property type="GO annotations" value="10 GO annotations based on evolutionary models"/>
</dbReference>
<dbReference type="PhylomeDB" id="Q12933"/>
<dbReference type="TreeFam" id="TF321154"/>
<dbReference type="PathwayCommons" id="Q12933"/>
<dbReference type="Reactome" id="R-HSA-140534">
    <property type="pathway name" value="Caspase activation via Death Receptors in the presence of ligand"/>
</dbReference>
<dbReference type="Reactome" id="R-HSA-3371378">
    <property type="pathway name" value="Regulation by c-FLIP"/>
</dbReference>
<dbReference type="Reactome" id="R-HSA-5213460">
    <property type="pathway name" value="RIPK1-mediated regulated necrosis"/>
</dbReference>
<dbReference type="Reactome" id="R-HSA-5218900">
    <property type="pathway name" value="CASP8 activity is inhibited"/>
</dbReference>
<dbReference type="Reactome" id="R-HSA-5357786">
    <property type="pathway name" value="TNFR1-induced proapoptotic signaling"/>
</dbReference>
<dbReference type="Reactome" id="R-HSA-5357905">
    <property type="pathway name" value="Regulation of TNFR1 signaling"/>
</dbReference>
<dbReference type="Reactome" id="R-HSA-5357956">
    <property type="pathway name" value="TNFR1-induced NF-kappa-B signaling pathway"/>
</dbReference>
<dbReference type="Reactome" id="R-HSA-5668541">
    <property type="pathway name" value="TNFR2 non-canonical NF-kB pathway"/>
</dbReference>
<dbReference type="Reactome" id="R-HSA-5675482">
    <property type="pathway name" value="Regulation of necroptotic cell death"/>
</dbReference>
<dbReference type="Reactome" id="R-HSA-5676594">
    <property type="pathway name" value="TNF receptor superfamily (TNFSF) members mediating non-canonical NF-kB pathway"/>
</dbReference>
<dbReference type="Reactome" id="R-HSA-5689880">
    <property type="pathway name" value="Ub-specific processing proteases"/>
</dbReference>
<dbReference type="Reactome" id="R-HSA-69416">
    <property type="pathway name" value="Dimerization of procaspase-8"/>
</dbReference>
<dbReference type="Reactome" id="R-HSA-75893">
    <property type="pathway name" value="TNF signaling"/>
</dbReference>
<dbReference type="Reactome" id="R-HSA-933541">
    <property type="pathway name" value="TRAF6 mediated IRF7 activation"/>
</dbReference>
<dbReference type="Reactome" id="R-HSA-933542">
    <property type="pathway name" value="TRAF6 mediated NF-kB activation"/>
</dbReference>
<dbReference type="Reactome" id="R-HSA-9693928">
    <property type="pathway name" value="Defective RIPK1-mediated regulated necrosis"/>
</dbReference>
<dbReference type="Reactome" id="R-HSA-9758274">
    <property type="pathway name" value="Regulation of NF-kappa B signaling"/>
</dbReference>
<dbReference type="SignaLink" id="Q12933"/>
<dbReference type="SIGNOR" id="Q12933"/>
<dbReference type="UniPathway" id="UPA00143"/>
<dbReference type="BioGRID-ORCS" id="7186">
    <property type="hits" value="178 hits in 1204 CRISPR screens"/>
</dbReference>
<dbReference type="CD-CODE" id="DEE660B4">
    <property type="entry name" value="Stress granule"/>
</dbReference>
<dbReference type="ChiTaRS" id="TRAF2">
    <property type="organism name" value="human"/>
</dbReference>
<dbReference type="EvolutionaryTrace" id="Q12933"/>
<dbReference type="GeneWiki" id="TRAF2"/>
<dbReference type="GenomeRNAi" id="7186"/>
<dbReference type="Pharos" id="Q12933">
    <property type="development level" value="Tbio"/>
</dbReference>
<dbReference type="PRO" id="PR:Q12933"/>
<dbReference type="Proteomes" id="UP000005640">
    <property type="component" value="Chromosome 9"/>
</dbReference>
<dbReference type="RNAct" id="Q12933">
    <property type="molecule type" value="protein"/>
</dbReference>
<dbReference type="Bgee" id="ENSG00000127191">
    <property type="expression patterns" value="Expressed in lower esophagus mucosa and 123 other cell types or tissues"/>
</dbReference>
<dbReference type="ExpressionAtlas" id="Q12933">
    <property type="expression patterns" value="baseline and differential"/>
</dbReference>
<dbReference type="GO" id="GO:0035631">
    <property type="term" value="C:CD40 receptor complex"/>
    <property type="evidence" value="ECO:0000250"/>
    <property type="project" value="BHF-UCL"/>
</dbReference>
<dbReference type="GO" id="GO:0005938">
    <property type="term" value="C:cell cortex"/>
    <property type="evidence" value="ECO:0007669"/>
    <property type="project" value="Ensembl"/>
</dbReference>
<dbReference type="GO" id="GO:0005737">
    <property type="term" value="C:cytoplasm"/>
    <property type="evidence" value="ECO:0000314"/>
    <property type="project" value="UniProt"/>
</dbReference>
<dbReference type="GO" id="GO:0009898">
    <property type="term" value="C:cytoplasmic side of plasma membrane"/>
    <property type="evidence" value="ECO:0000250"/>
    <property type="project" value="BHF-UCL"/>
</dbReference>
<dbReference type="GO" id="GO:0005829">
    <property type="term" value="C:cytosol"/>
    <property type="evidence" value="ECO:0000314"/>
    <property type="project" value="HPA"/>
</dbReference>
<dbReference type="GO" id="GO:1990604">
    <property type="term" value="C:IRE1-TRAF2-ASK1 complex"/>
    <property type="evidence" value="ECO:0000314"/>
    <property type="project" value="ParkinsonsUK-UCL"/>
</dbReference>
<dbReference type="GO" id="GO:0045121">
    <property type="term" value="C:membrane raft"/>
    <property type="evidence" value="ECO:0007669"/>
    <property type="project" value="Ensembl"/>
</dbReference>
<dbReference type="GO" id="GO:0005654">
    <property type="term" value="C:nucleoplasm"/>
    <property type="evidence" value="ECO:0000304"/>
    <property type="project" value="Reactome"/>
</dbReference>
<dbReference type="GO" id="GO:0097057">
    <property type="term" value="C:TRAF2-GSTP1 complex"/>
    <property type="evidence" value="ECO:0000314"/>
    <property type="project" value="UniProtKB"/>
</dbReference>
<dbReference type="GO" id="GO:0002947">
    <property type="term" value="C:tumor necrosis factor receptor superfamily complex"/>
    <property type="evidence" value="ECO:0000314"/>
    <property type="project" value="UniProtKB"/>
</dbReference>
<dbReference type="GO" id="GO:0000151">
    <property type="term" value="C:ubiquitin ligase complex"/>
    <property type="evidence" value="ECO:0000353"/>
    <property type="project" value="ParkinsonsUK-UCL"/>
</dbReference>
<dbReference type="GO" id="GO:0012506">
    <property type="term" value="C:vesicle membrane"/>
    <property type="evidence" value="ECO:0007669"/>
    <property type="project" value="Ensembl"/>
</dbReference>
<dbReference type="GO" id="GO:0005174">
    <property type="term" value="F:CD40 receptor binding"/>
    <property type="evidence" value="ECO:0000250"/>
    <property type="project" value="BHF-UCL"/>
</dbReference>
<dbReference type="GO" id="GO:0019899">
    <property type="term" value="F:enzyme binding"/>
    <property type="evidence" value="ECO:0000353"/>
    <property type="project" value="BHF-UCL"/>
</dbReference>
<dbReference type="GO" id="GO:0042802">
    <property type="term" value="F:identical protein binding"/>
    <property type="evidence" value="ECO:0000353"/>
    <property type="project" value="IntAct"/>
</dbReference>
<dbReference type="GO" id="GO:0031435">
    <property type="term" value="F:mitogen-activated protein kinase kinase kinase binding"/>
    <property type="evidence" value="ECO:0007669"/>
    <property type="project" value="Ensembl"/>
</dbReference>
<dbReference type="GO" id="GO:0019901">
    <property type="term" value="F:protein kinase binding"/>
    <property type="evidence" value="ECO:0000353"/>
    <property type="project" value="ParkinsonsUK-UCL"/>
</dbReference>
<dbReference type="GO" id="GO:0019903">
    <property type="term" value="F:protein phosphatase binding"/>
    <property type="evidence" value="ECO:0000353"/>
    <property type="project" value="UniProtKB"/>
</dbReference>
<dbReference type="GO" id="GO:0044877">
    <property type="term" value="F:protein-containing complex binding"/>
    <property type="evidence" value="ECO:0007669"/>
    <property type="project" value="Ensembl"/>
</dbReference>
<dbReference type="GO" id="GO:0030674">
    <property type="term" value="F:protein-macromolecule adaptor activity"/>
    <property type="evidence" value="ECO:0000314"/>
    <property type="project" value="UniProt"/>
</dbReference>
<dbReference type="GO" id="GO:0035591">
    <property type="term" value="F:signaling adaptor activity"/>
    <property type="evidence" value="ECO:0000318"/>
    <property type="project" value="GO_Central"/>
</dbReference>
<dbReference type="GO" id="GO:0046625">
    <property type="term" value="F:sphingolipid binding"/>
    <property type="evidence" value="ECO:0000314"/>
    <property type="project" value="UniProtKB"/>
</dbReference>
<dbReference type="GO" id="GO:0031996">
    <property type="term" value="F:thioesterase binding"/>
    <property type="evidence" value="ECO:0000353"/>
    <property type="project" value="UniProtKB"/>
</dbReference>
<dbReference type="GO" id="GO:0043120">
    <property type="term" value="F:tumor necrosis factor binding"/>
    <property type="evidence" value="ECO:0000353"/>
    <property type="project" value="UniProtKB"/>
</dbReference>
<dbReference type="GO" id="GO:0005164">
    <property type="term" value="F:tumor necrosis factor receptor binding"/>
    <property type="evidence" value="ECO:0000353"/>
    <property type="project" value="UniProtKB"/>
</dbReference>
<dbReference type="GO" id="GO:0061630">
    <property type="term" value="F:ubiquitin protein ligase activity"/>
    <property type="evidence" value="ECO:0000314"/>
    <property type="project" value="UniProtKB"/>
</dbReference>
<dbReference type="GO" id="GO:0031625">
    <property type="term" value="F:ubiquitin protein ligase binding"/>
    <property type="evidence" value="ECO:0000314"/>
    <property type="project" value="UniProt"/>
</dbReference>
<dbReference type="GO" id="GO:0004842">
    <property type="term" value="F:ubiquitin-protein transferase activity"/>
    <property type="evidence" value="ECO:0000314"/>
    <property type="project" value="UniProtKB"/>
</dbReference>
<dbReference type="GO" id="GO:0008270">
    <property type="term" value="F:zinc ion binding"/>
    <property type="evidence" value="ECO:0007669"/>
    <property type="project" value="UniProtKB-KW"/>
</dbReference>
<dbReference type="GO" id="GO:0160162">
    <property type="term" value="P:CD27 signaling pathway"/>
    <property type="evidence" value="ECO:0000314"/>
    <property type="project" value="UniProt"/>
</dbReference>
<dbReference type="GO" id="GO:0023035">
    <property type="term" value="P:CD40 signaling pathway"/>
    <property type="evidence" value="ECO:0000314"/>
    <property type="project" value="UniProt"/>
</dbReference>
<dbReference type="GO" id="GO:0071732">
    <property type="term" value="P:cellular response to nitric oxide"/>
    <property type="evidence" value="ECO:0007669"/>
    <property type="project" value="Ensembl"/>
</dbReference>
<dbReference type="GO" id="GO:0045087">
    <property type="term" value="P:innate immune response"/>
    <property type="evidence" value="ECO:0000314"/>
    <property type="project" value="UniProt"/>
</dbReference>
<dbReference type="GO" id="GO:0097400">
    <property type="term" value="P:interleukin-17-mediated signaling pathway"/>
    <property type="evidence" value="ECO:0007669"/>
    <property type="project" value="Ensembl"/>
</dbReference>
<dbReference type="GO" id="GO:0070059">
    <property type="term" value="P:intrinsic apoptotic signaling pathway in response to endoplasmic reticulum stress"/>
    <property type="evidence" value="ECO:0000304"/>
    <property type="project" value="ParkinsonsUK-UCL"/>
</dbReference>
<dbReference type="GO" id="GO:0048255">
    <property type="term" value="P:mRNA stabilization"/>
    <property type="evidence" value="ECO:0007669"/>
    <property type="project" value="Ensembl"/>
</dbReference>
<dbReference type="GO" id="GO:0034351">
    <property type="term" value="P:negative regulation of glial cell apoptotic process"/>
    <property type="evidence" value="ECO:0007669"/>
    <property type="project" value="Ensembl"/>
</dbReference>
<dbReference type="GO" id="GO:0038061">
    <property type="term" value="P:non-canonical NF-kappaB signal transduction"/>
    <property type="evidence" value="ECO:0000314"/>
    <property type="project" value="UniProt"/>
</dbReference>
<dbReference type="GO" id="GO:0043123">
    <property type="term" value="P:positive regulation of canonical NF-kappaB signal transduction"/>
    <property type="evidence" value="ECO:0000315"/>
    <property type="project" value="BHF-UCL"/>
</dbReference>
<dbReference type="GO" id="GO:2001238">
    <property type="term" value="P:positive regulation of extrinsic apoptotic signaling pathway"/>
    <property type="evidence" value="ECO:0000315"/>
    <property type="project" value="UniProtKB"/>
</dbReference>
<dbReference type="GO" id="GO:0032743">
    <property type="term" value="P:positive regulation of interleukin-2 production"/>
    <property type="evidence" value="ECO:0000315"/>
    <property type="project" value="UniProtKB"/>
</dbReference>
<dbReference type="GO" id="GO:0043507">
    <property type="term" value="P:positive regulation of JUN kinase activity"/>
    <property type="evidence" value="ECO:0000314"/>
    <property type="project" value="UniProtKB"/>
</dbReference>
<dbReference type="GO" id="GO:0051092">
    <property type="term" value="P:positive regulation of NF-kappaB transcription factor activity"/>
    <property type="evidence" value="ECO:0000314"/>
    <property type="project" value="UniProtKB"/>
</dbReference>
<dbReference type="GO" id="GO:0002726">
    <property type="term" value="P:positive regulation of T cell cytokine production"/>
    <property type="evidence" value="ECO:0000315"/>
    <property type="project" value="UniProtKB"/>
</dbReference>
<dbReference type="GO" id="GO:1903265">
    <property type="term" value="P:positive regulation of tumor necrosis factor-mediated signaling pathway"/>
    <property type="evidence" value="ECO:0007669"/>
    <property type="project" value="Ensembl"/>
</dbReference>
<dbReference type="GO" id="GO:0097300">
    <property type="term" value="P:programmed necrotic cell death"/>
    <property type="evidence" value="ECO:0007669"/>
    <property type="project" value="Ensembl"/>
</dbReference>
<dbReference type="GO" id="GO:0051865">
    <property type="term" value="P:protein autoubiquitination"/>
    <property type="evidence" value="ECO:0000314"/>
    <property type="project" value="UniProtKB"/>
</dbReference>
<dbReference type="GO" id="GO:0030163">
    <property type="term" value="P:protein catabolic process"/>
    <property type="evidence" value="ECO:0007669"/>
    <property type="project" value="Ensembl"/>
</dbReference>
<dbReference type="GO" id="GO:0070534">
    <property type="term" value="P:protein K63-linked ubiquitination"/>
    <property type="evidence" value="ECO:0000314"/>
    <property type="project" value="UniProtKB"/>
</dbReference>
<dbReference type="GO" id="GO:0065003">
    <property type="term" value="P:protein-containing complex assembly"/>
    <property type="evidence" value="ECO:0000250"/>
    <property type="project" value="BHF-UCL"/>
</dbReference>
<dbReference type="GO" id="GO:0042981">
    <property type="term" value="P:regulation of apoptotic process"/>
    <property type="evidence" value="ECO:0000314"/>
    <property type="project" value="UniProtKB"/>
</dbReference>
<dbReference type="GO" id="GO:0002637">
    <property type="term" value="P:regulation of immunoglobulin production"/>
    <property type="evidence" value="ECO:0007669"/>
    <property type="project" value="Ensembl"/>
</dbReference>
<dbReference type="GO" id="GO:0046328">
    <property type="term" value="P:regulation of JNK cascade"/>
    <property type="evidence" value="ECO:0007669"/>
    <property type="project" value="Ensembl"/>
</dbReference>
<dbReference type="GO" id="GO:0043254">
    <property type="term" value="P:regulation of protein-containing complex assembly"/>
    <property type="evidence" value="ECO:0000315"/>
    <property type="project" value="UniProtKB"/>
</dbReference>
<dbReference type="GO" id="GO:0034976">
    <property type="term" value="P:response to endoplasmic reticulum stress"/>
    <property type="evidence" value="ECO:0000303"/>
    <property type="project" value="ParkinsonsUK-UCL"/>
</dbReference>
<dbReference type="GO" id="GO:0007165">
    <property type="term" value="P:signal transduction"/>
    <property type="evidence" value="ECO:0000304"/>
    <property type="project" value="ProtInc"/>
</dbReference>
<dbReference type="GO" id="GO:0023019">
    <property type="term" value="P:signal transduction involved in regulation of gene expression"/>
    <property type="evidence" value="ECO:0007669"/>
    <property type="project" value="Ensembl"/>
</dbReference>
<dbReference type="GO" id="GO:0042110">
    <property type="term" value="P:T cell activation"/>
    <property type="evidence" value="ECO:0000314"/>
    <property type="project" value="UniProt"/>
</dbReference>
<dbReference type="GO" id="GO:1905669">
    <property type="term" value="P:TORC1 complex assembly"/>
    <property type="evidence" value="ECO:0000314"/>
    <property type="project" value="UniProtKB"/>
</dbReference>
<dbReference type="GO" id="GO:1905670">
    <property type="term" value="P:TORC2 complex disassembly"/>
    <property type="evidence" value="ECO:0000314"/>
    <property type="project" value="UniProtKB"/>
</dbReference>
<dbReference type="GO" id="GO:0033209">
    <property type="term" value="P:tumor necrosis factor-mediated signaling pathway"/>
    <property type="evidence" value="ECO:0000314"/>
    <property type="project" value="UniProtKB"/>
</dbReference>
<dbReference type="CDD" id="cd03778">
    <property type="entry name" value="MATH_TRAF2"/>
    <property type="match status" value="1"/>
</dbReference>
<dbReference type="CDD" id="cd16639">
    <property type="entry name" value="RING-HC_TRAF2"/>
    <property type="match status" value="1"/>
</dbReference>
<dbReference type="FunFam" id="1.20.5.170:FF:000035">
    <property type="entry name" value="TNF receptor-associated factor"/>
    <property type="match status" value="1"/>
</dbReference>
<dbReference type="FunFam" id="3.30.40.10:FF:000189">
    <property type="entry name" value="TNF receptor-associated factor"/>
    <property type="match status" value="1"/>
</dbReference>
<dbReference type="FunFam" id="3.30.40.10:FF:000263">
    <property type="entry name" value="TNF receptor-associated factor"/>
    <property type="match status" value="1"/>
</dbReference>
<dbReference type="FunFam" id="3.30.40.10:FF:000291">
    <property type="entry name" value="TNF receptor-associated factor"/>
    <property type="match status" value="1"/>
</dbReference>
<dbReference type="FunFam" id="2.60.210.10:FF:000035">
    <property type="entry name" value="TNF receptor-associated factor 2"/>
    <property type="match status" value="1"/>
</dbReference>
<dbReference type="Gene3D" id="1.20.5.170">
    <property type="match status" value="1"/>
</dbReference>
<dbReference type="Gene3D" id="2.60.210.10">
    <property type="entry name" value="Apoptosis, Tumor Necrosis Factor Receptor Associated Protein 2, Chain A"/>
    <property type="match status" value="1"/>
</dbReference>
<dbReference type="Gene3D" id="3.30.40.10">
    <property type="entry name" value="Zinc/RING finger domain, C3HC4 (zinc finger)"/>
    <property type="match status" value="3"/>
</dbReference>
<dbReference type="InterPro" id="IPR002083">
    <property type="entry name" value="MATH/TRAF_dom"/>
</dbReference>
<dbReference type="InterPro" id="IPR012227">
    <property type="entry name" value="TNF_rcpt-assoc_TRAF_met"/>
</dbReference>
<dbReference type="InterPro" id="IPR008974">
    <property type="entry name" value="TRAF-like"/>
</dbReference>
<dbReference type="InterPro" id="IPR049342">
    <property type="entry name" value="TRAF1-6_MATH_dom"/>
</dbReference>
<dbReference type="InterPro" id="IPR037305">
    <property type="entry name" value="TRAF2_MATH"/>
</dbReference>
<dbReference type="InterPro" id="IPR027133">
    <property type="entry name" value="TRAF2_RING-HC"/>
</dbReference>
<dbReference type="InterPro" id="IPR049441">
    <property type="entry name" value="TRAF2_Znf"/>
</dbReference>
<dbReference type="InterPro" id="IPR032070">
    <property type="entry name" value="TRAF_BIRC3-bd"/>
</dbReference>
<dbReference type="InterPro" id="IPR018957">
    <property type="entry name" value="Znf_C3HC4_RING-type"/>
</dbReference>
<dbReference type="InterPro" id="IPR001841">
    <property type="entry name" value="Znf_RING"/>
</dbReference>
<dbReference type="InterPro" id="IPR013083">
    <property type="entry name" value="Znf_RING/FYVE/PHD"/>
</dbReference>
<dbReference type="InterPro" id="IPR017907">
    <property type="entry name" value="Znf_RING_CS"/>
</dbReference>
<dbReference type="InterPro" id="IPR001293">
    <property type="entry name" value="Znf_TRAF"/>
</dbReference>
<dbReference type="PANTHER" id="PTHR10131">
    <property type="entry name" value="TNF RECEPTOR ASSOCIATED FACTOR"/>
    <property type="match status" value="1"/>
</dbReference>
<dbReference type="PANTHER" id="PTHR10131:SF21">
    <property type="entry name" value="TNF RECEPTOR-ASSOCIATED FACTOR 2"/>
    <property type="match status" value="1"/>
</dbReference>
<dbReference type="Pfam" id="PF21355">
    <property type="entry name" value="TRAF-mep_MATH"/>
    <property type="match status" value="1"/>
</dbReference>
<dbReference type="Pfam" id="PF21341">
    <property type="entry name" value="TRAF2_zf"/>
    <property type="match status" value="1"/>
</dbReference>
<dbReference type="Pfam" id="PF16673">
    <property type="entry name" value="TRAF_BIRC3_bd"/>
    <property type="match status" value="1"/>
</dbReference>
<dbReference type="Pfam" id="PF00097">
    <property type="entry name" value="zf-C3HC4"/>
    <property type="match status" value="1"/>
</dbReference>
<dbReference type="Pfam" id="PF02176">
    <property type="entry name" value="zf-TRAF"/>
    <property type="match status" value="1"/>
</dbReference>
<dbReference type="PIRSF" id="PIRSF015614">
    <property type="entry name" value="TRAF"/>
    <property type="match status" value="1"/>
</dbReference>
<dbReference type="SMART" id="SM00061">
    <property type="entry name" value="MATH"/>
    <property type="match status" value="1"/>
</dbReference>
<dbReference type="SMART" id="SM00184">
    <property type="entry name" value="RING"/>
    <property type="match status" value="1"/>
</dbReference>
<dbReference type="SUPFAM" id="SSF57850">
    <property type="entry name" value="RING/U-box"/>
    <property type="match status" value="1"/>
</dbReference>
<dbReference type="SUPFAM" id="SSF49599">
    <property type="entry name" value="TRAF domain-like"/>
    <property type="match status" value="1"/>
</dbReference>
<dbReference type="SUPFAM" id="SSF57953">
    <property type="entry name" value="Trimerization domain of TRAF"/>
    <property type="match status" value="1"/>
</dbReference>
<dbReference type="PROSITE" id="PS50144">
    <property type="entry name" value="MATH"/>
    <property type="match status" value="1"/>
</dbReference>
<dbReference type="PROSITE" id="PS00518">
    <property type="entry name" value="ZF_RING_1"/>
    <property type="match status" value="1"/>
</dbReference>
<dbReference type="PROSITE" id="PS50089">
    <property type="entry name" value="ZF_RING_2"/>
    <property type="match status" value="1"/>
</dbReference>
<dbReference type="PROSITE" id="PS50145">
    <property type="entry name" value="ZF_TRAF"/>
    <property type="match status" value="2"/>
</dbReference>